<sequence length="1382" mass="156333">MATGGRRGAAAAPLLVAVAALLLGAAGHLYPGEVCPGMDIRNNLTRLHELENCSVIEGHLQILLMFKTRPEDFRDLSFPKLIMITDYLLLFRVYGLESLKDLFPNLTVIRGSRLFFNYALVIFEMVHLKELGLYNLMNITRGSVRIEKNNELCYLATIDWSRILDSVEDNYIVLNKDDNEECGDICPGTAKGKTNCPATVINGQFVERCWTHSHCQKVCPTICKSHGCTAEGLCCHSECLGNCSQPDDPTKCVACRNFYLDGRCVETCPPPYYHFQDWRCVNFSFCQDLHHKCKNSRRQGCHQYVIHNNKCIPECPSGYTMNSSNLLCTPCLGPCPKVCHLLEGEKTIDSVTSAQELRGCTVINGSLIINIRGGNNLAAELEANLGLIEEISGYLKIRRSYALVSLSFFRKLRLIRGETLEIGNYSFYALDNQNLRQLWDWSKHNLTITQGKLFFHYNPKLCLSEIHKMEEVSGTKGRQERNDIALKTNGDQASCENELLKFSYIRTSFDKILLRWEPYWPPDFRDLLGFMLFYKEAPYQNVTEFDGQDACGSNSWTVVDIDPPLRSNDPKSQNHPGWLMRGLKPWTQYAIFVKTLVTFSDERRTYGAKSDIIYVQTDATNPSVPLDPISVSNSSSQIILKWKPPSDPNGNITHYLVFWERQAEDSELFELDYCLKGLKLPSRTWSPPFESEDSQKHNQSEYEDSAGECCSCPKTDSQILKELEESSFRKTFEDYLHNVVFVPRKTSSGTGAEDPRPSRKRRSLGDVGNVTVAVPTVAAFPNTSSTSVPTSPEEHRPFEKVVNKESLVISGLRHFTGYRIELQACNQDTPEERCSVAAYVSARTMPEAKADDIVGPVTHEIFENNVVHLMWQEPKEPNGLIVLYEVSYRRYGDEELHLCVSRKHFALERGCRLRGLSPGNYSVRIRATSLAGNGSWTEPTYFYVTDYLDVPSNIAKIIIGPLIFVFLFSVVIGSIYLFLRKRQPDGPLGPLYASSNPEYLSASDVFPCSVYVPDEWEVSREKITLLRELGQGSFGMVYEGNARDIIKGEAETRVAVKTVNESASLRERIEFLNEASVMKGFTCHHVVRLLGVVSKGQPTLVVMELMAHGDLKSYLRSLRPEAENNPGRPPPTLQEMIQMAAEIADGMAYLNAKKFVHRDLAARNCMVAHDFTVKIGDFGMTRDIYETDYYRKGGKGLLPVRWMAPESLKDGVFTTSSDMWSFGVVLWEITSLAEQPYQGLSNEQVLKFVMDGGYLDQPDNCPERVTDLMRMCWQFNPKMRPTFLEIVNLLKDDLHPSFPEVSFFHSEENKAPESEELEMEFEDMENVPLDRSSHCQREEAGGRDGGSSLGFKRSYEEHIPYTHMNGGKKNGRILTLPRSNPS</sequence>
<evidence type="ECO:0000250" key="1">
    <source>
        <dbReference type="UniProtKB" id="P15127"/>
    </source>
</evidence>
<evidence type="ECO:0000250" key="2">
    <source>
        <dbReference type="UniProtKB" id="P15208"/>
    </source>
</evidence>
<evidence type="ECO:0000255" key="3"/>
<evidence type="ECO:0000255" key="4">
    <source>
        <dbReference type="PROSITE-ProRule" id="PRU00159"/>
    </source>
</evidence>
<evidence type="ECO:0000255" key="5">
    <source>
        <dbReference type="PROSITE-ProRule" id="PRU00316"/>
    </source>
</evidence>
<evidence type="ECO:0000255" key="6">
    <source>
        <dbReference type="PROSITE-ProRule" id="PRU10028"/>
    </source>
</evidence>
<evidence type="ECO:0000256" key="7">
    <source>
        <dbReference type="SAM" id="MobiDB-lite"/>
    </source>
</evidence>
<evidence type="ECO:0000269" key="8">
    <source>
    </source>
</evidence>
<evidence type="ECO:0000269" key="9">
    <source>
    </source>
</evidence>
<evidence type="ECO:0000269" key="10">
    <source>
    </source>
</evidence>
<evidence type="ECO:0000269" key="11">
    <source>
    </source>
</evidence>
<evidence type="ECO:0000269" key="12">
    <source>
    </source>
</evidence>
<evidence type="ECO:0000269" key="13">
    <source>
    </source>
</evidence>
<evidence type="ECO:0000269" key="14">
    <source>
    </source>
</evidence>
<evidence type="ECO:0000269" key="15">
    <source>
    </source>
</evidence>
<evidence type="ECO:0000269" key="16">
    <source>
    </source>
</evidence>
<evidence type="ECO:0000269" key="17">
    <source>
    </source>
</evidence>
<evidence type="ECO:0000269" key="18">
    <source>
    </source>
</evidence>
<evidence type="ECO:0000269" key="19">
    <source>
    </source>
</evidence>
<evidence type="ECO:0000269" key="20">
    <source>
    </source>
</evidence>
<evidence type="ECO:0000269" key="21">
    <source>
    </source>
</evidence>
<evidence type="ECO:0000269" key="22">
    <source>
    </source>
</evidence>
<evidence type="ECO:0000269" key="23">
    <source>
    </source>
</evidence>
<evidence type="ECO:0000269" key="24">
    <source>
    </source>
</evidence>
<evidence type="ECO:0000269" key="25">
    <source>
    </source>
</evidence>
<evidence type="ECO:0000269" key="26">
    <source>
    </source>
</evidence>
<evidence type="ECO:0000269" key="27">
    <source>
    </source>
</evidence>
<evidence type="ECO:0000269" key="28">
    <source>
    </source>
</evidence>
<evidence type="ECO:0000269" key="29">
    <source>
    </source>
</evidence>
<evidence type="ECO:0000269" key="30">
    <source>
    </source>
</evidence>
<evidence type="ECO:0000269" key="31">
    <source>
    </source>
</evidence>
<evidence type="ECO:0000269" key="32">
    <source>
    </source>
</evidence>
<evidence type="ECO:0000269" key="33">
    <source>
    </source>
</evidence>
<evidence type="ECO:0000269" key="34">
    <source>
    </source>
</evidence>
<evidence type="ECO:0000269" key="35">
    <source>
    </source>
</evidence>
<evidence type="ECO:0000269" key="36">
    <source>
    </source>
</evidence>
<evidence type="ECO:0000269" key="37">
    <source>
    </source>
</evidence>
<evidence type="ECO:0000269" key="38">
    <source>
    </source>
</evidence>
<evidence type="ECO:0000269" key="39">
    <source>
    </source>
</evidence>
<evidence type="ECO:0000269" key="40">
    <source>
    </source>
</evidence>
<evidence type="ECO:0000269" key="41">
    <source>
    </source>
</evidence>
<evidence type="ECO:0000269" key="42">
    <source>
    </source>
</evidence>
<evidence type="ECO:0000269" key="43">
    <source>
    </source>
</evidence>
<evidence type="ECO:0000269" key="44">
    <source>
    </source>
</evidence>
<evidence type="ECO:0000269" key="45">
    <source>
    </source>
</evidence>
<evidence type="ECO:0000269" key="46">
    <source>
    </source>
</evidence>
<evidence type="ECO:0000269" key="47">
    <source>
    </source>
</evidence>
<evidence type="ECO:0000269" key="48">
    <source>
    </source>
</evidence>
<evidence type="ECO:0000269" key="49">
    <source>
    </source>
</evidence>
<evidence type="ECO:0000269" key="50">
    <source>
    </source>
</evidence>
<evidence type="ECO:0000269" key="51">
    <source>
    </source>
</evidence>
<evidence type="ECO:0000269" key="52">
    <source>
    </source>
</evidence>
<evidence type="ECO:0000269" key="53">
    <source>
    </source>
</evidence>
<evidence type="ECO:0000269" key="54">
    <source>
    </source>
</evidence>
<evidence type="ECO:0000269" key="55">
    <source>
    </source>
</evidence>
<evidence type="ECO:0000269" key="56">
    <source>
    </source>
</evidence>
<evidence type="ECO:0000269" key="57">
    <source>
    </source>
</evidence>
<evidence type="ECO:0000269" key="58">
    <source>
    </source>
</evidence>
<evidence type="ECO:0000269" key="59">
    <source>
    </source>
</evidence>
<evidence type="ECO:0000269" key="60">
    <source>
    </source>
</evidence>
<evidence type="ECO:0000269" key="61">
    <source>
    </source>
</evidence>
<evidence type="ECO:0000269" key="62">
    <source>
    </source>
</evidence>
<evidence type="ECO:0000269" key="63">
    <source>
    </source>
</evidence>
<evidence type="ECO:0000269" key="64">
    <source>
    </source>
</evidence>
<evidence type="ECO:0000269" key="65">
    <source>
    </source>
</evidence>
<evidence type="ECO:0000269" key="66">
    <source>
    </source>
</evidence>
<evidence type="ECO:0000269" key="67">
    <source>
    </source>
</evidence>
<evidence type="ECO:0000269" key="68">
    <source>
    </source>
</evidence>
<evidence type="ECO:0000269" key="69">
    <source>
    </source>
</evidence>
<evidence type="ECO:0000269" key="70">
    <source>
    </source>
</evidence>
<evidence type="ECO:0000269" key="71">
    <source>
    </source>
</evidence>
<evidence type="ECO:0000269" key="72">
    <source>
    </source>
</evidence>
<evidence type="ECO:0000269" key="73">
    <source>
    </source>
</evidence>
<evidence type="ECO:0000269" key="74">
    <source>
    </source>
</evidence>
<evidence type="ECO:0000269" key="75">
    <source>
    </source>
</evidence>
<evidence type="ECO:0000269" key="76">
    <source>
    </source>
</evidence>
<evidence type="ECO:0000269" key="77">
    <source>
    </source>
</evidence>
<evidence type="ECO:0000269" key="78">
    <source>
    </source>
</evidence>
<evidence type="ECO:0000269" key="79">
    <source>
    </source>
</evidence>
<evidence type="ECO:0000269" key="80">
    <source>
    </source>
</evidence>
<evidence type="ECO:0000269" key="81">
    <source>
    </source>
</evidence>
<evidence type="ECO:0000269" key="82">
    <source>
    </source>
</evidence>
<evidence type="ECO:0000269" key="83">
    <source>
    </source>
</evidence>
<evidence type="ECO:0000269" key="84">
    <source>
    </source>
</evidence>
<evidence type="ECO:0000269" key="85">
    <source>
    </source>
</evidence>
<evidence type="ECO:0000269" key="86">
    <source>
    </source>
</evidence>
<evidence type="ECO:0000269" key="87">
    <source>
    </source>
</evidence>
<evidence type="ECO:0000269" key="88">
    <source>
    </source>
</evidence>
<evidence type="ECO:0000269" key="89">
    <source>
    </source>
</evidence>
<evidence type="ECO:0000269" key="90">
    <source>
    </source>
</evidence>
<evidence type="ECO:0000269" key="91">
    <source>
    </source>
</evidence>
<evidence type="ECO:0000269" key="92">
    <source>
    </source>
</evidence>
<evidence type="ECO:0000269" key="93">
    <source>
    </source>
</evidence>
<evidence type="ECO:0000269" key="94">
    <source>
    </source>
</evidence>
<evidence type="ECO:0000269" key="95">
    <source>
    </source>
</evidence>
<evidence type="ECO:0000269" key="96">
    <source>
    </source>
</evidence>
<evidence type="ECO:0000269" key="97">
    <source>
    </source>
</evidence>
<evidence type="ECO:0000269" key="98">
    <source>
    </source>
</evidence>
<evidence type="ECO:0000269" key="99">
    <source>
    </source>
</evidence>
<evidence type="ECO:0000269" key="100">
    <source>
    </source>
</evidence>
<evidence type="ECO:0000269" key="101">
    <source>
    </source>
</evidence>
<evidence type="ECO:0000269" key="102">
    <source>
    </source>
</evidence>
<evidence type="ECO:0000269" key="103">
    <source>
    </source>
</evidence>
<evidence type="ECO:0000269" key="104">
    <source>
    </source>
</evidence>
<evidence type="ECO:0000269" key="105">
    <source>
    </source>
</evidence>
<evidence type="ECO:0000269" key="106">
    <source>
    </source>
</evidence>
<evidence type="ECO:0000269" key="107">
    <source>
    </source>
</evidence>
<evidence type="ECO:0000269" key="108">
    <source>
    </source>
</evidence>
<evidence type="ECO:0000269" key="109">
    <source>
    </source>
</evidence>
<evidence type="ECO:0000269" key="110">
    <source>
    </source>
</evidence>
<evidence type="ECO:0000269" key="111">
    <source>
    </source>
</evidence>
<evidence type="ECO:0000269" key="112">
    <source>
    </source>
</evidence>
<evidence type="ECO:0000269" key="113">
    <source>
    </source>
</evidence>
<evidence type="ECO:0000269" key="114">
    <source>
    </source>
</evidence>
<evidence type="ECO:0000269" key="115">
    <source>
    </source>
</evidence>
<evidence type="ECO:0000269" key="116">
    <source>
    </source>
</evidence>
<evidence type="ECO:0000269" key="117">
    <source>
    </source>
</evidence>
<evidence type="ECO:0000269" key="118">
    <source>
    </source>
</evidence>
<evidence type="ECO:0000269" key="119">
    <source>
    </source>
</evidence>
<evidence type="ECO:0000269" key="120">
    <source>
    </source>
</evidence>
<evidence type="ECO:0000269" key="121">
    <source>
    </source>
</evidence>
<evidence type="ECO:0000303" key="122">
    <source>
    </source>
</evidence>
<evidence type="ECO:0000303" key="123">
    <source>
    </source>
</evidence>
<evidence type="ECO:0000303" key="124">
    <source ref="13"/>
</evidence>
<evidence type="ECO:0000305" key="125"/>
<evidence type="ECO:0000305" key="126">
    <source>
    </source>
</evidence>
<evidence type="ECO:0007744" key="127">
    <source>
    </source>
</evidence>
<evidence type="ECO:0007829" key="128">
    <source>
        <dbReference type="PDB" id="1IR3"/>
    </source>
</evidence>
<evidence type="ECO:0007829" key="129">
    <source>
        <dbReference type="PDB" id="1IRK"/>
    </source>
</evidence>
<evidence type="ECO:0007829" key="130">
    <source>
        <dbReference type="PDB" id="2AUH"/>
    </source>
</evidence>
<evidence type="ECO:0007829" key="131">
    <source>
        <dbReference type="PDB" id="2HR7"/>
    </source>
</evidence>
<evidence type="ECO:0007829" key="132">
    <source>
        <dbReference type="PDB" id="2MFR"/>
    </source>
</evidence>
<evidence type="ECO:0007829" key="133">
    <source>
        <dbReference type="PDB" id="2Z8C"/>
    </source>
</evidence>
<evidence type="ECO:0007829" key="134">
    <source>
        <dbReference type="PDB" id="3BU3"/>
    </source>
</evidence>
<evidence type="ECO:0007829" key="135">
    <source>
        <dbReference type="PDB" id="3ETA"/>
    </source>
</evidence>
<evidence type="ECO:0007829" key="136">
    <source>
        <dbReference type="PDB" id="4XLV"/>
    </source>
</evidence>
<evidence type="ECO:0007829" key="137">
    <source>
        <dbReference type="PDB" id="4ZXB"/>
    </source>
</evidence>
<evidence type="ECO:0007829" key="138">
    <source>
        <dbReference type="PDB" id="5HHW"/>
    </source>
</evidence>
<evidence type="ECO:0007829" key="139">
    <source>
        <dbReference type="PDB" id="5U1M"/>
    </source>
</evidence>
<evidence type="ECO:0007829" key="140">
    <source>
        <dbReference type="PDB" id="6HN5"/>
    </source>
</evidence>
<evidence type="ECO:0007829" key="141">
    <source>
        <dbReference type="PDB" id="6PXV"/>
    </source>
</evidence>
<evidence type="ECO:0007829" key="142">
    <source>
        <dbReference type="PDB" id="6PXW"/>
    </source>
</evidence>
<evidence type="ECO:0007829" key="143">
    <source>
        <dbReference type="PDB" id="7KD6"/>
    </source>
</evidence>
<evidence type="ECO:0007829" key="144">
    <source>
        <dbReference type="PDB" id="7MQO"/>
    </source>
</evidence>
<evidence type="ECO:0007829" key="145">
    <source>
        <dbReference type="PDB" id="7U6E"/>
    </source>
</evidence>
<evidence type="ECO:0007829" key="146">
    <source>
        <dbReference type="PDB" id="8DWN"/>
    </source>
</evidence>
<evidence type="ECO:0007829" key="147">
    <source>
        <dbReference type="PDB" id="8X06"/>
    </source>
</evidence>
<evidence type="ECO:0007829" key="148">
    <source>
        <dbReference type="PDB" id="8X2M"/>
    </source>
</evidence>
<proteinExistence type="evidence at protein level"/>
<comment type="function">
    <text evidence="2 21 38 39 98 99 107 120">Receptor tyrosine kinase which mediates the pleiotropic actions of insulin. Binding of insulin leads to phosphorylation of several intracellular substrates, including, insulin receptor substrates (IRS1, 2, 3, 4), SHC, GAB1, CBL and other signaling intermediates. Each of these phosphorylated proteins serve as docking proteins for other signaling proteins that contain Src-homology-2 domains (SH2 domain) that specifically recognize different phosphotyrosine residues, including the p85 regulatory subunit of PI3K and SHP2. Phosphorylation of IRSs proteins lead to the activation of two main signaling pathways: the PI3K-AKT/PKB pathway, which is responsible for most of the metabolic actions of insulin, and the Ras-MAPK pathway, which regulates expression of some genes and cooperates with the PI3K pathway to control cell growth and differentiation. Binding of the SH2 domains of PI3K to phosphotyrosines on IRS1 leads to the activation of PI3K and the generation of phosphatidylinositol-(3, 4, 5)-triphosphate (PIP3), a lipid second messenger, which activates several PIP3-dependent serine/threonine kinases, such as PDPK1 and subsequently AKT/PKB. The net effect of this pathway is to produce a translocation of the glucose transporter SLC2A4/GLUT4 from cytoplasmic vesicles to the cell membrane to facilitate glucose transport. Moreover, upon insulin stimulation, activated AKT/PKB is responsible for: anti-apoptotic effect of insulin by inducing phosphorylation of BAD; regulates the expression of gluconeogenic and lipogenic enzymes by controlling the activity of the winged helix or forkhead (FOX) class of transcription factors. Another pathway regulated by PI3K-AKT/PKB activation is mTORC1 signaling pathway which regulates cell growth and metabolism and integrates signals from insulin. AKT mediates insulin-stimulated protein synthesis by phosphorylating TSC2 thereby activating mTORC1 pathway. The Ras/RAF/MAP2K/MAPK pathway is mainly involved in mediating cell growth, survival and cellular differentiation of insulin. Phosphorylated IRS1 recruits GRB2/SOS complex, which triggers the activation of the Ras/RAF/MAP2K/MAPK pathway. In addition to binding insulin, the insulin receptor can bind insulin-like growth factors (IGFI and IGFII). Isoform Short has a higher affinity for IGFII binding. When present in a hybrid receptor with IGF1R, binds IGF1. PubMed:12138094 shows that hybrid receptors composed of IGF1R and INSR isoform Long are activated with a high affinity by IGF1, with low affinity by IGF2 and not significantly activated by insulin, and that hybrid receptors composed of IGF1R and INSR isoform Short are activated by IGF1, IGF2 and insulin. In contrast, PubMed:16831875 shows that hybrid receptors composed of IGF1R and INSR isoform Long and hybrid receptors composed of IGF1R and INSR isoform Short have similar binding characteristics, both bind IGF1 and have a low affinity for insulin. In adipocytes, inhibits lipolysis (By similarity).</text>
</comment>
<comment type="catalytic activity">
    <reaction evidence="6 14 17 25 45 48 49 52 118">
        <text>L-tyrosyl-[protein] + ATP = O-phospho-L-tyrosyl-[protein] + ADP + H(+)</text>
        <dbReference type="Rhea" id="RHEA:10596"/>
        <dbReference type="Rhea" id="RHEA-COMP:10136"/>
        <dbReference type="Rhea" id="RHEA-COMP:20101"/>
        <dbReference type="ChEBI" id="CHEBI:15378"/>
        <dbReference type="ChEBI" id="CHEBI:30616"/>
        <dbReference type="ChEBI" id="CHEBI:46858"/>
        <dbReference type="ChEBI" id="CHEBI:61978"/>
        <dbReference type="ChEBI" id="CHEBI:456216"/>
        <dbReference type="EC" id="2.7.10.1"/>
    </reaction>
</comment>
<comment type="activity regulation">
    <text evidence="10 17 18 22 61">Activated in response to insulin. Autophosphorylation activates the kinase activity. PTPN1, PTPRE and PTPRF dephosphorylate important tyrosine residues, thereby reducing INSR activity. Inhibited by ENPP1. GRB10 and GRB14 inhibit the catalytic activity of the INSR, they block access of substrates to the activated receptor. SOCS1 and SOCS3 act as negative regulators of INSR activity, they bind to the activated INRS and interfere with the phosphorylation of INSR substrates.</text>
</comment>
<comment type="subunit">
    <text evidence="1 2 10 13 14 16 18 22 27 35 36 37 38 41 45 46 48 49 52 59 61 64 69 72 74 87 89 99 111 112 118 120">Tetramer of 2 alpha and 2 beta chains linked by disulfide bonds. The alpha chains carry the insulin-binding regions, while the beta chains carry the kinase domain. Forms a hybrid receptor with IGF1R, the hybrid is a tetramer consisting of 1 alpha chain and 1 beta chain of INSR and 1 alpha chain and 1 beta chain of IGF1R. Interacts with SORBS1 but dissociates from it following insulin stimulation. Binds SH2B2. Activated form of INSR interacts (via Tyr-999) with the PTB/PID domains of IRS1 and SHC1. The sequences surrounding the phosphorylated NPXY motif contribute differentially to either IRS1 or SHC1 recognition. Interacts (via tyrosines in the C-terminus) with IRS2 (via PTB domain and 591-786 AA); the 591-786 would be the primary anchor of IRS2 to INSR while the PTB domain would have a stabilizing action on the interaction with INSR. Interacts with the SH2 domains of the 85 kDa regulatory subunit of PI3K (PIK3R1) in vitro, when autophosphorylated on tyrosine residues. Interacts with SOCS7. Interacts (via the phosphorylated Tyr-999), with SOCS3. Interacts (via the phosphorylated Tyr-1185, Tyr-1189, Tyr-1190) with SOCS1. Interacts with CAV2 (tyrosine-phosphorylated form); the interaction is increased with 'Tyr-27'phosphorylation of CAV2 (By similarity). Interacts with ARRB2 (By similarity). Interacts with GRB10; this interaction blocks the association between IRS1/IRS2 and INSR, significantly reduces insulin-stimulated tyrosine phosphorylation of IRS1 and IRS2 and thus decreases insulin signaling. Interacts with GRB7. Interacts with PDPK1. Interacts (via Tyr-1190) with GRB14 (via BPS domain); this interaction protects the tyrosines in the activation loop from dephosphorylation, but promotes dephosphorylation of Tyr-999, this results in decreased interaction with, and phosphorylation of, IRS1. Interacts (via subunit alpha) with ENPP1 (via 485-599 AA); this interaction blocks autophosphorylation. Interacts with PTPRE; this interaction is dependent of Tyr-1185, Tyr-1189 and Tyr-1190 of the INSR. Interacts with STAT5B (via SH2 domain). Interacts with PTPRF. Interacts with ATIC; ATIC together with PRKAA2/AMPK2 and HACD3/PTPLAD1 is proposed to be part of a signaling netwok regulating INSR autophosphorylation and endocytosis (By similarity). Interacts with the cone snail venom insulin Con-Ins G1 (PubMed:27617429). Interacts with the insulin receptor SORL1; this interaction strongly increases its surface exposure, hence strengthens insulin signal reception (PubMed:27322061). Interacts (tyrosine phosphorylated) with CCDC88A/GIV (via SH2-like region); binding requires autophosphorylation of the INSR C-terminal region (PubMed:25187647). Interacts with GNAI3; the interaction is probably mediated by CCDC88A/GIV (PubMed:25187647). Interacts with LMBRD1 (By similarity). Interacts (in response to insulin stimulation) with NCK1; this interaction may recruit PTPN1 to mediate INSR dephosphorylation (PubMed:21707536). Interacts with CD248; this interaction diminishes INSR autophosphorylation (By similarity).</text>
</comment>
<comment type="interaction">
    <interactant intactId="EBI-475899">
        <id>P06213</id>
    </interactant>
    <interactant intactId="EBI-2361824">
        <id>Q99490</id>
        <label>AGAP2</label>
    </interactant>
    <organismsDiffer>false</organismsDiffer>
    <experiments>2</experiments>
</comment>
<comment type="interaction">
    <interactant intactId="EBI-475899">
        <id>P06213</id>
    </interactant>
    <interactant intactId="EBI-10698945">
        <id>Q8NEJ0</id>
        <label>DUSP18</label>
    </interactant>
    <organismsDiffer>false</organismsDiffer>
    <experiments>2</experiments>
</comment>
<comment type="interaction">
    <interactant intactId="EBI-475899">
        <id>P06213</id>
    </interactant>
    <interactant intactId="EBI-80275">
        <id>Q13322</id>
        <label>GRB10</label>
    </interactant>
    <organismsDiffer>false</organismsDiffer>
    <experiments>3</experiments>
</comment>
<comment type="interaction">
    <interactant intactId="EBI-475899">
        <id>P06213</id>
    </interactant>
    <interactant intactId="EBI-7902275">
        <id>P05019</id>
        <label>IGF1</label>
    </interactant>
    <organismsDiffer>false</organismsDiffer>
    <experiments>4</experiments>
</comment>
<comment type="interaction">
    <interactant intactId="EBI-475899">
        <id>P06213</id>
    </interactant>
    <interactant intactId="EBI-475981">
        <id>P08069</id>
        <label>IGF1R</label>
    </interactant>
    <organismsDiffer>false</organismsDiffer>
    <experiments>5</experiments>
</comment>
<comment type="interaction">
    <interactant intactId="EBI-475899">
        <id>P06213</id>
    </interactant>
    <interactant intactId="EBI-6424336">
        <id>P14616</id>
        <label>INSRR</label>
    </interactant>
    <organismsDiffer>false</organismsDiffer>
    <experiments>6</experiments>
</comment>
<comment type="interaction">
    <interactant intactId="EBI-475899">
        <id>P06213</id>
    </interactant>
    <interactant intactId="EBI-517592">
        <id>P35568</id>
        <label>IRS1</label>
    </interactant>
    <organismsDiffer>false</organismsDiffer>
    <experiments>3</experiments>
</comment>
<comment type="interaction">
    <interactant intactId="EBI-475899">
        <id>P06213</id>
    </interactant>
    <interactant intactId="EBI-948001">
        <id>Q15323</id>
        <label>KRT31</label>
    </interactant>
    <organismsDiffer>false</organismsDiffer>
    <experiments>3</experiments>
</comment>
<comment type="interaction">
    <interactant intactId="EBI-475899">
        <id>P06213</id>
    </interactant>
    <interactant intactId="EBI-79464">
        <id>P27986</id>
        <label>PIK3R1</label>
    </interactant>
    <organismsDiffer>false</organismsDiffer>
    <experiments>5</experiments>
</comment>
<comment type="interaction">
    <interactant intactId="EBI-475899">
        <id>P06213</id>
    </interactant>
    <interactant intactId="EBI-79387">
        <id>P19174</id>
        <label>PLCG1</label>
    </interactant>
    <organismsDiffer>false</organismsDiffer>
    <experiments>9</experiments>
</comment>
<comment type="interaction">
    <interactant intactId="EBI-475899">
        <id>P06213</id>
    </interactant>
    <interactant intactId="EBI-968788">
        <id>P18031</id>
        <label>PTPN1</label>
    </interactant>
    <organismsDiffer>false</organismsDiffer>
    <experiments>33</experiments>
</comment>
<comment type="interaction">
    <interactant intactId="EBI-475899">
        <id>P06213</id>
    </interactant>
    <interactant intactId="EBI-297779">
        <id>Q06124</id>
        <label>PTPN11</label>
    </interactant>
    <organismsDiffer>false</organismsDiffer>
    <experiments>3</experiments>
</comment>
<comment type="interaction">
    <interactant intactId="EBI-475899">
        <id>P06213</id>
    </interactant>
    <interactant intactId="EBI-474052">
        <id>Q15262</id>
        <label>PTPRK</label>
    </interactant>
    <organismsDiffer>false</organismsDiffer>
    <experiments>2</experiments>
</comment>
<comment type="interaction">
    <interactant intactId="EBI-475899">
        <id>P06213</id>
    </interactant>
    <interactant intactId="EBI-2265659">
        <id>Q15256</id>
        <label>PTPRR</label>
    </interactant>
    <organismsDiffer>false</organismsDiffer>
    <experiments>2</experiments>
</comment>
<comment type="interaction">
    <interactant intactId="EBI-475899">
        <id>P06213</id>
    </interactant>
    <interactant intactId="EBI-310491">
        <id>Q9NRF2</id>
        <label>SH2B1</label>
    </interactant>
    <organismsDiffer>false</organismsDiffer>
    <experiments>6</experiments>
</comment>
<comment type="interaction">
    <interactant intactId="EBI-475899">
        <id>P06213</id>
    </interactant>
    <interactant intactId="EBI-78835">
        <id>P29353</id>
        <label>SHC1</label>
    </interactant>
    <organismsDiffer>false</organismsDiffer>
    <experiments>2</experiments>
</comment>
<comment type="interaction">
    <interactant intactId="EBI-475899">
        <id>P06213</id>
    </interactant>
    <interactant intactId="EBI-3989070">
        <id>P01317</id>
        <label>INS</label>
    </interactant>
    <organismsDiffer>true</organismsDiffer>
    <experiments>5</experiments>
</comment>
<comment type="interaction">
    <interactant intactId="EBI-475899">
        <id>P06213</id>
    </interactant>
    <interactant intactId="EBI-520230">
        <id>P35570</id>
        <label>Irs1</label>
    </interactant>
    <organismsDiffer>true</organismsDiffer>
    <experiments>5</experiments>
</comment>
<comment type="interaction">
    <interactant intactId="EBI-15558981">
        <id>P06213-1</id>
    </interactant>
    <interactant intactId="EBI-714559">
        <id>P32121</id>
        <label>ARRB2</label>
    </interactant>
    <organismsDiffer>false</organismsDiffer>
    <experiments>2</experiments>
</comment>
<comment type="interaction">
    <interactant intactId="EBI-15558981">
        <id>P06213-1</id>
    </interactant>
    <interactant intactId="EBI-15558981">
        <id>P06213-1</id>
        <label>INSR</label>
    </interactant>
    <organismsDiffer>false</organismsDiffer>
    <experiments>4</experiments>
</comment>
<comment type="interaction">
    <interactant intactId="EBI-15558981">
        <id>P06213-1</id>
    </interactant>
    <interactant intactId="EBI-968788">
        <id>P18031</id>
        <label>PTPN1</label>
    </interactant>
    <organismsDiffer>false</organismsDiffer>
    <experiments>2</experiments>
</comment>
<comment type="interaction">
    <interactant intactId="EBI-15558981">
        <id>P06213-1</id>
    </interactant>
    <interactant intactId="EBI-21501656">
        <id>Q92485-2</id>
        <label>SMPDL3B</label>
    </interactant>
    <organismsDiffer>false</organismsDiffer>
    <experiments>2</experiments>
</comment>
<comment type="interaction">
    <interactant intactId="EBI-15558981">
        <id>P06213-1</id>
    </interactant>
    <interactant intactId="EBI-1369862">
        <id>P81122</id>
        <label>Irs2</label>
    </interactant>
    <organismsDiffer>true</organismsDiffer>
    <experiments>8</experiments>
</comment>
<comment type="interaction">
    <interactant intactId="EBI-15558981">
        <id>P06213-1</id>
    </interactant>
    <interactant intactId="EBI-16034016">
        <id>Q1XH17</id>
        <label>Trim72</label>
    </interactant>
    <organismsDiffer>true</organismsDiffer>
    <experiments>2</experiments>
</comment>
<comment type="interaction">
    <interactant intactId="EBI-9984921">
        <id>P06213-2</id>
    </interactant>
    <interactant intactId="EBI-7090529">
        <id>P01308</id>
        <label>INS</label>
    </interactant>
    <organismsDiffer>false</organismsDiffer>
    <experiments>6</experiments>
</comment>
<comment type="interaction">
    <interactant intactId="EBI-9984921">
        <id>P06213-2</id>
    </interactant>
    <interactant intactId="EBI-78203">
        <id>Q13257</id>
        <label>MAD2L1</label>
    </interactant>
    <organismsDiffer>false</organismsDiffer>
    <experiments>3</experiments>
</comment>
<comment type="interaction">
    <interactant intactId="EBI-9984921">
        <id>P06213-2</id>
    </interactant>
    <interactant intactId="EBI-21501656">
        <id>Q92485-2</id>
        <label>SMPDL3B</label>
    </interactant>
    <organismsDiffer>false</organismsDiffer>
    <experiments>2</experiments>
</comment>
<comment type="interaction">
    <interactant intactId="EBI-9984921">
        <id>P06213-2</id>
    </interactant>
    <interactant intactId="EBI-3989070">
        <id>P01317</id>
        <label>INS</label>
    </interactant>
    <organismsDiffer>true</organismsDiffer>
    <experiments>2</experiments>
</comment>
<comment type="subcellular location">
    <subcellularLocation>
        <location evidence="2">Cell membrane</location>
        <topology evidence="125">Single-pass type I membrane protein</topology>
    </subcellularLocation>
    <subcellularLocation>
        <location evidence="2">Late endosome</location>
    </subcellularLocation>
    <subcellularLocation>
        <location evidence="2">Lysosome</location>
    </subcellularLocation>
    <text evidence="2">Binding of insulin to INSR induces internalization and lysosomal degradation of the receptor, a means for down-regulating this signaling pathway after stimulation. In the presence of SORL1, internalized INSR molecules are redirected back to the cell surface, thereby preventing their lysosomal catabolism and strengthening insulin signal reception.</text>
</comment>
<comment type="alternative products">
    <event type="alternative splicing"/>
    <isoform>
        <id>P06213-1</id>
        <name>Long</name>
        <name>HIR-B</name>
        <sequence type="displayed"/>
    </isoform>
    <isoform>
        <id>P06213-2</id>
        <name>Short</name>
        <name>HIR-A</name>
        <sequence type="described" ref="VSP_002898"/>
    </isoform>
</comment>
<comment type="tissue specificity">
    <text evidence="8 66 115 119">Isoform Long and isoform Short are predominantly expressed in tissue targets of insulin metabolic effects: liver, adipose tissue and skeletal muscle but are also expressed in the peripheral nerve, kidney, pulmonary alveoli, pancreatic acini, placenta vascular endothelium, fibroblasts, monocytes, granulocytes, erythrocytes and skin. Isoform Short is preferentially expressed in fetal cells such as fetal fibroblasts, muscle, liver and kidney. Found as a hybrid receptor with IGF1R in muscle, heart, kidney, adipose tissue, skeletal muscle, hepatoma, fibroblasts, spleen and placenta (at protein level). Overexpressed in several tumors, including breast, colon, lung, ovary, and thyroid carcinomas.</text>
</comment>
<comment type="domain">
    <text evidence="41 53 64">The tetrameric insulin receptor binds insulin via non-identical regions from two alpha chains, primarily via the C-terminal region of the first INSR alpha chain. Residues from the leucine-rich N-terminus of the other INSR alpha chain also contribute to this insulin binding site. A secondary insulin-binding site is formed by residues at the junction of fibronectin type-III domain 1 and 2.</text>
</comment>
<comment type="PTM">
    <text evidence="29 40 50 51 64 81">After being transported from the endoplasmic reticulum to the Golgi apparatus, the single glycosylated precursor is further glycosylated and then cleaved, followed by its transport to the plasma membrane.</text>
</comment>
<comment type="PTM">
    <text evidence="12 24 27 36 37 45 46 59 71 83 111 118">Autophosphorylated on tyrosine residues in response to insulin (PubMed:14690593, PubMed:16246733, PubMed:16271887, PubMed:18278056, PubMed:18767165, PubMed:3166375, PubMed:9312016). Phosphorylation of Tyr-999 is required for binding to IRS1, SHC1 and STAT5B (PubMed:14690593, PubMed:16246733, PubMed:16271887, PubMed:18278056, PubMed:18767165, PubMed:3166375, PubMed:9312016). Dephosphorylated by PTPRE at Tyr-999, Tyr-1185, Tyr-1189 and Tyr-1190 (PubMed:14690593, PubMed:16246733, PubMed:16271887, PubMed:18278056, PubMed:18767165, PubMed:3166375, PubMed:9312016). May also be phosphorylated at Tyr-1185 and Tyr-1190 by mTORC2 (PubMed:26584640). Dephosphorylated by PTPRF and PTPN1 (PubMed:8995282). Dephosphorylated by PTPN2; down-regulates insulin-induced signaling (PubMed:10734133, PubMed:12612081). Dephosphorylation at Tyr-1189 and Tyr-1190 requires the SH2/SH3 adapter protein NCK1, probably to recruit its interaction partner PTPN1 (PubMed:21707536).</text>
</comment>
<comment type="PTM">
    <text evidence="86">S-nitrosylation at Cys-1083 by BLVRB inhibits the receptor tyrosine kinase, thereby inhibiting insulin signaling.</text>
</comment>
<comment type="PTM">
    <text evidence="73">Ubiquitinated by MARCHF1; leading to degradation thereby reducing surface INSR expression.</text>
</comment>
<comment type="disease" evidence="9 19 42 57 65 80 101">
    <disease id="DI-02242">
        <name>Rabson-Mendenhall syndrome</name>
        <acronym>RMS</acronym>
        <description>Severe insulin resistance syndrome characterized by insulin-resistant diabetes mellitus with pineal hyperplasia and somatic abnormalities. Typical features include coarse, senile-appearing facies, dental and skin abnormalities, abdominal distension, and phallic enlargement. Inheritance is autosomal recessive.</description>
        <dbReference type="MIM" id="262190"/>
    </disease>
    <text>The disease is caused by variants affecting the gene represented in this entry.</text>
</comment>
<comment type="disease" evidence="19 23 26 33 43 62 65 67 68 77 80 88 91 95 102 105 109 116 117 121">
    <disease id="DI-01890">
        <name>Leprechaunism</name>
        <acronym>LEPRCH</acronym>
        <description>Represents the most severe form of insulin resistance syndrome, characterized by intrauterine and postnatal growth retardation and death in early infancy. Inheritance is autosomal recessive.</description>
        <dbReference type="MIM" id="246200"/>
    </disease>
    <text>The disease is caused by variants affecting the gene represented in this entry.</text>
</comment>
<comment type="disease" evidence="28 34 90">
    <disease id="DI-02060">
        <name>Type 2 diabetes mellitus</name>
        <acronym>T2D</acronym>
        <description>A multifactorial disorder of glucose homeostasis caused by a lack of sensitivity to insulin. Affected individuals usually have an obese body habitus and manifestations of a metabolic syndrome characterized by diabetes, insulin resistance, hypertension and hypertriglyceridemia. The disease results in long-term complications that affect the eyes, kidneys, nerves, and blood vessels.</description>
        <dbReference type="MIM" id="125853"/>
    </disease>
    <text>The gene represented in this entry may be involved in disease pathogenesis.</text>
</comment>
<comment type="disease" evidence="30">
    <disease id="DI-01583">
        <name>Hyperinsulinemic hypoglycemia, familial, 5</name>
        <acronym>HHF5</acronym>
        <description>A form of hyperinsulinemic hypoglycemia, a clinically and genetically heterogeneous disorder characterized by inappropriate insulin secretion from the pancreatic beta-cells in the presence of low blood glucose levels. HHF5 clinical features include loss of consciousness due to hypoglycemia and hypoglycemic seizures. HHF5 inheritance is autosomal dominant.</description>
        <dbReference type="MIM" id="609968"/>
    </disease>
    <text>The disease is caused by variants affecting the gene represented in this entry.</text>
</comment>
<comment type="disease" evidence="11 15 20 26 32 54 55 58 65 70 80 84 97 100 101 103 113">
    <disease id="DI-01828">
        <name>Insulin-resistant diabetes mellitus with acanthosis nigricans type A</name>
        <acronym>IRAN type A</acronym>
        <description>Characterized by the association of severe insulin resistance (manifested by marked hyperinsulinemia and a failure to respond to exogenous insulin) with the skin lesion acanthosis nigricans and ovarian hyperandrogenism in adolescent female subjects. Women frequently present with hirsutism, acne, amenorrhea or oligomenorrhea, and virilization. This syndrome is different from the type B that has been demonstrated to be secondary to the presence of circulating autoantibodies against the insulin receptor.</description>
        <dbReference type="MIM" id="610549"/>
    </disease>
    <text>The disease is caused by variants affecting the gene represented in this entry.</text>
</comment>
<comment type="similarity">
    <text evidence="4">Belongs to the protein kinase superfamily. Tyr protein kinase family. Insulin receptor subfamily.</text>
</comment>
<comment type="online information" name="Wikipedia">
    <link uri="https://en.wikipedia.org/wiki/Insulin_receptor"/>
    <text>Insulin receptor entry</text>
</comment>
<gene>
    <name type="primary">INSR</name>
</gene>
<name>INSR_HUMAN</name>
<keyword id="KW-0002">3D-structure</keyword>
<keyword id="KW-0025">Alternative splicing</keyword>
<keyword id="KW-0067">ATP-binding</keyword>
<keyword id="KW-0119">Carbohydrate metabolism</keyword>
<keyword id="KW-1003">Cell membrane</keyword>
<keyword id="KW-0165">Cleavage on pair of basic residues</keyword>
<keyword id="KW-0219">Diabetes mellitus</keyword>
<keyword id="KW-0903">Direct protein sequencing</keyword>
<keyword id="KW-0225">Disease variant</keyword>
<keyword id="KW-1015">Disulfide bond</keyword>
<keyword id="KW-0967">Endosome</keyword>
<keyword id="KW-0325">Glycoprotein</keyword>
<keyword id="KW-1017">Isopeptide bond</keyword>
<keyword id="KW-0418">Kinase</keyword>
<keyword id="KW-0458">Lysosome</keyword>
<keyword id="KW-0472">Membrane</keyword>
<keyword id="KW-0547">Nucleotide-binding</keyword>
<keyword id="KW-0597">Phosphoprotein</keyword>
<keyword id="KW-1267">Proteomics identification</keyword>
<keyword id="KW-0675">Receptor</keyword>
<keyword id="KW-1185">Reference proteome</keyword>
<keyword id="KW-0677">Repeat</keyword>
<keyword id="KW-0702">S-nitrosylation</keyword>
<keyword id="KW-0732">Signal</keyword>
<keyword id="KW-0808">Transferase</keyword>
<keyword id="KW-0812">Transmembrane</keyword>
<keyword id="KW-1133">Transmembrane helix</keyword>
<keyword id="KW-0829">Tyrosine-protein kinase</keyword>
<keyword id="KW-0832">Ubl conjugation</keyword>
<reference key="1">
    <citation type="journal article" date="1985" name="Cell">
        <title>The human insulin receptor cDNA: the structural basis for hormone-activated transmembrane signalling.</title>
        <authorList>
            <person name="Ebina Y."/>
            <person name="Ellis L."/>
            <person name="Jarnagin K."/>
            <person name="Edery M."/>
            <person name="Graf L."/>
            <person name="Clauser E."/>
            <person name="Ou J.-H."/>
            <person name="Masiarz F."/>
            <person name="Kan Y.W."/>
            <person name="Goldfine I.D."/>
            <person name="Roth R.A."/>
            <person name="Rutter W.J."/>
        </authorList>
    </citation>
    <scope>NUCLEOTIDE SEQUENCE [MRNA] (ISOFORM LONG)</scope>
    <scope>VARIANTS GLY-2; HIS-171; THR-448 AND LYS-492</scope>
</reference>
<reference key="2">
    <citation type="journal article" date="1985" name="Nature">
        <title>Human insulin receptor and its relationship to the tyrosine kinase family of oncogenes.</title>
        <authorList>
            <person name="Ullrich A."/>
            <person name="Bell J.R."/>
            <person name="Chen E.Y."/>
            <person name="Herrera R."/>
            <person name="Petruzzelli L.M."/>
            <person name="Dull T.J."/>
            <person name="Gray A."/>
            <person name="Coussens L."/>
            <person name="Liao Y.-C."/>
            <person name="Tsubokawa M."/>
            <person name="Mason A."/>
            <person name="Seeburg P.H."/>
            <person name="Grunfeld C."/>
            <person name="Rosen O.M."/>
            <person name="Ramachandran J."/>
        </authorList>
    </citation>
    <scope>NUCLEOTIDE SEQUENCE [MRNA] (ISOFORM SHORT)</scope>
    <scope>PROTEIN SEQUENCE OF 28-49 AND 763-782</scope>
    <scope>GLYCOSYLATION AT ASN-43 AND ASN-769</scope>
    <scope>VARIANT GLY-2</scope>
</reference>
<reference key="3">
    <citation type="submission" date="1985-07" db="EMBL/GenBank/DDBJ databases">
        <authorList>
            <person name="Chen E.Y."/>
        </authorList>
    </citation>
    <scope>SEQUENCE REVISION TO 899-900</scope>
</reference>
<reference key="4">
    <citation type="journal article" date="1990" name="Diabetes">
        <title>Human insulin-receptor gene. Partial sequence and amplification of exons by polymerase chain reaction.</title>
        <authorList>
            <person name="Seino S."/>
            <person name="Seino M."/>
            <person name="Bell G.I."/>
        </authorList>
    </citation>
    <scope>NUCLEOTIDE SEQUENCE [GENOMIC DNA]</scope>
    <scope>VARIANT GLY-2</scope>
    <source>
        <tissue>Fetal liver</tissue>
    </source>
</reference>
<reference key="5">
    <citation type="journal article" date="2004" name="Nature">
        <title>The DNA sequence and biology of human chromosome 19.</title>
        <authorList>
            <person name="Grimwood J."/>
            <person name="Gordon L.A."/>
            <person name="Olsen A.S."/>
            <person name="Terry A."/>
            <person name="Schmutz J."/>
            <person name="Lamerdin J.E."/>
            <person name="Hellsten U."/>
            <person name="Goodstein D."/>
            <person name="Couronne O."/>
            <person name="Tran-Gyamfi M."/>
            <person name="Aerts A."/>
            <person name="Altherr M."/>
            <person name="Ashworth L."/>
            <person name="Bajorek E."/>
            <person name="Black S."/>
            <person name="Branscomb E."/>
            <person name="Caenepeel S."/>
            <person name="Carrano A.V."/>
            <person name="Caoile C."/>
            <person name="Chan Y.M."/>
            <person name="Christensen M."/>
            <person name="Cleland C.A."/>
            <person name="Copeland A."/>
            <person name="Dalin E."/>
            <person name="Dehal P."/>
            <person name="Denys M."/>
            <person name="Detter J.C."/>
            <person name="Escobar J."/>
            <person name="Flowers D."/>
            <person name="Fotopulos D."/>
            <person name="Garcia C."/>
            <person name="Georgescu A.M."/>
            <person name="Glavina T."/>
            <person name="Gomez M."/>
            <person name="Gonzales E."/>
            <person name="Groza M."/>
            <person name="Hammon N."/>
            <person name="Hawkins T."/>
            <person name="Haydu L."/>
            <person name="Ho I."/>
            <person name="Huang W."/>
            <person name="Israni S."/>
            <person name="Jett J."/>
            <person name="Kadner K."/>
            <person name="Kimball H."/>
            <person name="Kobayashi A."/>
            <person name="Larionov V."/>
            <person name="Leem S.-H."/>
            <person name="Lopez F."/>
            <person name="Lou Y."/>
            <person name="Lowry S."/>
            <person name="Malfatti S."/>
            <person name="Martinez D."/>
            <person name="McCready P.M."/>
            <person name="Medina C."/>
            <person name="Morgan J."/>
            <person name="Nelson K."/>
            <person name="Nolan M."/>
            <person name="Ovcharenko I."/>
            <person name="Pitluck S."/>
            <person name="Pollard M."/>
            <person name="Popkie A.P."/>
            <person name="Predki P."/>
            <person name="Quan G."/>
            <person name="Ramirez L."/>
            <person name="Rash S."/>
            <person name="Retterer J."/>
            <person name="Rodriguez A."/>
            <person name="Rogers S."/>
            <person name="Salamov A."/>
            <person name="Salazar A."/>
            <person name="She X."/>
            <person name="Smith D."/>
            <person name="Slezak T."/>
            <person name="Solovyev V."/>
            <person name="Thayer N."/>
            <person name="Tice H."/>
            <person name="Tsai M."/>
            <person name="Ustaszewska A."/>
            <person name="Vo N."/>
            <person name="Wagner M."/>
            <person name="Wheeler J."/>
            <person name="Wu K."/>
            <person name="Xie G."/>
            <person name="Yang J."/>
            <person name="Dubchak I."/>
            <person name="Furey T.S."/>
            <person name="DeJong P."/>
            <person name="Dickson M."/>
            <person name="Gordon D."/>
            <person name="Eichler E.E."/>
            <person name="Pennacchio L.A."/>
            <person name="Richardson P."/>
            <person name="Stubbs L."/>
            <person name="Rokhsar D.S."/>
            <person name="Myers R.M."/>
            <person name="Rubin E.M."/>
            <person name="Lucas S.M."/>
        </authorList>
    </citation>
    <scope>NUCLEOTIDE SEQUENCE [LARGE SCALE GENOMIC DNA]</scope>
</reference>
<reference key="6">
    <citation type="journal article" date="2004" name="Genome Res.">
        <title>The status, quality, and expansion of the NIH full-length cDNA project: the Mammalian Gene Collection (MGC).</title>
        <authorList>
            <consortium name="The MGC Project Team"/>
        </authorList>
    </citation>
    <scope>NUCLEOTIDE SEQUENCE [LARGE SCALE MRNA] (ISOFORM SHORT)</scope>
    <scope>VARIANT GLY-2</scope>
</reference>
<reference key="7">
    <citation type="journal article" date="1987" name="J. Biol. Chem.">
        <title>Characterization of the promoter region of the human insulin receptor gene. Evidence for promoter activity.</title>
        <authorList>
            <person name="Araki E."/>
            <person name="Shimada F."/>
            <person name="Uzawa H."/>
            <person name="Mori M."/>
            <person name="Ebina Y."/>
        </authorList>
    </citation>
    <scope>NUCLEOTIDE SEQUENCE [GENOMIC DNA] OF 1-33</scope>
    <scope>VARIANT GLY-2</scope>
</reference>
<reference key="8">
    <citation type="journal article" date="1989" name="Diabetes Res. Clin. Pract.">
        <title>Characterization of the promoter region of the human insulin receptor gene.</title>
        <authorList>
            <person name="Araki E."/>
            <person name="Shimada F."/>
            <person name="Fukushima H."/>
            <person name="Mori M."/>
            <person name="Shichiri M."/>
            <person name="Ebina Y."/>
        </authorList>
    </citation>
    <scope>NUCLEOTIDE SEQUENCE [GENOMIC DNA] OF 1-33</scope>
    <scope>VARIANT GLY-2</scope>
</reference>
<reference key="9">
    <citation type="journal article" date="1989" name="J. Biol. Chem.">
        <title>Characterization of the promoter region and 3' end of the human insulin receptor gene.</title>
        <authorList>
            <person name="Tewari D.S."/>
            <person name="Cook D.M."/>
            <person name="Taub R."/>
        </authorList>
    </citation>
    <scope>NUCLEOTIDE SEQUENCE [GENOMIC DNA] OF 1-33</scope>
    <scope>VARIANT GLY-2</scope>
</reference>
<reference key="10">
    <citation type="journal article" date="1990" name="Mol. Endocrinol.">
        <title>Structural and functional analysis of the insulin receptor promoter.</title>
        <authorList>
            <person name="McKeon C."/>
            <person name="Moncada V."/>
            <person name="Pham T."/>
            <person name="Salvatore P."/>
            <person name="Kadowaki T."/>
            <person name="Accili D."/>
            <person name="Taylor S.I."/>
        </authorList>
    </citation>
    <scope>NUCLEOTIDE SEQUENCE [GENOMIC DNA] OF 1-33</scope>
    <scope>VARIANT GLY-2</scope>
    <source>
        <tissue>Skin fibroblast</tissue>
    </source>
</reference>
<reference key="11">
    <citation type="journal article" date="1990" name="J. Biol. Chem.">
        <title>Substructural analysis of the insulin receptor by microsequence analyses of limited tryptic fragments isolated by sodium dodecyl sulfate-polyacrylamide gel electrophoresis in the absence or presence of dithiothreitol.</title>
        <authorList>
            <person name="Xu Q.-Y."/>
            <person name="Paxton R.J."/>
            <person name="Fujita-Yamaguchi Y."/>
        </authorList>
    </citation>
    <scope>PROTEIN SEQUENCE OF 28-44; 192-205; 299-314; 610-627 AND 763-780</scope>
    <scope>ACTIVITY REGULATION</scope>
    <scope>SUBUNIT</scope>
    <source>
        <tissue>Placenta</tissue>
    </source>
</reference>
<reference key="12">
    <citation type="journal article" date="1993" name="Biochemistry">
        <title>Characterization of human placental insulin-like growth factor-I/insulin hybrid receptors by protein microsequencing and purification.</title>
        <authorList>
            <person name="Kasuya J."/>
            <person name="Paz I.B."/>
            <person name="Maddux B.A."/>
            <person name="Goldfine I.D."/>
            <person name="Hefta S.A."/>
            <person name="Fujita-Yamaguchi Y."/>
        </authorList>
    </citation>
    <scope>PROTEIN SEQUENCE OF 28-45 AND 763-782</scope>
    <scope>FUNCTION</scope>
    <scope>FORMATION OF A HYBRID RECEPTOR WITH IGF1R</scope>
    <source>
        <tissue>Placenta</tissue>
    </source>
</reference>
<reference key="13">
    <citation type="submission" date="2005-03" db="EMBL/GenBank/DDBJ databases">
        <authorList>
            <person name="Totoki Y."/>
            <person name="Toyoda A."/>
            <person name="Takeda T."/>
            <person name="Sakaki Y."/>
            <person name="Tanaka A."/>
            <person name="Yokoyama S."/>
            <person name="Ohara O."/>
            <person name="Nagase T."/>
            <person name="Kikuno R.F."/>
        </authorList>
    </citation>
    <scope>NUCLEOTIDE SEQUENCE [LARGE SCALE MRNA] OF 538-1382 (ISOFORM SHORT)</scope>
    <source>
        <tissue>Brain</tissue>
    </source>
</reference>
<reference key="14">
    <citation type="journal article" date="1989" name="Biochem. Biophys. Res. Commun.">
        <title>Alternative splicing of human insulin receptor messenger RNA.</title>
        <authorList>
            <person name="Seino S."/>
            <person name="Bell G.I."/>
        </authorList>
    </citation>
    <scope>NUCLEOTIDE SEQUENCE [MRNA] OF 728-772 (ISOFORM LONG)</scope>
    <scope>ALTERNATIVE SPLICING</scope>
</reference>
<reference key="15">
    <citation type="journal article" date="1990" name="EMBO J.">
        <title>Functionally distinct insulin receptors generated by tissue-specific alternative splicing.</title>
        <authorList>
            <person name="Mosthaf L."/>
            <person name="Grako K."/>
            <person name="Dull T.J."/>
            <person name="Coussens L."/>
            <person name="Ullrich A."/>
            <person name="McClain D.A."/>
        </authorList>
    </citation>
    <scope>NUCLEOTIDE SEQUENCE [MRNA] OF 744-823 (ISOFORM LONG)</scope>
    <scope>TISSUE SPECIFICITY</scope>
    <scope>LIGAND-BINDING</scope>
    <scope>AUTOPHOSPHORYLATION</scope>
</reference>
<reference key="16">
    <citation type="journal article" date="1989" name="Diabetes">
        <title>Molecular and clinical characterization of an insertional polymorphism of the insulin-receptor gene.</title>
        <authorList>
            <person name="Elbein S.C."/>
        </authorList>
    </citation>
    <scope>NUCLEOTIDE SEQUENCE [GENOMIC DNA] OF 895-1085</scope>
</reference>
<reference key="17">
    <citation type="journal article" date="1988" name="Biochem. J.">
        <title>Studies on the autophosphorylation of the insulin receptor from human placenta. Analysis of the sites phosphorylated by two-dimensional peptide mapping.</title>
        <authorList>
            <person name="Tavare J.M."/>
            <person name="Denton R.M."/>
        </authorList>
    </citation>
    <scope>PROTEIN SEQUENCE OF 927-956; 981-1019; 1182-1194 AND 1352-1369</scope>
    <scope>PHOSPHORYLATION AT TYR-999; TYR-1355 AND TYR-1361</scope>
    <source>
        <tissue>Placenta</tissue>
    </source>
</reference>
<reference key="18">
    <citation type="journal article" date="1989" name="Science">
        <title>Human diabetes associated with a deletion of the tyrosine kinase domain of the insulin receptor.</title>
        <authorList>
            <person name="Taira M."/>
            <person name="Taira M."/>
            <person name="Hashimoto N."/>
            <person name="Shimada F."/>
            <person name="Suzuki Y."/>
            <person name="Kanatsuka A."/>
            <person name="Nakamura F."/>
            <person name="Ebina Y."/>
            <person name="Tatibana M."/>
            <person name="Makino H."/>
        </authorList>
    </citation>
    <scope>NUCLEOTIDE SEQUENCE [GENOMIC DNA] OF 1006-1123</scope>
</reference>
<reference key="19">
    <citation type="journal article" date="1987" name="Protein Seq. Data Anal.">
        <title>Partial amino acid sequence analyses of human placental insulin receptor.</title>
        <authorList>
            <person name="Fujita-Yamaguchi Y."/>
            <person name="Hawke D."/>
            <person name="Shively J.E."/>
            <person name="Choi S."/>
        </authorList>
    </citation>
    <scope>PARTIAL PROTEIN SEQUENCE</scope>
</reference>
<reference key="20">
    <citation type="journal article" date="1987" name="Proc. Natl. Acad. Sci. U.S.A.">
        <title>Replacement of lysine residue 1030 in the putative ATP-binding region of the insulin receptor abolishes insulin- and antibody-stimulated glucose uptake and receptor kinase activity.</title>
        <authorList>
            <person name="Ebina Y."/>
            <person name="Araki E."/>
            <person name="Taira M."/>
            <person name="Shimada F."/>
            <person name="Mori M."/>
            <person name="Craik C.S."/>
            <person name="Siddle K."/>
            <person name="Pierce S.B."/>
            <person name="Roth R.A."/>
            <person name="Rutter W.J."/>
        </authorList>
    </citation>
    <scope>MUTAGENESIS OF LYS-1057</scope>
</reference>
<reference key="21">
    <citation type="journal article" date="1988" name="Cell">
        <title>Mutation of the insulin receptor at tyrosine 960 inhibits signal transmission but does not affect its tyrosine kinase activity.</title>
        <authorList>
            <person name="White M.F."/>
            <person name="Livingston J.N."/>
            <person name="Backer J.M."/>
            <person name="Lauris V."/>
            <person name="Dull T.J."/>
            <person name="Ullrich A."/>
            <person name="Kahn C.R."/>
        </authorList>
    </citation>
    <scope>MUTAGENESIS OF TYR-999</scope>
</reference>
<reference key="22">
    <citation type="journal article" date="1992" name="Biochem. Biophys. Res. Commun.">
        <title>Analysis of the order of autophosphorylation of human insulin receptor tyrosines 1158, 1162 and 1163.</title>
        <authorList>
            <person name="Dickens M."/>
            <person name="Tavare J.M."/>
        </authorList>
    </citation>
    <scope>AUTOPHOSPHORYLATION</scope>
</reference>
<reference key="23">
    <citation type="journal article" date="1992" name="Biochem. Biophys. Res. Commun.">
        <title>Identification of a disulfide bridge connecting the alpha-subunits of the extracellular domain of the insulin receptor.</title>
        <authorList>
            <person name="Schaeffer L."/>
            <person name="Ljungqvist L."/>
        </authorList>
    </citation>
    <scope>DISULFIDE BONDS</scope>
    <scope>GLYCOSYLATION AT ASN-541</scope>
</reference>
<reference key="24">
    <citation type="journal article" date="1993" name="Biochem. J.">
        <title>Purified hybrid insulin/insulin-like growth factor-I receptors bind insulin-like growth factor-I, but not insulin, with high affinity.</title>
        <authorList>
            <person name="Soos M.A."/>
            <person name="Field C.E."/>
            <person name="Siddle K."/>
        </authorList>
    </citation>
    <scope>FUNCTION</scope>
    <scope>FORMATION OF A HYBRID RECEPTOR WITH IGF1R</scope>
</reference>
<reference key="25">
    <citation type="journal article" date="1994" name="J. Biol. Chem.">
        <title>Direct activation of the phosphatidylinositol 3'-kinase by the insulin receptor.</title>
        <authorList>
            <person name="Van Horn D.J."/>
            <person name="Myers M.G. Jr."/>
            <person name="Backer J.M."/>
        </authorList>
    </citation>
    <scope>FUNCTION</scope>
    <scope>INTERACTION WITH PIK3R1</scope>
</reference>
<reference key="26">
    <citation type="journal article" date="1995" name="J. Biol. Chem.">
        <title>Distinct modes of interaction of SHC and insulin receptor substrate-1 with the insulin receptor NPEY region via non-SH2 domains.</title>
        <authorList>
            <person name="He W."/>
            <person name="O'Neill T.J."/>
            <person name="Gustafson T.A."/>
        </authorList>
    </citation>
    <scope>INTERACTION WITH IRS1 AND SHC1</scope>
    <scope>MUTAGENESIS OF LEU-991; TYR-992; ASN-996; 996-ASN-PRO-997; PRO-997; TYR-999; LEU-1000 AND ALA-1002</scope>
</reference>
<reference key="27">
    <citation type="journal article" date="1995" name="Mol. Cell. Biol.">
        <title>Phosphotyrosine-dependent interaction of SHC and insulin receptor substrate 1 with the NPEY motif of the insulin receptor via a novel non-SH2 domain.</title>
        <authorList>
            <person name="Gustafson T.A."/>
            <person name="He W."/>
            <person name="Craparo A."/>
            <person name="Schaub C.D."/>
            <person name="O'Neill T.J."/>
        </authorList>
    </citation>
    <scope>INTERACTION WITH IRS1; SHC1 AND PIK3R1</scope>
    <scope>MUTAGENESIS OF ASN-996; PRO-997; GLU-998; TYR-999 AND LYS-1057</scope>
</reference>
<reference key="28">
    <citation type="journal article" date="1997" name="Biochem. J.">
        <title>Insulin receptor/IGF-I receptor hybrids are widely distributed in mammalian tissues: quantification of individual receptor species by selective immunoprecipitation and immunoblotting.</title>
        <authorList>
            <person name="Bailyes E.M."/>
            <person name="Nave B.T."/>
            <person name="Soos M.A."/>
            <person name="Orr S.R."/>
            <person name="Hayward A.C."/>
            <person name="Siddle K."/>
        </authorList>
    </citation>
    <scope>FORMATION OF A HYBRID RECEPTOR WITH IGF1R</scope>
    <scope>TISSUE SPECIFICITY</scope>
</reference>
<reference key="29">
    <citation type="journal article" date="1997" name="Eur. J. Biochem.">
        <title>Identification of Stat 5B as a substrate of the insulin receptor.</title>
        <authorList>
            <person name="Sawka-Verhelle D."/>
            <person name="Filloux C."/>
            <person name="Tartare-Deckert S."/>
            <person name="Mothe I."/>
            <person name="Van Obberghen E."/>
        </authorList>
    </citation>
    <scope>FUNCTION IN PHOSPHORYLATION OF STAT5B</scope>
    <scope>MUTAGENESIS OF TYR-999</scope>
    <scope>INTERACTION WITH STAT5B; IRS1 AND IRS2</scope>
</reference>
<reference key="30">
    <citation type="journal article" date="1997" name="J. Biol. Chem.">
        <title>Functional association between the insulin receptor and the transmembrane protein-tyrosine phosphatase LAR in intact cells.</title>
        <authorList>
            <person name="Ahmad F."/>
            <person name="Goldstein B.J."/>
        </authorList>
    </citation>
    <scope>INTERACTION WITH PTPRF</scope>
</reference>
<reference key="31">
    <citation type="journal article" date="1997" name="J. Biol. Chem.">
        <title>Protein-tyrosine phosphatase 1B complexes with the insulin receptor in vivo and is tyrosine-phosphorylated in the presence of insulin.</title>
        <authorList>
            <person name="Bandyopadhyay D."/>
            <person name="Kusari A."/>
            <person name="Kenner K.A."/>
            <person name="Liu F."/>
            <person name="Chernoff J."/>
            <person name="Gustafson T.A."/>
            <person name="Kusari J."/>
        </authorList>
    </citation>
    <scope>INTERACTION WITH PTPRE</scope>
    <scope>DEPHOSPHORYLATION BY PTPRE</scope>
</reference>
<reference key="32">
    <citation type="journal article" date="1997" name="Mol. Cell. Endocrinol.">
        <title>Distribution of insulin/insulin-like growth factor-I hybrid receptors in human tissues.</title>
        <authorList>
            <person name="Federici M."/>
            <person name="Porzio O."/>
            <person name="Zucaro L."/>
            <person name="Fusco A."/>
            <person name="Borboni P."/>
            <person name="Lauro D."/>
            <person name="Sesti G."/>
        </authorList>
    </citation>
    <scope>FORMATION OF A HYBRID RECEPTOR WITH IGF1R</scope>
    <scope>TISSUE SPECIFICITY</scope>
</reference>
<reference key="33">
    <citation type="journal article" date="1999" name="Mol. Cell. Biol.">
        <title>Insulin receptor isoform A, a newly recognized, high-affinity insulin-like growth factor II receptor in fetal and cancer cells.</title>
        <authorList>
            <person name="Frasca F."/>
            <person name="Pandini G."/>
            <person name="Scalia P."/>
            <person name="Sciacca L."/>
            <person name="Mineo R."/>
            <person name="Costantino A."/>
            <person name="Goldfine I.D."/>
            <person name="Belfiore A."/>
            <person name="Vigneri R."/>
        </authorList>
    </citation>
    <scope>TISSUE SPECIFICITY</scope>
    <scope>FUNCTION AS RECEPTOR FOR IGFII (ISOFORM SHORT)</scope>
</reference>
<reference key="34">
    <citation type="journal article" date="2000" name="Diabetes">
        <title>Membrane glycoprotein PC-1 inhibition of insulin receptor function occurs via direct interaction with the receptor alpha-subunit.</title>
        <authorList>
            <person name="Maddux B.A."/>
            <person name="Goldfine I.D."/>
        </authorList>
    </citation>
    <scope>INTERACTION WITH ENPP1</scope>
    <scope>ACTIVITY REGULATION</scope>
</reference>
<reference key="35">
    <citation type="journal article" date="2000" name="J. Biol. Chem.">
        <title>Identification of tyrosine phosphatases that dephosphorylate the insulin receptor. A brute force approach based on 'substrate-trapping' mutants.</title>
        <authorList>
            <person name="Waelchli S."/>
            <person name="Curchod M.L."/>
            <person name="Gobert R.P."/>
            <person name="Arkinstall S."/>
            <person name="Hooft van Huijsduijnen R."/>
        </authorList>
    </citation>
    <scope>PHOSPHORYLATION</scope>
    <scope>DEPHOSPHORYLATION BY PTPN1 AND PTPN2</scope>
</reference>
<reference key="36">
    <citation type="journal article" date="2000" name="Oncogene">
        <title>Evidence for an interaction between the insulin receptor and Grb7. A role for two of its binding domains, PIR and SH2.</title>
        <authorList>
            <person name="Kasus-Jacobi A."/>
            <person name="Bereziat V."/>
            <person name="Perdereau D."/>
            <person name="Girard J."/>
            <person name="Burnol A.F."/>
        </authorList>
    </citation>
    <scope>INTERACTION WITH GRB7</scope>
    <scope>MUTAGENESIS OF LYS-1057; TYR-1189 AND TYR-1190</scope>
</reference>
<reference key="37">
    <citation type="journal article" date="2001" name="Genomics">
        <title>Cloning, mapping, and characterization of the human sorbin and SH3 domain containing 1 (SORBS1) gene: a protein associated with c-Abl during insulin signaling in the hepatoma cell line Hep3B.</title>
        <authorList>
            <person name="Lin W.-H."/>
            <person name="Huang C.-J."/>
            <person name="Liu M.-W."/>
            <person name="Chang H.-M."/>
            <person name="Chen Y.-J."/>
            <person name="Tai T.-Y."/>
            <person name="Chuang L.-M."/>
        </authorList>
    </citation>
    <scope>INTERACTION WITH SORBS1</scope>
</reference>
<reference key="38">
    <citation type="journal article" date="2001" name="J. Biol. Chem.">
        <title>Multiple activation loop conformations and their regulatory properties in the insulin receptor's kinase domain.</title>
        <authorList>
            <person name="Ablooglu A.J."/>
            <person name="Frankel M."/>
            <person name="Rusinova E."/>
            <person name="Ross J.B."/>
            <person name="Kohanski R.A."/>
        </authorList>
    </citation>
    <scope>CATALYTIC ACTIVITY</scope>
    <scope>MUTAGENESIS OF ASP-1159 AND ARG-1163</scope>
    <scope>ACTIVITY REGULATION</scope>
</reference>
<reference key="39">
    <citation type="journal article" date="2002" name="J. Biol. Chem.">
        <title>Inhibition of insulin receptor catalytic activity by the molecular adapter Grb14.</title>
        <authorList>
            <person name="Bereziat V."/>
            <person name="Kasus-Jacobi A."/>
            <person name="Perdereau D."/>
            <person name="Cariou B."/>
            <person name="Girard J."/>
            <person name="Burnol A.F."/>
        </authorList>
    </citation>
    <scope>INTERACTION WITH GRB14</scope>
    <scope>ACTIVITY REGULATION</scope>
</reference>
<reference key="40">
    <citation type="journal article" date="2002" name="J. Biol. Chem.">
        <title>Insulin/insulin-like growth factor I hybrid receptors have different biological characteristics depending on the insulin receptor isoform involved.</title>
        <authorList>
            <person name="Pandini G."/>
            <person name="Frasca F."/>
            <person name="Mineo R."/>
            <person name="Sciacca L."/>
            <person name="Vigneri R."/>
            <person name="Belfiore A."/>
        </authorList>
    </citation>
    <scope>FUNCTION</scope>
    <scope>FORMATION OF A HYBRID RECEPTOR WITH IGF1R</scope>
</reference>
<reference key="41">
    <citation type="journal article" date="2003" name="J. Biol. Chem.">
        <title>Grb10 inhibits insulin-stimulated insulin receptor substrate (IRS)-phosphatidylinositol 3-kinase/Akt signaling pathway by disrupting the association of IRS-1/IRS-2 with the insulin receptor.</title>
        <authorList>
            <person name="Wick K.R."/>
            <person name="Werner E.D."/>
            <person name="Langlais P."/>
            <person name="Ramos F.J."/>
            <person name="Dong L.Q."/>
            <person name="Shoelson S.E."/>
            <person name="Liu F."/>
        </authorList>
    </citation>
    <scope>INTERACTION WITH GRB10</scope>
    <scope>ACTIVITY REGULATION</scope>
</reference>
<reference key="42">
    <citation type="journal article" date="2003" name="Mol. Cell. Biol.">
        <title>Regulation of insulin receptor signaling by the protein tyrosine phosphatase TCPTP.</title>
        <authorList>
            <person name="Galic S."/>
            <person name="Klingler-Hoffmann M."/>
            <person name="Fodero-Tavoletti M.T."/>
            <person name="Puryer M.A."/>
            <person name="Meng T.C."/>
            <person name="Tonks N.K."/>
            <person name="Tiganis T."/>
        </authorList>
    </citation>
    <scope>PHOSPHORYLATION</scope>
    <scope>DEPHOSPHORYLATION BY PTPN2</scope>
</reference>
<reference key="43">
    <citation type="journal article" date="2005" name="J. Clin. Invest.">
        <title>Deletion of SOCS7 leads to enhanced insulin action and enlarged islets of Langerhans.</title>
        <authorList>
            <person name="Banks A.S."/>
            <person name="Li J."/>
            <person name="McKeag L."/>
            <person name="Hribal M.L."/>
            <person name="Kashiwada M."/>
            <person name="Accili D."/>
            <person name="Rothman P.B."/>
        </authorList>
    </citation>
    <scope>INTERACTION WITH SOCS7</scope>
</reference>
<reference key="44">
    <citation type="journal article" date="2005" name="Mol. Cell. Biol.">
        <title>Tyrosine phosphorylation of phosphoinositide-dependent kinase 1 by the insulin receptor is necessary for insulin metabolic signaling.</title>
        <authorList>
            <person name="Fiory F."/>
            <person name="Alberobello A.T."/>
            <person name="Miele C."/>
            <person name="Oriente F."/>
            <person name="Esposito I."/>
            <person name="Corbo V."/>
            <person name="Ruvo M."/>
            <person name="Tizzano B."/>
            <person name="Rasmussen T.E."/>
            <person name="Gammeltoft S."/>
            <person name="Formisano P."/>
            <person name="Beguinot F."/>
        </authorList>
    </citation>
    <scope>FUNCTION IN PHOSPHORYLATION OF PDPK1</scope>
    <scope>INTERACTION WITH PDPK1</scope>
</reference>
<reference key="45">
    <citation type="journal article" date="2005" name="Zool. Sci.">
        <title>Receptor-type protein tyrosine phosphatase epsilon (PTPepsilonM) is a negative regulator of insulin signaling in primary hepatocytes and liver.</title>
        <authorList>
            <person name="Nakagawa Y."/>
            <person name="Aoki N."/>
            <person name="Aoyama K."/>
            <person name="Shimizu H."/>
            <person name="Shimano H."/>
            <person name="Yamada N."/>
            <person name="Miyazaki H."/>
        </authorList>
    </citation>
    <scope>DEPHOSPHORYLATION BY PTPRE</scope>
</reference>
<reference key="46">
    <citation type="journal article" date="2006" name="J. Biol. Chem.">
        <title>Hybrid receptors formed by insulin receptor (IR) and insulin-like growth factor I receptor (IGF-IR) have low insulin and high IGF-1 affinity irrespective of the IR splice variant.</title>
        <authorList>
            <person name="Slaaby R."/>
            <person name="Schaeffer L."/>
            <person name="Lautrup-Larsen I."/>
            <person name="Andersen A.S."/>
            <person name="Shaw A.C."/>
            <person name="Mathiasen I.S."/>
            <person name="Brandt J."/>
        </authorList>
    </citation>
    <scope>FUNCTION</scope>
    <scope>FORMATION OF A HYBRID RECEPTOR WITH IGF1R</scope>
</reference>
<reference key="47">
    <citation type="journal article" date="2006" name="Nat. Rev. Mol. Cell Biol.">
        <title>Critical nodes in signalling pathways: insights into insulin action.</title>
        <authorList>
            <person name="Taniguchi C.M."/>
            <person name="Emanuelli B."/>
            <person name="Kahn C.R."/>
        </authorList>
    </citation>
    <scope>REVIEW ON SIGNALING PATHWAYS</scope>
</reference>
<reference key="48">
    <citation type="journal article" date="2007" name="Cell. Mol. Life Sci.">
        <title>Regulation of insulin receptor function.</title>
        <authorList>
            <person name="Youngren J.F."/>
        </authorList>
    </citation>
    <scope>REVIEW ON REGULATION OF INSR FUNCTION</scope>
</reference>
<reference key="49">
    <citation type="journal article" date="2008" name="Proc. Natl. Acad. Sci. U.S.A.">
        <title>A quantitative atlas of mitotic phosphorylation.</title>
        <authorList>
            <person name="Dephoure N."/>
            <person name="Zhou C."/>
            <person name="Villen J."/>
            <person name="Beausoleil S.A."/>
            <person name="Bakalarski C.E."/>
            <person name="Elledge S.J."/>
            <person name="Gygi S.P."/>
        </authorList>
    </citation>
    <scope>PHOSPHORYLATION [LARGE SCALE ANALYSIS] AT SER-400; TYR-401 AND SER-407</scope>
    <scope>IDENTIFICATION BY MASS SPECTROMETRY [LARGE SCALE ANALYSIS]</scope>
    <source>
        <tissue>Cervix carcinoma</tissue>
    </source>
</reference>
<reference key="50">
    <citation type="journal article" date="2009" name="Biochemistry">
        <title>A thermodynamic study of ligand binding to the first three domains of the human insulin receptor: relationship between the receptor alpha-chain C-terminal peptide and the site 1 insulin mimetic peptides.</title>
        <authorList>
            <person name="Menting J.G."/>
            <person name="Ward C.W."/>
            <person name="Margetts M.B."/>
            <person name="Lawrence M.C."/>
        </authorList>
    </citation>
    <scope>DOMAIN</scope>
    <scope>INSULIN-BINDING SITE</scope>
</reference>
<reference key="51">
    <citation type="journal article" date="2009" name="J. Proteome Res.">
        <title>Glycoproteomics analysis of human liver tissue by combination of multiple enzyme digestion and hydrazide chemistry.</title>
        <authorList>
            <person name="Chen R."/>
            <person name="Jiang X."/>
            <person name="Sun D."/>
            <person name="Han G."/>
            <person name="Wang F."/>
            <person name="Ye M."/>
            <person name="Wang L."/>
            <person name="Zou H."/>
        </authorList>
    </citation>
    <scope>GLYCOSYLATION [LARGE SCALE ANALYSIS] AT ASN-242 AND ASN-541</scope>
    <source>
        <tissue>Liver</tissue>
    </source>
</reference>
<reference key="52">
    <citation type="journal article" date="2009" name="Mol. Cell. Proteomics">
        <title>Large-scale proteomics analysis of the human kinome.</title>
        <authorList>
            <person name="Oppermann F.S."/>
            <person name="Gnad F."/>
            <person name="Olsen J.V."/>
            <person name="Hornberger R."/>
            <person name="Greff Z."/>
            <person name="Keri G."/>
            <person name="Mann M."/>
            <person name="Daub H."/>
        </authorList>
    </citation>
    <scope>IDENTIFICATION BY MASS SPECTROMETRY [LARGE SCALE ANALYSIS]</scope>
</reference>
<reference key="53">
    <citation type="journal article" date="2009" name="Nat. Biotechnol.">
        <title>Mass-spectrometric identification and relative quantification of N-linked cell surface glycoproteins.</title>
        <authorList>
            <person name="Wollscheid B."/>
            <person name="Bausch-Fluck D."/>
            <person name="Henderson C."/>
            <person name="O'Brien R."/>
            <person name="Bibel M."/>
            <person name="Schiess R."/>
            <person name="Aebersold R."/>
            <person name="Watts J.D."/>
        </authorList>
    </citation>
    <scope>GLYCOSYLATION [LARGE SCALE ANALYSIS] AT ASN-445 AND ASN-920</scope>
    <source>
        <tissue>Leukemic T-cell</tissue>
    </source>
</reference>
<reference key="54">
    <citation type="journal article" date="2011" name="Biochem. J.">
        <title>Dock/Nck facilitates PTP61F/PTP1B regulation of insulin signalling.</title>
        <authorList>
            <person name="Wu C.L."/>
            <person name="Buszard B."/>
            <person name="Teng C.H."/>
            <person name="Chen W.L."/>
            <person name="Warr C.G."/>
            <person name="Tiganis T."/>
            <person name="Meng T.C."/>
        </authorList>
    </citation>
    <scope>INTERACTION WITH NCK1</scope>
    <scope>PHOSPHORYLATION AT TYR-1189 AND TYR-1190</scope>
</reference>
<reference key="55">
    <citation type="journal article" date="2014" name="J. Proteomics">
        <title>An enzyme assisted RP-RPLC approach for in-depth analysis of human liver phosphoproteome.</title>
        <authorList>
            <person name="Bian Y."/>
            <person name="Song C."/>
            <person name="Cheng K."/>
            <person name="Dong M."/>
            <person name="Wang F."/>
            <person name="Huang J."/>
            <person name="Sun D."/>
            <person name="Wang L."/>
            <person name="Ye M."/>
            <person name="Zou H."/>
        </authorList>
    </citation>
    <scope>IDENTIFICATION BY MASS SPECTROMETRY [LARGE SCALE ANALYSIS]</scope>
    <source>
        <tissue>Liver</tissue>
    </source>
</reference>
<reference key="56">
    <citation type="journal article" date="2014" name="Mol. Biol. Cell">
        <title>Structural basis for activation of trimeric Gi proteins by multiple growth factor receptors via GIV/Girdin.</title>
        <authorList>
            <person name="Lin C."/>
            <person name="Ear J."/>
            <person name="Midde K."/>
            <person name="Lopez-Sanchez I."/>
            <person name="Aznar N."/>
            <person name="Garcia-Marcos M."/>
            <person name="Kufareva I."/>
            <person name="Abagyan R."/>
            <person name="Ghosh P."/>
        </authorList>
    </citation>
    <scope>INTERACTION WITH CCDC88A AND GNAI3</scope>
</reference>
<reference key="57">
    <citation type="journal article" date="2016" name="Cell Res.">
        <title>mTORC2 promotes type I insulin-like growth factor receptor and insulin receptor activation through the tyrosine kinase activity of mTOR.</title>
        <authorList>
            <person name="Yin Y."/>
            <person name="Hua H."/>
            <person name="Li M."/>
            <person name="Liu S."/>
            <person name="Kong Q."/>
            <person name="Shao T."/>
            <person name="Wang J."/>
            <person name="Luo Y."/>
            <person name="Wang Q."/>
            <person name="Luo T."/>
            <person name="Jiang Y."/>
        </authorList>
    </citation>
    <scope>PHOSPHORYLATION AT TYR-1185 AND TYR-1190</scope>
</reference>
<reference key="58">
    <citation type="journal article" date="2016" name="Nat. Commun.">
        <title>MARCH1 regulates insulin sensitivity by controlling cell surface insulin receptor levels.</title>
        <authorList>
            <person name="Nagarajan A."/>
            <person name="Petersen M.C."/>
            <person name="Nasiri A.R."/>
            <person name="Butrico G."/>
            <person name="Fung A."/>
            <person name="Ruan H.B."/>
            <person name="Kursawe R."/>
            <person name="Caprio S."/>
            <person name="Thibodeau J."/>
            <person name="Bourgeois-Daigneault M.C."/>
            <person name="Sun L."/>
            <person name="Gao G."/>
            <person name="Bhanot S."/>
            <person name="Jurczak M.J."/>
            <person name="Green M.R."/>
            <person name="Shulman G.I."/>
            <person name="Wajapeyee N."/>
        </authorList>
    </citation>
    <scope>MUTAGENESIS OF LYS-1079</scope>
    <scope>UBIQUITINATION AT LYS-1079</scope>
</reference>
<reference key="59">
    <citation type="journal article" date="2016" name="J. Clin. Invest.">
        <title>SORLA facilitates insulin receptor signaling in adipocytes and exacerbates obesity.</title>
        <authorList>
            <person name="Schmidt V."/>
            <person name="Schulz N."/>
            <person name="Yan X."/>
            <person name="Schuermann A."/>
            <person name="Kempa S."/>
            <person name="Kern M."/>
            <person name="Blueher M."/>
            <person name="Poy M.N."/>
            <person name="Olivecrona G."/>
            <person name="Willnow T.E."/>
        </authorList>
    </citation>
    <scope>INTERACTION WITH SORL1</scope>
</reference>
<reference key="60">
    <citation type="journal article" date="2016" name="Nat. Struct. Mol. Biol.">
        <title>A minimized human insulin-receptor-binding motif revealed in a Conus geographus venom insulin.</title>
        <authorList>
            <person name="Menting J.G."/>
            <person name="Gajewiak J."/>
            <person name="MacRaild C.A."/>
            <person name="Chou D.H."/>
            <person name="Disotuar M.M."/>
            <person name="Smith N.A."/>
            <person name="Miller C."/>
            <person name="Erchegyi J."/>
            <person name="Rivier J.E."/>
            <person name="Olivera B.M."/>
            <person name="Forbes B.E."/>
            <person name="Smith B.J."/>
            <person name="Norton R.S."/>
            <person name="Safavi-Hemami H."/>
            <person name="Lawrence M.C."/>
        </authorList>
    </citation>
    <scope>SUBUNIT</scope>
</reference>
<reference key="61">
    <citation type="journal article" date="2023" name="Cell">
        <title>An enzyme that selectively S-nitrosylates proteins to regulate insulin signaling.</title>
        <authorList>
            <person name="Zhou H.L."/>
            <person name="Grimmett Z.W."/>
            <person name="Venetos N.M."/>
            <person name="Stomberski C.T."/>
            <person name="Qian Z."/>
            <person name="McLaughlin P.J."/>
            <person name="Bansal P.K."/>
            <person name="Zhang R."/>
            <person name="Reynolds J.D."/>
            <person name="Premont R.T."/>
            <person name="Stamler J.S."/>
        </authorList>
    </citation>
    <scope>S-NITROSYLATION AT CYS-1083</scope>
    <scope>MUTAGENESIS OF CYS-462; CYS-825; CYS-834 AND CYS-1083</scope>
</reference>
<reference key="62">
    <citation type="journal article" date="1994" name="Nature">
        <title>Crystal structure of the tyrosine kinase domain of the human insulin receptor.</title>
        <authorList>
            <person name="Hubbard S.R."/>
            <person name="Wei L."/>
            <person name="Ellis L."/>
            <person name="Hendrickson W.A."/>
        </authorList>
    </citation>
    <scope>X-RAY CRYSTALLOGRAPHY (2.1 ANGSTROMS) OF 1005-1310</scope>
</reference>
<reference key="63">
    <citation type="journal article" date="1997" name="EMBO J.">
        <title>Crystal structure of the activated insulin receptor tyrosine kinase in complex with peptide substrate and ATP analog.</title>
        <authorList>
            <person name="Hubbard S.R."/>
        </authorList>
    </citation>
    <scope>X-RAY CRYSTALLOGRAPHY (1.90 ANGSTROMS) OF 1005-1310 IN COMPLEX WITH ATP ANALOG AND IRS1 PEPTIDE</scope>
    <scope>CATALYTIC ACTIVITY</scope>
    <scope>ACTIVE SITE</scope>
    <scope>AUTOPHOSPHORYLATION</scope>
    <scope>PHOSPHORYLATION AT TYR-1185; TYR-1189 AND TYR-1190</scope>
</reference>
<reference key="64">
    <citation type="journal article" date="2001" name="J. Biol. Chem.">
        <title>Crystallographic and solution studies of an activation loop mutant of the insulin receptor tyrosine kinase: insights into kinase mechanism.</title>
        <authorList>
            <person name="Till J.H."/>
            <person name="Ablooglu A.J."/>
            <person name="Frankel M."/>
            <person name="Bishop S.M."/>
            <person name="Kohanski R.A."/>
            <person name="Hubbard S.R."/>
        </authorList>
    </citation>
    <scope>X-RAY CRYSTALLOGRAPHY (2.40 ANGSTROMS) OF 1005-1310 IN COMPLEX WITH ATP ANALOG</scope>
    <scope>CATALYTIC ACTIVITY</scope>
</reference>
<reference key="65">
    <citation type="journal article" date="2003" name="J. Biol. Chem.">
        <title>Structural and biochemical evidence for an autoinhibitory role for tyrosine 984 in the juxtamembrane region of the insulin receptor.</title>
        <authorList>
            <person name="Li S."/>
            <person name="Covino N.D."/>
            <person name="Stein E.G."/>
            <person name="Till J.H."/>
            <person name="Hubbard S.R."/>
        </authorList>
    </citation>
    <scope>X-RAY CRYSTALLOGRAPHY (1.90 ANGSTROMS) OF 1005-1298 OF MUTANT ASN-1159</scope>
    <scope>CATALYTIC ACTIVITY</scope>
    <scope>AUTOPHOSPHORYLATION</scope>
    <scope>MUTAGENESIS OF TYR-1011</scope>
</reference>
<reference key="66">
    <citation type="journal article" date="2003" name="Mol. Cell">
        <title>Structural basis for recruitment of the adaptor protein APS to the activated insulin receptor.</title>
        <authorList>
            <person name="Hu J."/>
            <person name="Liu J."/>
            <person name="Ghirlando R."/>
            <person name="Saltiel A.R."/>
            <person name="Hubbard S.R."/>
        </authorList>
    </citation>
    <scope>X-RAY CRYSTALLOGRAPHY (2.3 ANGSTROMS) OF 1005-1310 IN COMPLEX WITH ATP ANALOG AND SH2B2</scope>
    <scope>PHOSPHORYLATION AT TYR-1185; TYR-1189 AND TYR-1190</scope>
</reference>
<reference key="67">
    <citation type="journal article" date="2005" name="Mol. Cell">
        <title>Structural basis for inhibition of the insulin receptor by the adaptor protein Grb14.</title>
        <authorList>
            <person name="Depetris R.S."/>
            <person name="Hu J."/>
            <person name="Gimpelevich I."/>
            <person name="Holt L.J."/>
            <person name="Daly R.J."/>
            <person name="Hubbard S.R."/>
        </authorList>
    </citation>
    <scope>X-RAY CRYSTALLOGRAPHY (3.20 ANGSTROMS) OF 1005-1310 IN COMPLEX WITH GRB14</scope>
    <scope>INTERACTION WITH GRB14</scope>
    <scope>AUTOPHOSPHORYLATION</scope>
    <scope>PHOSPHORYLATION AT TYR-1185; TYR-1189 AND TYR-1190</scope>
</reference>
<reference key="68">
    <citation type="journal article" date="2005" name="Structure">
        <title>Crystal structure of a complex between protein tyrosine phosphatase 1B and the insulin receptor tyrosine kinase.</title>
        <authorList>
            <person name="Li S."/>
            <person name="Depetris R.S."/>
            <person name="Barford D."/>
            <person name="Chernoff J."/>
            <person name="Hubbard S.R."/>
        </authorList>
    </citation>
    <scope>X-RAY CRYSTALLOGRAPHY (2.30 ANGSTROMS) OF 1005-1310 IN COMPLEX WITH PTPN1</scope>
    <scope>PHOSPHORYLATION AT TYR-1185; TYR-1189 AND TYR-1190</scope>
</reference>
<reference key="69">
    <citation type="journal article" date="2006" name="Nature">
        <title>Structure of the insulin receptor ectodomain reveals a folded-over conformation.</title>
        <authorList>
            <person name="McKern N.M."/>
            <person name="Lawrence M.C."/>
            <person name="Streltsov V.A."/>
            <person name="Lou M.Z."/>
            <person name="Adams T.E."/>
            <person name="Lovrecz G.O."/>
            <person name="Elleman T.C."/>
            <person name="Richards K.M."/>
            <person name="Bentley J.D."/>
            <person name="Pilling P.A."/>
            <person name="Hoyne P.A."/>
            <person name="Cartledge K.A."/>
            <person name="Pham T.M."/>
            <person name="Lewis J.L."/>
            <person name="Sankovich S.E."/>
            <person name="Stoichevska V."/>
            <person name="Da Silva E."/>
            <person name="Robinson C.P."/>
            <person name="Frenkel M.J."/>
            <person name="Sparrow L.G."/>
            <person name="Fernley R.T."/>
            <person name="Epa V.C."/>
            <person name="Ward C.W."/>
        </authorList>
    </citation>
    <scope>X-RAY CRYSTALLOGRAPHY (3.8 ANGSTROMS) OF 28-943 IN COMPLEX WITH INSULIN ANALOG</scope>
    <scope>DOMAIN</scope>
    <scope>DISULFIDE BONDS</scope>
</reference>
<reference key="70">
    <citation type="journal article" date="2006" name="Proc. Natl. Acad. Sci. U.S.A.">
        <title>The first three domains of the insulin receptor differ structurally from the insulin-like growth factor 1 receptor in the regions governing ligand specificity.</title>
        <authorList>
            <person name="Lou M."/>
            <person name="Garrett T.P."/>
            <person name="McKern N.M."/>
            <person name="Hoyne P.A."/>
            <person name="Epa V.C."/>
            <person name="Bentley J.D."/>
            <person name="Lovrecz G.O."/>
            <person name="Cosgrove L.J."/>
            <person name="Frenkel M.J."/>
            <person name="Ward C.W."/>
        </authorList>
    </citation>
    <scope>X-RAY CRYSTALLOGRAPHY (2.32 ANGSTROMS) OF 28-512</scope>
    <scope>GLYCOSYLATION AT ASN-43; ASN-52; ASN-138; ASN-242; ASN-282; ASN-364; ASN-424 AND ASN-445</scope>
    <scope>DISULFIDE BONDS</scope>
</reference>
<reference key="71">
    <citation type="journal article" date="2008" name="Nat. Struct. Mol. Biol.">
        <title>Structural and biochemical characterization of the KRLB region in insulin receptor substrate-2.</title>
        <authorList>
            <person name="Wu J."/>
            <person name="Tseng Y.D."/>
            <person name="Xu C.F."/>
            <person name="Neubert T.A."/>
            <person name="White M.F."/>
            <person name="Hubbard S.R."/>
        </authorList>
    </citation>
    <scope>X-RAY CRYSTALLOGRAPHY (1.65 ANGSTROMS) OF 1005-1310 IN COMPLEX WITH ATP AND IRS2</scope>
    <scope>CATALYTIC ACTIVITY</scope>
    <scope>PHOSPHORYLATION AT TYR-1185; TYR-1189 AND TYR-1190</scope>
    <scope>INTERACTION WITH IRS2</scope>
</reference>
<reference key="72">
    <citation type="journal article" date="2008" name="Proteins">
        <title>Identification of a key element for hydrogen-bonding patterns between protein kinases and their inhibitors.</title>
        <authorList>
            <person name="Katayama N."/>
            <person name="Orita M."/>
            <person name="Yamaguchi T."/>
            <person name="Hisamichi H."/>
            <person name="Kuromitsu S."/>
            <person name="Kurihara H."/>
            <person name="Sakashita H."/>
            <person name="Matsumoto Y."/>
            <person name="Fujita S."/>
            <person name="Niimi T."/>
        </authorList>
    </citation>
    <scope>X-RAY CRYSTALLOGRAPHY (3.25 ANGSTROMS) OF 1009-1310 IN COMPLEX WITH INHIBITORY PEPTIDE</scope>
    <scope>PHOSPHORYLATION AT TYR-1185; TYR-1189 AND TYR-1190</scope>
</reference>
<reference key="73">
    <citation type="journal article" date="2009" name="Bioorg. Med. Chem. Lett.">
        <title>Optimization of 4,6-bis-anilino-1H-pyrrolo[2,3-d]pyrimidine IGF-1R tyrosine kinase inhibitors towards JNK selectivity.</title>
        <authorList>
            <person name="Chamberlain S.D."/>
            <person name="Redman A.M."/>
            <person name="Wilson J.W."/>
            <person name="Deanda F."/>
            <person name="Shotwell J.B."/>
            <person name="Gerding R."/>
            <person name="Lei H."/>
            <person name="Yang B."/>
            <person name="Stevens K.L."/>
            <person name="Hassell A.M."/>
            <person name="Shewchuk L.M."/>
            <person name="Leesnitzer M.A."/>
            <person name="Smith J.L."/>
            <person name="Sabbatini P."/>
            <person name="Atkins C."/>
            <person name="Groy A."/>
            <person name="Rowand J.L."/>
            <person name="Kumar R."/>
            <person name="Mook R.A. Jr."/>
            <person name="Moorthy G."/>
            <person name="Patnaik S."/>
        </authorList>
    </citation>
    <scope>X-RAY CRYSTALLOGRAPHY (2.20 ANGSTROMS) OF 1005-1310 IN COMPLEX WITH SYNTHETIC INHIBITOR</scope>
    <scope>CATALYTIC ACTIVITY</scope>
</reference>
<reference key="74">
    <citation type="journal article" date="2009" name="Bioorg. Med. Chem. Lett.">
        <title>Discovery of 4,6-bis-anilino-1H-pyrrolo[2,3-d]pyrimidines: potent inhibitors of the IGF-1R receptor tyrosine kinase.</title>
        <authorList>
            <person name="Chamberlain S.D."/>
            <person name="Wilson J.W."/>
            <person name="Deanda F."/>
            <person name="Patnaik S."/>
            <person name="Redman A.M."/>
            <person name="Yang B."/>
            <person name="Shewchuk L."/>
            <person name="Sabbatini P."/>
            <person name="Leesnitzer M.A."/>
            <person name="Groy A."/>
            <person name="Atkins C."/>
            <person name="Gerding R."/>
            <person name="Hassell A.M."/>
            <person name="Lei H."/>
            <person name="Mook R.A. Jr."/>
            <person name="Moorthy G."/>
            <person name="Rowand J.L."/>
            <person name="Stevens K.L."/>
            <person name="Kumar R."/>
            <person name="Shotwell J.B."/>
        </authorList>
    </citation>
    <scope>X-RAY CRYSTALLOGRAPHY (2.1 ANGSTROMS) OF 1005-1310 IN COMPLEX WITH SYNTHETIC INHIBITOR</scope>
    <scope>CATALYTIC ACTIVITY</scope>
</reference>
<reference key="75">
    <citation type="journal article" date="2009" name="Bioorg. Med. Chem. Lett.">
        <title>Discovery of 3,5-disubstituted-1H-pyrrolo[2,3-b]pyridines as potent inhibitors of the insulin-like growth factor-1 receptor (IGF-1R) tyrosine kinase.</title>
        <authorList>
            <person name="Patnaik S."/>
            <person name="Stevens K.L."/>
            <person name="Gerding R."/>
            <person name="Deanda F."/>
            <person name="Shotwell J.B."/>
            <person name="Tang J."/>
            <person name="Hamajima T."/>
            <person name="Nakamura H."/>
            <person name="Leesnitzer M.A."/>
            <person name="Hassell A.M."/>
            <person name="Shewchuck L.M."/>
            <person name="Kumar R."/>
            <person name="Lei H."/>
            <person name="Chamberlain S.D."/>
        </authorList>
    </citation>
    <scope>X-RAY CRYSTALLOGRAPHY (2.60 ANGSTROMS) OF 1017-1322 IN COMPLEX WITH SYNTHETIC INHIBITOR</scope>
    <scope>CATALYTIC ACTIVITY</scope>
</reference>
<reference key="76">
    <citation type="journal article" date="2010" name="Proc. Natl. Acad. Sci. U.S.A.">
        <title>Structural resolution of a tandem hormone-binding element in the insulin receptor and its implications for design of peptide agonists.</title>
        <authorList>
            <person name="Smith B.J."/>
            <person name="Huang K."/>
            <person name="Kong G."/>
            <person name="Chan S.J."/>
            <person name="Nakagawa S."/>
            <person name="Menting J.G."/>
            <person name="Hu S.Q."/>
            <person name="Whittaker J."/>
            <person name="Steiner D.F."/>
            <person name="Katsoyannis P.G."/>
            <person name="Ward C.W."/>
            <person name="Weiss M.A."/>
            <person name="Lawrence M.C."/>
        </authorList>
    </citation>
    <scope>X-RAY CRYSTALLOGRAPHY (3.80 ANGSTROMS) OF 28-956</scope>
    <scope>INSULIN-BINDING REGION</scope>
    <scope>DISULFIDE BONDS</scope>
</reference>
<reference key="77">
    <citation type="journal article" date="2013" name="Nature">
        <title>How insulin engages its primary binding site on the insulin receptor.</title>
        <authorList>
            <person name="Menting J.G."/>
            <person name="Whittaker J."/>
            <person name="Margetts M.B."/>
            <person name="Whittaker L.J."/>
            <person name="Kong G.K."/>
            <person name="Smith B.J."/>
            <person name="Watson C.J."/>
            <person name="Zakova L."/>
            <person name="Kletvikova E."/>
            <person name="Jiracek J."/>
            <person name="Chan S.J."/>
            <person name="Steiner D.F."/>
            <person name="Dodson G.G."/>
            <person name="Brzozowski A.M."/>
            <person name="Weiss M.A."/>
            <person name="Ward C.W."/>
            <person name="Lawrence M.C."/>
        </authorList>
    </citation>
    <scope>X-RAY CRYSTALLOGRAPHY (3.9 ANGSTROMS) OF 28-620 IN COMPLEX WITH INSULIN</scope>
    <scope>DOMAIN</scope>
    <scope>GLYCOSYLATION AT ASN-43; ASN-52; ASN-138; ASN-242 AND ASN-282</scope>
    <scope>DISULFIDE BONDS</scope>
</reference>
<reference key="78">
    <citation type="journal article" date="1988" name="Science">
        <title>Insulin-resistant diabetes due to a point mutation that prevents insulin proreceptor processing.</title>
        <authorList>
            <person name="Yoshimasa Y."/>
            <person name="Seino S."/>
            <person name="Whittaker J."/>
            <person name="Kakehi T."/>
            <person name="Kosaki A."/>
            <person name="Kuzuya H."/>
            <person name="Imura H."/>
            <person name="Bell G.I."/>
            <person name="Steiner D.F."/>
        </authorList>
    </citation>
    <scope>VARIANT IRAN TYPE A SER-762</scope>
</reference>
<reference key="79">
    <citation type="journal article" date="1988" name="Science">
        <title>Two mutant alleles of the insulin receptor gene in a patient with extreme insulin resistance.</title>
        <authorList>
            <person name="Kadowaki T."/>
            <person name="Bevins C."/>
            <person name="Cama A."/>
            <person name="Ojamaa K."/>
            <person name="Marcus-Samuels B."/>
            <person name="Kadowaki H."/>
            <person name="Beitz L."/>
            <person name="McKeon C."/>
            <person name="Taylor S.I."/>
        </authorList>
    </citation>
    <scope>VARIANT LEPRCH GLU-487</scope>
</reference>
<reference key="80">
    <citation type="journal article" date="1989" name="EMBO J.">
        <title>A leucine-to-proline mutation in the insulin receptor in a family with insulin resistance.</title>
        <authorList>
            <person name="Klinkhamer M.P."/>
            <person name="Groen N.A."/>
            <person name="van der Zon G.C.M."/>
            <person name="Lindhout D."/>
            <person name="Sandkuyl L.A."/>
            <person name="Krans H.M.J."/>
            <person name="Moeller W."/>
            <person name="Maassen J.A."/>
        </authorList>
    </citation>
    <scope>VARIANT LEPRCH PRO-260</scope>
</reference>
<reference key="81">
    <citation type="journal article" date="1989" name="Science">
        <title>Human diabetes associated with a mutation in the tyrosine kinase domain of the insulin receptor.</title>
        <authorList>
            <person name="Odawara M."/>
            <person name="Kadowaki T."/>
            <person name="Yamamoto R."/>
            <person name="Shibasaki Y."/>
            <person name="Tobe K."/>
            <person name="Accili D."/>
            <person name="Bevins C."/>
            <person name="Mikami Y."/>
            <person name="Matsuura N."/>
            <person name="Akanuma Y."/>
            <person name="Takaku F."/>
            <person name="Taylor S.I."/>
            <person name="Kasuga M."/>
        </authorList>
    </citation>
    <scope>VARIANT IRAN TYPE A VAL-1035</scope>
</reference>
<reference key="82">
    <citation type="journal article" date="1990" name="J. Biol. Chem.">
        <title>A naturally occurring mutation of insulin receptor alanine 1134 impairs tyrosine kinase function and is associated with dominantly inherited insulin resistance.</title>
        <authorList>
            <person name="Moller D.E."/>
            <person name="Yokota A."/>
            <person name="White M.F."/>
            <person name="Pazianos A.G."/>
            <person name="Flier J.S."/>
        </authorList>
    </citation>
    <scope>VARIANT IRAN TYPE A THR-1161</scope>
</reference>
<reference key="83">
    <citation type="journal article" date="1990" name="J. Biol. Chem.">
        <title>Substitution of lysine for asparagine at position 15 in the alpha-subunit of the human insulin receptor. A mutation that impairs transport of receptors to the cell surface and decreases the affinity of insulin binding.</title>
        <authorList>
            <person name="Kadowaki T."/>
            <person name="Kadowaki H."/>
            <person name="Accili D."/>
            <person name="Taylor S.I."/>
        </authorList>
    </citation>
    <scope>CHARACTERIZATION OF VARIANT RMS LYS-42</scope>
</reference>
<reference key="84">
    <citation type="journal article" date="1990" name="J. Clin. Invest.">
        <title>Five mutant alleles of the insulin receptor gene in patients with genetic forms of insulin resistance.</title>
        <authorList>
            <person name="Kadowaki T."/>
            <person name="Kadowaki H."/>
            <person name="Rechler M.M."/>
            <person name="Serrano-Rios M."/>
            <person name="Roth J."/>
            <person name="Gorden P."/>
            <person name="Taylor S.I."/>
        </authorList>
    </citation>
    <scope>VARIANT RMS LYS-42</scope>
    <scope>VARIANT LEPRCH ARG-236</scope>
    <scope>VARIANT IRAN TYPE A SER-489</scope>
</reference>
<reference key="85">
    <citation type="journal article" date="1990" name="Mol. Endocrinol.">
        <title>Functional properties of a naturally occurring Trp1200--&gt;Ser1200 mutation of the insulin receptor.</title>
        <authorList>
            <person name="Moller D.E."/>
            <person name="Yokota A."/>
            <person name="Ginsberg-Fellner F."/>
            <person name="Flier J.S."/>
        </authorList>
    </citation>
    <scope>VARIANT IRAN TYPE A SER-1227</scope>
</reference>
<reference key="86">
    <citation type="journal article" date="1991" name="Diabetes">
        <title>Detection of mutations in insulin-receptor gene in NIDDM patients by analysis of single-stranded conformation polymorphisms.</title>
        <authorList>
            <person name="O'Rahilly S."/>
            <person name="Choi W.H."/>
            <person name="Patel P."/>
            <person name="Turner R.C."/>
            <person name="Flier J.S."/>
            <person name="Moller D.E."/>
        </authorList>
    </citation>
    <scope>VARIANT GLU-1095</scope>
</reference>
<reference key="87">
    <citation type="journal article" date="1991" name="J. Biol. Chem.">
        <title>Insulin resistance and diabetes due to different mutations in the tyrosine kinase domain of both insulin receptor gene alleles.</title>
        <authorList>
            <person name="Kusari J."/>
            <person name="Takata Y."/>
            <person name="Hatada E."/>
            <person name="Freidenberg G."/>
            <person name="Kolterman O."/>
            <person name="Olefsky J.M."/>
        </authorList>
    </citation>
    <scope>VARIANT IRAN TYPE A GLN-1020</scope>
</reference>
<reference key="88">
    <citation type="journal article" date="1991" name="J. Clin. Endocrinol. Metab.">
        <title>A mutation in the tyrosine kinase domain of the insulin receptor associated with insulin resistance in an obese woman.</title>
        <authorList>
            <person name="Cama A."/>
            <person name="de la Luz Sierra M."/>
            <person name="Ottini L."/>
            <person name="Kadowaki T."/>
            <person name="Gorden P."/>
            <person name="Imperato-Mcginley J."/>
            <person name="Taylor S.I."/>
        </authorList>
    </citation>
    <scope>VARIANT INS RESISTANCE ILE-1180</scope>
</reference>
<reference key="89">
    <citation type="journal article" date="1992" name="Diabetes">
        <title>Detection of mutations in insulin receptor gene by denaturing gradient gel electrophoresis.</title>
        <authorList>
            <person name="Barbetti F."/>
            <person name="Gejman P.V."/>
            <person name="Taylor S.I."/>
            <person name="Raben N."/>
            <person name="Cama A."/>
            <person name="Bonora E."/>
            <person name="Pizzo P."/>
            <person name="Moghetti P."/>
            <person name="Muggeo M."/>
            <person name="Roth J."/>
        </authorList>
    </citation>
    <scope>VARIANTS LEPRCH ALA-55 AND ARG-393</scope>
</reference>
<reference key="90">
    <citation type="journal article" date="1992" name="Diabetes">
        <title>NIDDM associated with mutation in tyrosine kinase domain of insulin receptor gene.</title>
        <authorList>
            <person name="Cocozza S."/>
            <person name="Porcellini A."/>
            <person name="Riccardi G."/>
            <person name="Monticelli A."/>
            <person name="Condorelli G."/>
            <person name="Ferrara A."/>
            <person name="Pianese L."/>
            <person name="Miele C."/>
            <person name="Capaldo B."/>
            <person name="Beguinot F."/>
            <person name="Varrone S."/>
        </authorList>
    </citation>
    <scope>VARIANT T2D GLN-1191</scope>
</reference>
<reference key="91">
    <citation type="journal article" date="1992" name="Diabetologia">
        <title>Detection of mutations in the insulin receptor gene in patients with insulin resistance by analysis of single-stranded conformational polymorphisms.</title>
        <authorList>
            <person name="Kim H."/>
            <person name="Kadowaki H."/>
            <person name="Sakura H."/>
            <person name="Odawara M."/>
            <person name="Momomura K."/>
            <person name="Takahashi Y."/>
            <person name="Miyazaki Y."/>
            <person name="Ohtani T."/>
            <person name="Akanuma Y."/>
            <person name="Yazaki Y."/>
            <person name="Kasuga M."/>
            <person name="Taylor S.I."/>
            <person name="Kadowaki T."/>
        </authorList>
    </citation>
    <scope>VARIANT IRAN TYPE A LEU-1205</scope>
</reference>
<reference key="92">
    <citation type="journal article" date="1992" name="J. Biol. Chem.">
        <title>An Arg for Gly substitution at position 31 in the insulin receptor, linked to insulin resistance, inhibits receptor processing and transport.</title>
        <authorList>
            <person name="van der Vorm E.R."/>
            <person name="van der Zon G.C.M."/>
            <person name="Moeller W."/>
            <person name="Krans H.M.J."/>
            <person name="Lindhout D."/>
            <person name="Maassen J.A."/>
        </authorList>
    </citation>
    <scope>VARIANT LEPRCH ARG-58</scope>
</reference>
<reference key="93">
    <citation type="journal article" date="1992" name="Nihon Geka Gakkai Zasshi">
        <title>Insulin receptor Arg1131--&gt;Gln: a novel mutation in the catalytic loop of insulin receptor observed in insulin resistant diabetes.</title>
        <authorList>
            <person name="Kasuga M."/>
            <person name="Kishimoto M."/>
            <person name="Hashiramoto M."/>
            <person name="Yonezawa K."/>
            <person name="Kazumi T."/>
            <person name="Hagino H."/>
            <person name="Shii K."/>
        </authorList>
    </citation>
    <scope>VARIANT T2D GLN-1158</scope>
</reference>
<reference key="94">
    <citation type="journal article" date="1993" name="Diabetes">
        <title>Methionine for valine substitution in exon 17 of the insulin receptor gene in a pedigree with familial NIDDM.</title>
        <authorList>
            <person name="Elbein S.C."/>
            <person name="Sorensen L.K."/>
            <person name="Schumacher M.C."/>
        </authorList>
    </citation>
    <scope>VARIANT MET-1012</scope>
</reference>
<reference key="95">
    <citation type="journal article" date="1993" name="Diabetes">
        <title>Ala1048--&gt;Asp mutation in the kinase domain of insulin receptor causes defective kinase activity and insulin resistance.</title>
        <authorList>
            <person name="Haruta T."/>
            <person name="Takata Y."/>
            <person name="Iwanishi M."/>
            <person name="Maegawa H."/>
            <person name="Imamura T."/>
            <person name="Egawa K."/>
            <person name="Itazu T."/>
            <person name="Kobayashi M."/>
        </authorList>
    </citation>
    <scope>VARIANT IRAN TYPE A ASP-1075</scope>
</reference>
<reference key="96">
    <citation type="journal article" date="1993" name="Diabetologia">
        <title>Patients with lipodystrophic diabetes mellitus of the Seip-Berardinelli type, express normal insulin receptors.</title>
        <authorList>
            <person name="van der Vorm E.R."/>
            <person name="Kuipers A."/>
            <person name="Bonenkamp J.W."/>
            <person name="Kleijer W.J."/>
            <person name="van Maldergem L."/>
            <person name="Herwig J."/>
            <person name="Maassen J.A."/>
        </authorList>
    </citation>
    <scope>VARIANT MET-1012</scope>
</reference>
<reference key="97">
    <citation type="journal article" date="1993" name="Diabetologia">
        <title>A mutation (Trp1193--&gt;Leu1193) in the tyrosine kinase domain of the insulin receptor associated with type A syndrome of insulin resistance.</title>
        <authorList>
            <person name="Iwanishi M."/>
            <person name="Haruta T."/>
            <person name="Takata Y."/>
            <person name="Ishibashi O."/>
            <person name="Sasaoka T."/>
            <person name="Egawa K."/>
            <person name="Imamura T."/>
            <person name="Naitou K."/>
            <person name="Itazu T."/>
            <person name="Kobayashi M."/>
        </authorList>
    </citation>
    <scope>VARIANT INS RESISTANCE LEU-1220</scope>
</reference>
<reference key="98">
    <citation type="journal article" date="1993" name="Hum. Mol. Genet.">
        <title>Substitution of Leu for Pro-193 in the insulin receptor in a patient with a genetic form of severe insulin resistance.</title>
        <authorList>
            <person name="Carrera P."/>
            <person name="Cordera R."/>
            <person name="Ferrari M."/>
            <person name="Cremonesi L."/>
            <person name="Taramelli R."/>
            <person name="Andraghetti G."/>
            <person name="Carducci C."/>
            <person name="Dozio N."/>
            <person name="Pozza G."/>
            <person name="Taylor S.I."/>
            <person name="Micossi P."/>
            <person name="Barbetti F."/>
        </authorList>
    </citation>
    <scope>VARIANT INS RESISTANCE LEU-220</scope>
</reference>
<reference key="99">
    <citation type="journal article" date="1993" name="J. Biol. Chem.">
        <title>Substitution of glutamic acid for alanine 1135 in the putative 'catalytic loop' of the tyrosine kinase domain of the human insulin receptor. A mutation that impairs proteolytic processing into subunits and inhibits receptor tyrosine kinase activity.</title>
        <authorList>
            <person name="Cama A."/>
            <person name="de la Luz Sierra M."/>
            <person name="Quon M.J."/>
            <person name="Ottini L."/>
            <person name="Gorden P."/>
            <person name="Taylor S.I."/>
        </authorList>
    </citation>
    <scope>CHARACTERIZATION OF VARIANT IRAN TYPE A GLU-1162</scope>
</reference>
<reference key="100">
    <citation type="journal article" date="1993" name="J. Biol. Chem.">
        <title>Antibodies to the extracellular receptor domain restore the hormone-insensitive kinase and conformation of the mutant insulin receptor valine 382.</title>
        <authorList>
            <person name="Lebrun C."/>
            <person name="Baron V."/>
            <person name="Kaliman P."/>
            <person name="Gautier N."/>
            <person name="Dolais-Kitabgi J."/>
            <person name="Taylor S.I."/>
            <person name="Accili D."/>
            <person name="van Obberghen E."/>
        </authorList>
    </citation>
    <scope>VARIANT IRAN TYPE A VAL-409</scope>
</reference>
<reference key="101">
    <citation type="journal article" date="1993" name="J. Med. Genet.">
        <title>A syndrome of insulin resistance resembling leprechaunism in five sibs of consanguineous parents.</title>
        <authorList>
            <person name="Al-Gazali L.I."/>
            <person name="Khalil M."/>
            <person name="Devadas K."/>
        </authorList>
    </citation>
    <scope>VARIANT LEPRCH MET-146</scope>
</reference>
<reference key="102">
    <citation type="journal article" date="1993" name="Proc. Natl. Acad. Sci. U.S.A.">
        <title>Activation of glucose transport by a natural mutation in the human insulin receptor.</title>
        <authorList>
            <person name="Longo N."/>
            <person name="Langley S.D."/>
            <person name="Griffin L.D."/>
            <person name="Elsas L.J."/>
        </authorList>
    </citation>
    <scope>VARIANT LEPRCH PRO-113</scope>
</reference>
<reference key="103">
    <citation type="journal article" date="1994" name="Diabetes">
        <title>Prevalence of mutations in the insulin receptor gene in subjects with features of the type A syndrome of insulin resistance.</title>
        <authorList>
            <person name="Moller D.E."/>
            <person name="Cohen O."/>
            <person name="Yamaguchi Y."/>
            <person name="Assiz R."/>
            <person name="Grigorescu F."/>
            <person name="Eberle A."/>
            <person name="Morrow L.A."/>
            <person name="Moses A.C."/>
            <person name="Flier J.S."/>
        </authorList>
    </citation>
    <scope>VARIANT IRAN TYPE A GLN-1201</scope>
</reference>
<reference key="104">
    <citation type="journal article" date="1994" name="Diabetes">
        <title>Molecular scanning of the insulin receptor gene in syndromes of insulin resistance.</title>
        <authorList>
            <person name="Krook A."/>
            <person name="Kumar S."/>
            <person name="Laing I."/>
            <person name="Boulton A.J."/>
            <person name="Wass J.A."/>
            <person name="O'Rahilly S."/>
        </authorList>
    </citation>
    <scope>VARIANT RMS SYNDROME LEU-350</scope>
    <scope>VARIANTS IRAN TYPE A LEU-1205 AND GLN-1378</scope>
    <scope>VARIANT MET-1012</scope>
</reference>
<reference key="105">
    <citation type="journal article" date="1994" name="FEBS Lett.">
        <title>Functional properties of a heterozygous mutation (Arg1174--&gt;Gln) in the tyrosine kinase domain of the insulin receptor from a type A insulin resistant patient.</title>
        <authorList>
            <person name="Moritz W."/>
            <person name="Froesch E.R."/>
            <person name="Boeni-Schnetzler M."/>
        </authorList>
    </citation>
    <scope>CHARACTERIZATION OF VARIANT IRAN TYPE A GLN-1201</scope>
</reference>
<reference key="106">
    <citation type="journal article" date="1994" name="J. Biol. Chem.">
        <title>A mutation in the insulin receptor that impairs proreceptor processing but not insulin binding.</title>
        <authorList>
            <person name="van der Vorm E.R."/>
            <person name="Kuipers A."/>
            <person name="Kielkopf-Renner S."/>
            <person name="Krans H.M.J."/>
            <person name="Moller W."/>
            <person name="Maassen J.A."/>
        </authorList>
    </citation>
    <scope>VARIANT LEPRCH SER-439</scope>
</reference>
<reference key="107">
    <citation type="journal article" date="1994" name="J. Biol. Chem.">
        <title>Two naturally occurring mutations in the kinase domain of insulin receptor accelerate degradation of the insulin receptor and impair the kinase activity.</title>
        <authorList>
            <person name="Imamura T."/>
            <person name="Takata Y."/>
            <person name="Sasaoka T."/>
            <person name="Takada Y."/>
            <person name="Morioka H."/>
            <person name="Haruta T."/>
            <person name="Sawa T."/>
            <person name="Iwanishi M."/>
            <person name="Hu Y.G."/>
            <person name="Suzuki Y."/>
            <person name="Hamada J."/>
            <person name="Kobayashi M."/>
        </authorList>
    </citation>
    <scope>CHARACTERIZATION OF VARIANTS IRAN TYPE A ASP-1206 AND LEU-1220</scope>
</reference>
<reference key="108">
    <citation type="journal article" date="1994" name="J. Med. Genet.">
        <title>Homozygosity for a new mutation (Ile119--&gt;Met) in the insulin receptor gene in five sibs with familial insulin resistance.</title>
        <authorList>
            <person name="Hone J."/>
            <person name="Accili D."/>
            <person name="al-Gazali L.I."/>
            <person name="Lestringant G."/>
            <person name="Orban T."/>
            <person name="Taylor S.I."/>
        </authorList>
    </citation>
    <scope>VARIANT LEPRCH MET-146</scope>
</reference>
<reference key="109">
    <citation type="journal article" date="1995" name="Diabetes">
        <title>Frequency of mutations of insulin receptor gene in Japanese patients with NIDDM.</title>
        <authorList>
            <person name="Kan M."/>
            <person name="Kanai F."/>
            <person name="Iida M."/>
            <person name="Jinnouchi H."/>
            <person name="Todaka M."/>
            <person name="Imanaka T."/>
            <person name="Ito K."/>
            <person name="Nishioka Y."/>
            <person name="Ohnishi T."/>
            <person name="Kamohara S."/>
            <person name="Hayashi H."/>
            <person name="Murakami T."/>
            <person name="Kagawa S."/>
            <person name="Sano H."/>
            <person name="Hashimoto N."/>
            <person name="Yoshida S."/>
            <person name="Makino H."/>
            <person name="Ebina Y."/>
        </authorList>
    </citation>
    <scope>VARIANT T2D ALA-858</scope>
    <scope>VARIANT CYS-1361</scope>
</reference>
<reference key="110">
    <citation type="journal article" date="1995" name="J. Clin. Endocrinol. Metab.">
        <title>Two mutations in the insulin receptor gene of a patient with leprechaunism: application to prenatal diagnosis.</title>
        <authorList>
            <person name="Longo N."/>
            <person name="Langley S.D."/>
            <person name="Griffin L.D."/>
            <person name="Elsas L.J."/>
        </authorList>
    </citation>
    <scope>VARIANT LEPRCH ASN-308 DEL</scope>
</reference>
<reference key="111">
    <citation type="journal article" date="1996" name="Eur. J. Endocrinol.">
        <title>In-frame exon 2 deletion in insulin receptor RNA in a family with extreme insulin resistance in association with defective insulin binding: a case report.</title>
        <authorList>
            <person name="Moritz W."/>
            <person name="Boeni-Schnetzler M."/>
            <person name="Stevens W."/>
            <person name="Froesch E.R."/>
            <person name="Levy J.R."/>
        </authorList>
    </citation>
    <scope>VARIANT PHE-1023</scope>
</reference>
<reference key="112">
    <citation type="journal article" date="1996" name="J. Clin. Endocrinol. Metab.">
        <title>Deletion of Asn281 in the alpha-subunit of the human insulin receptor causes constitutive activation of the receptor and insulin desensitization.</title>
        <authorList>
            <person name="Desbois-Mouthon C."/>
            <person name="Sert-Langeron C."/>
            <person name="Magre J."/>
            <person name="Oreal E."/>
            <person name="Blivet M.J."/>
            <person name="Flori E."/>
            <person name="Besmond C."/>
            <person name="Capeau J."/>
            <person name="Caron M."/>
        </authorList>
    </citation>
    <scope>VARIANT LEPRCH ASN-308 DEL</scope>
</reference>
<reference key="113">
    <citation type="journal article" date="1997" name="Am. J. Hum. Genet.">
        <title>The Val985Met insulin-receptor variant in the Danish Caucasian population: lack of associations with non-insulin-dependent diabetes mellitus or insulin resistance.</title>
        <authorList>
            <person name="Hansen L."/>
            <person name="Hansen T."/>
            <person name="Clausen J.O."/>
            <person name="Echwald S.M."/>
            <person name="Urhammer S.A."/>
            <person name="Rasmussen S.K."/>
            <person name="Pedersen O."/>
        </authorList>
    </citation>
    <scope>VARIANT MET-1012</scope>
</reference>
<reference key="114">
    <citation type="journal article" date="1997" name="Biochem. Biophys. Res. Commun.">
        <title>Identification of two novel insulin receptor mutations, Asp59Gly and Leu62Pro, in type A syndrome of extreme insulin resistance.</title>
        <authorList>
            <person name="Rouard M."/>
            <person name="Macari F."/>
            <person name="Bouix O."/>
            <person name="Lautier C."/>
            <person name="Brun J.F."/>
            <person name="Lefebvre P."/>
            <person name="Renard E."/>
            <person name="Bringer J."/>
            <person name="Jaffiol C."/>
            <person name="Grigorescu F."/>
        </authorList>
    </citation>
    <scope>VARIANTS IRAN TYPE A GLY-86 AND PRO-89</scope>
</reference>
<reference key="115">
    <citation type="journal article" date="1997" name="Biochem. Biophys. Res. Commun.">
        <title>Four mutant alleles of the insulin receptor gene associated with genetic syndromes of extreme insulin resistance.</title>
        <authorList>
            <person name="Kadowaki H."/>
            <person name="Takahashi Y."/>
            <person name="Ando A."/>
            <person name="Momomura K."/>
            <person name="Kaburagi Y."/>
            <person name="Quin J.D."/>
            <person name="MacCuish A.C."/>
            <person name="Koda N."/>
            <person name="Fukushima Y."/>
            <person name="Taylor S.I."/>
            <person name="Akanuma Y."/>
            <person name="Yazaki Y."/>
            <person name="Kadowaki T."/>
        </authorList>
    </citation>
    <scope>CHARACTERIZATION OF VARIANT LEPRCH MET-937</scope>
</reference>
<reference key="116">
    <citation type="journal article" date="1997" name="Prenat. Diagn.">
        <title>Molecular analysis of the insulin receptor gene for prenatal diagnosis of leprechaunism in two families.</title>
        <authorList>
            <person name="Desbois-Mouthon C."/>
            <person name="Girodon E."/>
            <person name="Ghanem N."/>
            <person name="Caron M."/>
            <person name="Pennerath A."/>
            <person name="Conteville P."/>
            <person name="Magre J."/>
            <person name="Besmond C."/>
            <person name="Goossens M."/>
            <person name="Capeau J."/>
            <person name="Amselem S."/>
        </authorList>
    </citation>
    <scope>VARIANTS LEPRCH TRP-1119 AND LYS-1206</scope>
</reference>
<reference key="117">
    <citation type="journal article" date="1998" name="Diabetes">
        <title>Multiple molecular mechanisms of insulin receptor dysfunction in a patient with Donohue syndrome.</title>
        <authorList>
            <person name="Whitehead J.P."/>
            <person name="Soos M.A."/>
            <person name="Jackson R."/>
            <person name="Tasic V."/>
            <person name="Kocova M."/>
            <person name="O'Rahilly S."/>
        </authorList>
    </citation>
    <scope>VARIANTS LEPRCH TYR-301 AND TRP-1201</scope>
</reference>
<reference key="118">
    <citation type="journal article" date="1999" name="J. Clin. Endocrinol. Metab.">
        <title>Progressive decline in insulin levels in Rabson-Mendenhall syndrome.</title>
        <authorList>
            <person name="Longo N."/>
            <person name="Wang Y."/>
            <person name="Pasquali M."/>
        </authorList>
    </citation>
    <scope>VARIANTS RMS THR-1143 AND TRP-1158</scope>
</reference>
<reference key="119">
    <citation type="journal article" date="2000" name="Clin. Genet.">
        <title>Identification of three novel mutations in the insulin receptor gene in type A insulin resistant patients.</title>
        <authorList>
            <person name="Rique S."/>
            <person name="Nogues C."/>
            <person name="Ibanez L."/>
            <person name="Marcos M.V."/>
            <person name="Ferragut J."/>
            <person name="Carrascosa A."/>
            <person name="Potau N."/>
        </authorList>
    </citation>
    <scope>VARIANTS IRAN TYPE A LEU-167 AND VAL-1055</scope>
</reference>
<reference key="120">
    <citation type="journal article" date="2001" name="Clin. Genet.">
        <title>Identification of novel C253Y missense and Y864X nonsense mutations in the insulin receptor gene in type A insulin-resistant patients.</title>
        <authorList>
            <person name="Osawa H."/>
            <person name="Nishimiya T."/>
            <person name="Ochi M."/>
            <person name="Niiya T."/>
            <person name="Onuma H."/>
            <person name="Kitamuro F."/>
            <person name="Kaino Y."/>
            <person name="Kida K."/>
            <person name="Makino H."/>
        </authorList>
    </citation>
    <scope>VARIANT IRAN TYPE A TYR-280</scope>
</reference>
<reference key="121">
    <citation type="journal article" date="2002" name="Diabetologia">
        <title>An arginine to cysteine(252) mutation in insulin receptors from a patient with severe insulin resistance inhibits receptor internalisation but preserves signalling events.</title>
        <authorList>
            <person name="Hamer I."/>
            <person name="Foti M."/>
            <person name="Emkey R."/>
            <person name="Cordier-Bussat M."/>
            <person name="Philippe J."/>
            <person name="De Meyts P."/>
            <person name="Maeder C."/>
            <person name="Kahn C.R."/>
            <person name="Carpentier J.-L."/>
        </authorList>
    </citation>
    <scope>VARIANT IRAN TYPE A CYS-279</scope>
</reference>
<reference key="122">
    <citation type="journal article" date="2002" name="Hum. Mol. Genet.">
        <title>Genotype-phenotype correlation in inherited severe insulin resistance.</title>
        <authorList>
            <person name="Longo N."/>
            <person name="Wang Y."/>
            <person name="Smith S.A."/>
            <person name="Langley S.D."/>
            <person name="DiMeglio L.A."/>
            <person name="Giannella-Neto D."/>
        </authorList>
    </citation>
    <scope>CHARACTERIZATION OF VARIANTS LEPRCH PRO-113; VAL-119; ASN-308 DEL; THR-925 AND TRP-926</scope>
    <scope>VARIANTS RMS THR-997; THR-1143; TRP-1158 AND TRP-1201</scope>
</reference>
<reference key="123">
    <citation type="journal article" date="2003" name="Endocrinology">
        <title>Deletion of V335 from the L2 domain of the insulin receptor results in a conformationally abnormal receptor that is unable to bind insulin and causes Donohue's syndrome in a human subject.</title>
        <authorList>
            <person name="George S."/>
            <person name="Johansen A."/>
            <person name="Soos M.A."/>
            <person name="Mortensen H."/>
            <person name="Gammeltoft S."/>
            <person name="Saudek V."/>
            <person name="Siddle K."/>
            <person name="Hansen L."/>
            <person name="O'Rahilly S."/>
        </authorList>
    </citation>
    <scope>VARIANT LEPRCH VAL-362 DEL</scope>
</reference>
<reference key="124">
    <citation type="journal article" date="2003" name="J. Clin. Endocrinol. Metab.">
        <title>Identification and functional assessment of novel and known insulin receptor mutations in five patients with syndromes of severe insulin resistance.</title>
        <authorList>
            <person name="Maassen J.A."/>
            <person name="Tobias E.S."/>
            <person name="Kayserilli H."/>
            <person name="Tukel T."/>
            <person name="Yuksel-Apak M."/>
            <person name="D'Haens E."/>
            <person name="Kleijer W.J."/>
            <person name="Fery F."/>
            <person name="van der Zon G.C.M."/>
        </authorList>
    </citation>
    <scope>VARIANT IRAN TYPE A HIS-279</scope>
    <scope>VARIANTS LEPRCH GLN-120; LEU-350; ASP-458 AND TRP-1119</scope>
    <scope>CHARACTERIZATION OF VARIANT IRAN TYPE A HIS-279</scope>
    <scope>CHARACTERIZATION OF VARIANTS LEPRCH GLN-120 AND ASP-458</scope>
</reference>
<reference key="125">
    <citation type="journal article" date="2004" name="Diabetes">
        <title>A novel syndrome of autosomal-dominant hyperinsulinemic hypoglycemia linked to a mutation in the human insulin receptor gene.</title>
        <authorList>
            <person name="Hoejlund K."/>
            <person name="Hansen T."/>
            <person name="Lajer M."/>
            <person name="Henriksen J.E."/>
            <person name="Levin K."/>
            <person name="Lindholm J."/>
            <person name="Pedersen O."/>
            <person name="Bech-Nielsen H."/>
        </authorList>
    </citation>
    <scope>VARIANT HHF5 GLN-1201</scope>
</reference>
<reference key="126">
    <citation type="journal article" date="2007" name="Clin. Endocrinol. (Oxf.)">
        <title>Functional characterization of a novel insulin receptor mutation contributing to Rabson-Mendenhall syndrome.</title>
        <authorList>
            <person name="Tuthill A."/>
            <person name="Semple R.K."/>
            <person name="Day R."/>
            <person name="Soos M.A."/>
            <person name="Sweeney E."/>
            <person name="Seymour P.J."/>
            <person name="Didi M."/>
            <person name="O'Rahilly S."/>
        </authorList>
    </citation>
    <scope>VARIANTS RMS ARG-236 AND SER-386</scope>
    <scope>CHARACTERIZATION OF VARIANTS RMS ARG-236 AND SER-386</scope>
</reference>
<reference key="127">
    <citation type="journal article" date="2007" name="Nature">
        <title>Patterns of somatic mutation in human cancer genomes.</title>
        <authorList>
            <person name="Greenman C."/>
            <person name="Stephens P."/>
            <person name="Smith R."/>
            <person name="Dalgliesh G.L."/>
            <person name="Hunter C."/>
            <person name="Bignell G."/>
            <person name="Davies H."/>
            <person name="Teague J."/>
            <person name="Butler A."/>
            <person name="Stevens C."/>
            <person name="Edkins S."/>
            <person name="O'Meara S."/>
            <person name="Vastrik I."/>
            <person name="Schmidt E.E."/>
            <person name="Avis T."/>
            <person name="Barthorpe S."/>
            <person name="Bhamra G."/>
            <person name="Buck G."/>
            <person name="Choudhury B."/>
            <person name="Clements J."/>
            <person name="Cole J."/>
            <person name="Dicks E."/>
            <person name="Forbes S."/>
            <person name="Gray K."/>
            <person name="Halliday K."/>
            <person name="Harrison R."/>
            <person name="Hills K."/>
            <person name="Hinton J."/>
            <person name="Jenkinson A."/>
            <person name="Jones D."/>
            <person name="Menzies A."/>
            <person name="Mironenko T."/>
            <person name="Perry J."/>
            <person name="Raine K."/>
            <person name="Richardson D."/>
            <person name="Shepherd R."/>
            <person name="Small A."/>
            <person name="Tofts C."/>
            <person name="Varian J."/>
            <person name="Webb T."/>
            <person name="West S."/>
            <person name="Widaa S."/>
            <person name="Yates A."/>
            <person name="Cahill D.P."/>
            <person name="Louis D.N."/>
            <person name="Goldstraw P."/>
            <person name="Nicholson A.G."/>
            <person name="Brasseur F."/>
            <person name="Looijenga L."/>
            <person name="Weber B.L."/>
            <person name="Chiew Y.-E."/>
            <person name="DeFazio A."/>
            <person name="Greaves M.F."/>
            <person name="Green A.R."/>
            <person name="Campbell P."/>
            <person name="Birney E."/>
            <person name="Easton D.F."/>
            <person name="Chenevix-Trench G."/>
            <person name="Tan M.-H."/>
            <person name="Khoo S.K."/>
            <person name="Teh B.T."/>
            <person name="Yuen S.T."/>
            <person name="Leung S.Y."/>
            <person name="Wooster R."/>
            <person name="Futreal P.A."/>
            <person name="Stratton M.R."/>
        </authorList>
    </citation>
    <scope>VARIANTS [LARGE SCALE ANALYSIS] ARG-228; ARG-695; SER-811; MET-1012; VAL-1065 AND ALA-1282</scope>
</reference>
<reference key="128">
    <citation type="journal article" date="2012" name="J. Pediatr. Endocrinol. Metab.">
        <title>A novel mutation of the insulin receptor gene in a preterm infant with Donohue syndrome and heart failure.</title>
        <authorList>
            <person name="Nobile S."/>
            <person name="Semple R.K."/>
            <person name="Carnielli V.P."/>
        </authorList>
    </citation>
    <scope>VARIANTS LEPRCH CYS-818 AND 890-ARG--SER-1382 DEL</scope>
</reference>
<reference key="129">
    <citation type="journal article" date="2014" name="Mol. Genet. Genomic Med.">
        <title>Two novel mutations identified in familial cases with Donohue syndrome.</title>
        <authorList>
            <person name="Falik Zaccai T.C."/>
            <person name="Kalfon L."/>
            <person name="Klar A."/>
            <person name="Elisha M.B."/>
            <person name="Hurvitz H."/>
            <person name="Weingarten G."/>
            <person name="Chechik E."/>
            <person name="Fleisher Sheffer V."/>
            <person name="Haj Yahya R."/>
            <person name="Meidan G."/>
            <person name="Gross-Kieselstein E."/>
            <person name="Bauman D."/>
            <person name="Hershkovitz S."/>
            <person name="Yaron Y."/>
            <person name="Orr-Urtreger A."/>
            <person name="Wertheimer E."/>
        </authorList>
    </citation>
    <scope>VARIANTS LEPRCH THR-56 AND TYR-286</scope>
    <scope>CHARACTERIZATION OF VARIANTS LEPRCH THR-56 AND TYR-286</scope>
</reference>
<reference key="130">
    <citation type="journal article" date="2017" name="Diabetes">
        <title>Structural Basis and Genotype-Phenotype Correlations of INSR Mutations Causing Severe Insulin Resistance.</title>
        <authorList>
            <person name="Hosoe J."/>
            <person name="Kadowaki H."/>
            <person name="Miya F."/>
            <person name="Aizu K."/>
            <person name="Kawamura T."/>
            <person name="Miyata I."/>
            <person name="Satomura K."/>
            <person name="Ito T."/>
            <person name="Hara K."/>
            <person name="Tanaka M."/>
            <person name="Ishiura H."/>
            <person name="Tsuji S."/>
            <person name="Suzuki K."/>
            <person name="Takakura M."/>
            <person name="Boroevich K.A."/>
            <person name="Tsunoda T."/>
            <person name="Yamauchi T."/>
            <person name="Shojima N."/>
            <person name="Kadowaki T."/>
        </authorList>
    </citation>
    <scope>VARIANTS RMS CYS-256; LEU-635; ILE-835; VAL-842; LEU-874; SER-878 AND 999-TYR--SER-1382 DEL</scope>
    <scope>VARIANTS IRAN TYPE A ASP-489 AND MET-1054</scope>
    <scope>VARIANTS LEPRCH PHE-657; ARG-659 AND CYS-818</scope>
    <scope>CHARACTERIZATION OF VARIANTS LEPRCH PHE-657; ARG-659; CYS-818; THR-925; TRP-926 AND MET-937</scope>
    <scope>CHARACTERIZATION OF VARIANTS RMS LEU-635; ILE-835; VAL-842; LEU-874 AND SER-878</scope>
</reference>
<dbReference type="EC" id="2.7.10.1"/>
<dbReference type="EMBL" id="M10051">
    <property type="protein sequence ID" value="AAA59174.1"/>
    <property type="molecule type" value="mRNA"/>
</dbReference>
<dbReference type="EMBL" id="X02160">
    <property type="protein sequence ID" value="CAA26096.1"/>
    <property type="molecule type" value="mRNA"/>
</dbReference>
<dbReference type="EMBL" id="M32972">
    <property type="protein sequence ID" value="AAA59452.1"/>
    <property type="molecule type" value="Genomic_DNA"/>
</dbReference>
<dbReference type="EMBL" id="M23100">
    <property type="protein sequence ID" value="AAA59452.1"/>
    <property type="status" value="JOINED"/>
    <property type="molecule type" value="Genomic_DNA"/>
</dbReference>
<dbReference type="EMBL" id="M32823">
    <property type="protein sequence ID" value="AAA59452.1"/>
    <property type="status" value="JOINED"/>
    <property type="molecule type" value="Genomic_DNA"/>
</dbReference>
<dbReference type="EMBL" id="M32824">
    <property type="protein sequence ID" value="AAA59452.1"/>
    <property type="status" value="JOINED"/>
    <property type="molecule type" value="Genomic_DNA"/>
</dbReference>
<dbReference type="EMBL" id="M32825">
    <property type="protein sequence ID" value="AAA59452.1"/>
    <property type="status" value="JOINED"/>
    <property type="molecule type" value="Genomic_DNA"/>
</dbReference>
<dbReference type="EMBL" id="M32826">
    <property type="protein sequence ID" value="AAA59452.1"/>
    <property type="status" value="JOINED"/>
    <property type="molecule type" value="Genomic_DNA"/>
</dbReference>
<dbReference type="EMBL" id="M32827">
    <property type="protein sequence ID" value="AAA59452.1"/>
    <property type="status" value="JOINED"/>
    <property type="molecule type" value="Genomic_DNA"/>
</dbReference>
<dbReference type="EMBL" id="M32828">
    <property type="protein sequence ID" value="AAA59452.1"/>
    <property type="status" value="JOINED"/>
    <property type="molecule type" value="Genomic_DNA"/>
</dbReference>
<dbReference type="EMBL" id="M32829">
    <property type="protein sequence ID" value="AAA59452.1"/>
    <property type="status" value="JOINED"/>
    <property type="molecule type" value="Genomic_DNA"/>
</dbReference>
<dbReference type="EMBL" id="M32830">
    <property type="protein sequence ID" value="AAA59452.1"/>
    <property type="status" value="JOINED"/>
    <property type="molecule type" value="Genomic_DNA"/>
</dbReference>
<dbReference type="EMBL" id="M32831">
    <property type="protein sequence ID" value="AAA59452.1"/>
    <property type="status" value="JOINED"/>
    <property type="molecule type" value="Genomic_DNA"/>
</dbReference>
<dbReference type="EMBL" id="M32832">
    <property type="protein sequence ID" value="AAA59452.1"/>
    <property type="status" value="JOINED"/>
    <property type="molecule type" value="Genomic_DNA"/>
</dbReference>
<dbReference type="EMBL" id="M32833">
    <property type="protein sequence ID" value="AAA59452.1"/>
    <property type="status" value="JOINED"/>
    <property type="molecule type" value="Genomic_DNA"/>
</dbReference>
<dbReference type="EMBL" id="M32834">
    <property type="protein sequence ID" value="AAA59452.1"/>
    <property type="status" value="JOINED"/>
    <property type="molecule type" value="Genomic_DNA"/>
</dbReference>
<dbReference type="EMBL" id="M32835">
    <property type="protein sequence ID" value="AAA59452.1"/>
    <property type="status" value="JOINED"/>
    <property type="molecule type" value="Genomic_DNA"/>
</dbReference>
<dbReference type="EMBL" id="M32836">
    <property type="protein sequence ID" value="AAA59452.1"/>
    <property type="status" value="JOINED"/>
    <property type="molecule type" value="Genomic_DNA"/>
</dbReference>
<dbReference type="EMBL" id="M32837">
    <property type="protein sequence ID" value="AAA59452.1"/>
    <property type="status" value="JOINED"/>
    <property type="molecule type" value="Genomic_DNA"/>
</dbReference>
<dbReference type="EMBL" id="M32838">
    <property type="protein sequence ID" value="AAA59452.1"/>
    <property type="status" value="JOINED"/>
    <property type="molecule type" value="Genomic_DNA"/>
</dbReference>
<dbReference type="EMBL" id="M32839">
    <property type="protein sequence ID" value="AAA59452.1"/>
    <property type="status" value="JOINED"/>
    <property type="molecule type" value="Genomic_DNA"/>
</dbReference>
<dbReference type="EMBL" id="M32840">
    <property type="protein sequence ID" value="AAA59452.1"/>
    <property type="status" value="JOINED"/>
    <property type="molecule type" value="Genomic_DNA"/>
</dbReference>
<dbReference type="EMBL" id="M32841">
    <property type="protein sequence ID" value="AAA59452.1"/>
    <property type="status" value="JOINED"/>
    <property type="molecule type" value="Genomic_DNA"/>
</dbReference>
<dbReference type="EMBL" id="M32842">
    <property type="protein sequence ID" value="AAA59452.1"/>
    <property type="status" value="JOINED"/>
    <property type="molecule type" value="Genomic_DNA"/>
</dbReference>
<dbReference type="EMBL" id="AC010311">
    <property type="status" value="NOT_ANNOTATED_CDS"/>
    <property type="molecule type" value="Genomic_DNA"/>
</dbReference>
<dbReference type="EMBL" id="AC010526">
    <property type="status" value="NOT_ANNOTATED_CDS"/>
    <property type="molecule type" value="Genomic_DNA"/>
</dbReference>
<dbReference type="EMBL" id="AC010606">
    <property type="status" value="NOT_ANNOTATED_CDS"/>
    <property type="molecule type" value="Genomic_DNA"/>
</dbReference>
<dbReference type="EMBL" id="AC125387">
    <property type="status" value="NOT_ANNOTATED_CDS"/>
    <property type="molecule type" value="Genomic_DNA"/>
</dbReference>
<dbReference type="EMBL" id="BC117172">
    <property type="protein sequence ID" value="AAI17173.1"/>
    <property type="molecule type" value="mRNA"/>
</dbReference>
<dbReference type="EMBL" id="J03466">
    <property type="protein sequence ID" value="AAA59175.1"/>
    <property type="molecule type" value="Genomic_DNA"/>
</dbReference>
<dbReference type="EMBL" id="J05043">
    <property type="protein sequence ID" value="AAA59190.1"/>
    <property type="molecule type" value="Genomic_DNA"/>
</dbReference>
<dbReference type="EMBL" id="M76592">
    <property type="protein sequence ID" value="AAC37604.1"/>
    <property type="molecule type" value="Genomic_DNA"/>
</dbReference>
<dbReference type="EMBL" id="AB208861">
    <property type="protein sequence ID" value="BAD92098.1"/>
    <property type="molecule type" value="mRNA"/>
</dbReference>
<dbReference type="EMBL" id="M24555">
    <property type="protein sequence ID" value="AAA59178.1"/>
    <property type="molecule type" value="mRNA"/>
</dbReference>
<dbReference type="EMBL" id="M29929">
    <property type="protein sequence ID" value="AAA59176.1"/>
    <property type="molecule type" value="Genomic_DNA"/>
</dbReference>
<dbReference type="EMBL" id="M29930">
    <property type="protein sequence ID" value="AAA59177.1"/>
    <property type="molecule type" value="Genomic_DNA"/>
</dbReference>
<dbReference type="EMBL" id="M27197">
    <property type="protein sequence ID" value="AAA86791.1"/>
    <property type="molecule type" value="Genomic_DNA"/>
</dbReference>
<dbReference type="EMBL" id="M27195">
    <property type="protein sequence ID" value="AAA86791.1"/>
    <property type="status" value="JOINED"/>
    <property type="molecule type" value="Genomic_DNA"/>
</dbReference>
<dbReference type="CCDS" id="CCDS12176.1">
    <molecule id="P06213-1"/>
</dbReference>
<dbReference type="CCDS" id="CCDS42487.1">
    <molecule id="P06213-2"/>
</dbReference>
<dbReference type="PIR" id="A37348">
    <property type="entry name" value="INHUR"/>
</dbReference>
<dbReference type="RefSeq" id="NP_000199.2">
    <molecule id="P06213-1"/>
    <property type="nucleotide sequence ID" value="NM_000208.4"/>
</dbReference>
<dbReference type="RefSeq" id="NP_001073285.1">
    <molecule id="P06213-2"/>
    <property type="nucleotide sequence ID" value="NM_001079817.3"/>
</dbReference>
<dbReference type="PDB" id="1GAG">
    <property type="method" value="X-ray"/>
    <property type="resolution" value="2.70 A"/>
    <property type="chains" value="A=1005-1310"/>
</dbReference>
<dbReference type="PDB" id="1I44">
    <property type="method" value="X-ray"/>
    <property type="resolution" value="2.40 A"/>
    <property type="chains" value="A=1005-1310"/>
</dbReference>
<dbReference type="PDB" id="1IR3">
    <property type="method" value="X-ray"/>
    <property type="resolution" value="1.90 A"/>
    <property type="chains" value="A=1005-1310"/>
</dbReference>
<dbReference type="PDB" id="1IRK">
    <property type="method" value="X-ray"/>
    <property type="resolution" value="2.10 A"/>
    <property type="chains" value="A=1005-1310"/>
</dbReference>
<dbReference type="PDB" id="1P14">
    <property type="method" value="X-ray"/>
    <property type="resolution" value="1.90 A"/>
    <property type="chains" value="A=1005-1310"/>
</dbReference>
<dbReference type="PDB" id="1RQQ">
    <property type="method" value="X-ray"/>
    <property type="resolution" value="2.60 A"/>
    <property type="chains" value="A/B=1005-1310"/>
</dbReference>
<dbReference type="PDB" id="2AUH">
    <property type="method" value="X-ray"/>
    <property type="resolution" value="3.20 A"/>
    <property type="chains" value="A=1005-1310"/>
</dbReference>
<dbReference type="PDB" id="2B4S">
    <property type="method" value="X-ray"/>
    <property type="resolution" value="2.30 A"/>
    <property type="chains" value="B/D=1005-1310"/>
</dbReference>
<dbReference type="PDB" id="2HR7">
    <property type="method" value="X-ray"/>
    <property type="resolution" value="2.32 A"/>
    <property type="chains" value="A/B=28-512"/>
</dbReference>
<dbReference type="PDB" id="2MFR">
    <property type="method" value="NMR"/>
    <property type="chains" value="A=940-988"/>
</dbReference>
<dbReference type="PDB" id="2Z8C">
    <property type="method" value="X-ray"/>
    <property type="resolution" value="3.25 A"/>
    <property type="chains" value="A=1008-1310"/>
</dbReference>
<dbReference type="PDB" id="3BU3">
    <property type="method" value="X-ray"/>
    <property type="resolution" value="1.65 A"/>
    <property type="chains" value="A=1005-1310"/>
</dbReference>
<dbReference type="PDB" id="3BU5">
    <property type="method" value="X-ray"/>
    <property type="resolution" value="2.10 A"/>
    <property type="chains" value="A=1005-1310"/>
</dbReference>
<dbReference type="PDB" id="3BU6">
    <property type="method" value="X-ray"/>
    <property type="resolution" value="1.95 A"/>
    <property type="chains" value="A=1005-1310"/>
</dbReference>
<dbReference type="PDB" id="3EKK">
    <property type="method" value="X-ray"/>
    <property type="resolution" value="2.10 A"/>
    <property type="chains" value="A=1005-1310"/>
</dbReference>
<dbReference type="PDB" id="3EKN">
    <property type="method" value="X-ray"/>
    <property type="resolution" value="2.20 A"/>
    <property type="chains" value="A=1005-1310"/>
</dbReference>
<dbReference type="PDB" id="3ETA">
    <property type="method" value="X-ray"/>
    <property type="resolution" value="2.60 A"/>
    <property type="chains" value="A/B=1017-1322"/>
</dbReference>
<dbReference type="PDB" id="3W11">
    <property type="method" value="X-ray"/>
    <property type="resolution" value="3.90 A"/>
    <property type="chains" value="E=28-337, F=731-744"/>
</dbReference>
<dbReference type="PDB" id="3W12">
    <property type="method" value="X-ray"/>
    <property type="resolution" value="4.30 A"/>
    <property type="chains" value="E=28-337, F=731-744"/>
</dbReference>
<dbReference type="PDB" id="3W13">
    <property type="method" value="X-ray"/>
    <property type="resolution" value="4.30 A"/>
    <property type="chains" value="E=28-337, F=724-744"/>
</dbReference>
<dbReference type="PDB" id="4IBM">
    <property type="method" value="X-ray"/>
    <property type="resolution" value="1.80 A"/>
    <property type="chains" value="A/B=1005-1310"/>
</dbReference>
<dbReference type="PDB" id="4OGA">
    <property type="method" value="X-ray"/>
    <property type="resolution" value="3.50 A"/>
    <property type="chains" value="E=28-337, F=731-744"/>
</dbReference>
<dbReference type="PDB" id="4XLV">
    <property type="method" value="X-ray"/>
    <property type="resolution" value="2.30 A"/>
    <property type="chains" value="A=983-1310"/>
</dbReference>
<dbReference type="PDB" id="4XSS">
    <property type="method" value="X-ray"/>
    <property type="resolution" value="3.00 A"/>
    <property type="chains" value="E=28-337"/>
</dbReference>
<dbReference type="PDB" id="4XST">
    <property type="method" value="X-ray"/>
    <property type="resolution" value="3.00 A"/>
    <property type="chains" value="E=28-337"/>
</dbReference>
<dbReference type="PDB" id="4ZXB">
    <property type="method" value="X-ray"/>
    <property type="resolution" value="3.30 A"/>
    <property type="chains" value="E=28-956"/>
</dbReference>
<dbReference type="PDB" id="5E1S">
    <property type="method" value="X-ray"/>
    <property type="resolution" value="2.26 A"/>
    <property type="chains" value="A=1005-1310"/>
</dbReference>
<dbReference type="PDB" id="5HHW">
    <property type="method" value="X-ray"/>
    <property type="resolution" value="1.79 A"/>
    <property type="chains" value="A=1005-1310"/>
</dbReference>
<dbReference type="PDB" id="5J3H">
    <property type="method" value="X-ray"/>
    <property type="resolution" value="3.27 A"/>
    <property type="chains" value="E=28-337"/>
</dbReference>
<dbReference type="PDB" id="5KQV">
    <property type="method" value="X-ray"/>
    <property type="resolution" value="4.40 A"/>
    <property type="chains" value="E/F=28-746"/>
</dbReference>
<dbReference type="PDB" id="5U1M">
    <property type="method" value="X-ray"/>
    <property type="resolution" value="1.80 A"/>
    <property type="chains" value="B=991-999"/>
</dbReference>
<dbReference type="PDB" id="6HN4">
    <property type="method" value="EM"/>
    <property type="resolution" value="4.20 A"/>
    <property type="chains" value="E/F=28-955"/>
</dbReference>
<dbReference type="PDB" id="6HN5">
    <property type="method" value="EM"/>
    <property type="resolution" value="3.20 A"/>
    <property type="chains" value="E/F=28-955"/>
</dbReference>
<dbReference type="PDB" id="6PXV">
    <property type="method" value="EM"/>
    <property type="resolution" value="3.20 A"/>
    <property type="chains" value="A/C=28-1382"/>
</dbReference>
<dbReference type="PDB" id="6PXW">
    <property type="method" value="EM"/>
    <property type="resolution" value="3.10 A"/>
    <property type="chains" value="A/B=28-1382"/>
</dbReference>
<dbReference type="PDB" id="6SOF">
    <property type="method" value="EM"/>
    <property type="resolution" value="4.30 A"/>
    <property type="chains" value="A/C=28-746, B/D=795-956"/>
</dbReference>
<dbReference type="PDB" id="6VEP">
    <property type="method" value="X-ray"/>
    <property type="resolution" value="2.90 A"/>
    <property type="chains" value="E/K/Q/W=28-337, F/L/R/X=731-746"/>
</dbReference>
<dbReference type="PDB" id="6VEQ">
    <property type="method" value="X-ray"/>
    <property type="resolution" value="3.25 A"/>
    <property type="chains" value="E/K=28-337, F/L=731-746"/>
</dbReference>
<dbReference type="PDB" id="7BW7">
    <property type="method" value="EM"/>
    <property type="resolution" value="4.10 A"/>
    <property type="chains" value="A/C=28-1382"/>
</dbReference>
<dbReference type="PDB" id="7BW8">
    <property type="method" value="EM"/>
    <property type="resolution" value="3.80 A"/>
    <property type="chains" value="A/C=28-1382"/>
</dbReference>
<dbReference type="PDB" id="7BWA">
    <property type="method" value="EM"/>
    <property type="resolution" value="4.90 A"/>
    <property type="chains" value="A/C=28-1382"/>
</dbReference>
<dbReference type="PDB" id="7KD6">
    <property type="method" value="X-ray"/>
    <property type="resolution" value="2.60 A"/>
    <property type="chains" value="E/K/Q/W=28-337"/>
</dbReference>
<dbReference type="PDB" id="7MQO">
    <property type="method" value="EM"/>
    <property type="resolution" value="3.40 A"/>
    <property type="chains" value="E/F=28-956"/>
</dbReference>
<dbReference type="PDB" id="7MQR">
    <property type="method" value="EM"/>
    <property type="resolution" value="4.10 A"/>
    <property type="chains" value="E/F=28-955"/>
</dbReference>
<dbReference type="PDB" id="7MQS">
    <property type="method" value="EM"/>
    <property type="resolution" value="4.40 A"/>
    <property type="chains" value="E/F=28-955"/>
</dbReference>
<dbReference type="PDB" id="7PG0">
    <property type="method" value="EM"/>
    <property type="resolution" value="7.60 A"/>
    <property type="chains" value="A/B=1-1382"/>
</dbReference>
<dbReference type="PDB" id="7PG2">
    <property type="method" value="EM"/>
    <property type="resolution" value="6.70 A"/>
    <property type="chains" value="A/B=1-1382"/>
</dbReference>
<dbReference type="PDB" id="7PG3">
    <property type="method" value="EM"/>
    <property type="resolution" value="7.30 A"/>
    <property type="chains" value="A/B=1-1382"/>
</dbReference>
<dbReference type="PDB" id="7PG4">
    <property type="method" value="EM"/>
    <property type="resolution" value="9.10 A"/>
    <property type="chains" value="A/B=1-1382"/>
</dbReference>
<dbReference type="PDB" id="7PHT">
    <property type="method" value="NMR"/>
    <property type="chains" value="A=953-982"/>
</dbReference>
<dbReference type="PDB" id="7QID">
    <property type="method" value="EM"/>
    <property type="resolution" value="5.00 A"/>
    <property type="chains" value="A/C=28-746, B/D=763-956"/>
</dbReference>
<dbReference type="PDB" id="7S0Q">
    <property type="method" value="EM"/>
    <property type="resolution" value="3.70 A"/>
    <property type="chains" value="B=28-955"/>
</dbReference>
<dbReference type="PDB" id="7S8V">
    <property type="method" value="EM"/>
    <property type="resolution" value="3.73 A"/>
    <property type="chains" value="B=28-955"/>
</dbReference>
<dbReference type="PDB" id="7U6D">
    <property type="method" value="EM"/>
    <property type="resolution" value="5.03 A"/>
    <property type="chains" value="B/C=28-955"/>
</dbReference>
<dbReference type="PDB" id="7U6E">
    <property type="method" value="EM"/>
    <property type="resolution" value="3.00 A"/>
    <property type="chains" value="E/F=28-955"/>
</dbReference>
<dbReference type="PDB" id="7YQ3">
    <property type="method" value="EM"/>
    <property type="resolution" value="3.60 A"/>
    <property type="chains" value="E/F=28-946"/>
</dbReference>
<dbReference type="PDB" id="7YQ4">
    <property type="method" value="EM"/>
    <property type="resolution" value="3.95 A"/>
    <property type="chains" value="E/F=28-946"/>
</dbReference>
<dbReference type="PDB" id="7YQ5">
    <property type="method" value="EM"/>
    <property type="resolution" value="4.27 A"/>
    <property type="chains" value="E/F=28-946"/>
</dbReference>
<dbReference type="PDB" id="7YQ6">
    <property type="method" value="EM"/>
    <property type="resolution" value="4.18 A"/>
    <property type="chains" value="E/F=28-946"/>
</dbReference>
<dbReference type="PDB" id="8DWN">
    <property type="method" value="X-ray"/>
    <property type="resolution" value="2.15 A"/>
    <property type="chains" value="A=1005-1310"/>
</dbReference>
<dbReference type="PDB" id="8GUY">
    <property type="method" value="EM"/>
    <property type="resolution" value="4.18 A"/>
    <property type="chains" value="E/F=28-946"/>
</dbReference>
<dbReference type="PDB" id="8U4B">
    <property type="method" value="EM"/>
    <property type="resolution" value="3.90 A"/>
    <property type="chains" value="A/B=1-1382"/>
</dbReference>
<dbReference type="PDB" id="8U4C">
    <property type="method" value="EM"/>
    <property type="resolution" value="3.60 A"/>
    <property type="chains" value="A/B=1-1382"/>
</dbReference>
<dbReference type="PDB" id="8U4E">
    <property type="method" value="EM"/>
    <property type="resolution" value="4.20 A"/>
    <property type="chains" value="A/B=1-1382"/>
</dbReference>
<dbReference type="PDB" id="8VJB">
    <property type="method" value="EM"/>
    <property type="resolution" value="3.60 A"/>
    <property type="chains" value="A/B=1-1382"/>
</dbReference>
<dbReference type="PDB" id="8VJC">
    <property type="method" value="EM"/>
    <property type="resolution" value="3.80 A"/>
    <property type="chains" value="A/B=1-1382"/>
</dbReference>
<dbReference type="PDB" id="8X06">
    <property type="method" value="EM"/>
    <property type="resolution" value="3.24 A"/>
    <property type="chains" value="A/B=1-1382"/>
</dbReference>
<dbReference type="PDB" id="8X2M">
    <property type="method" value="EM"/>
    <property type="resolution" value="3.31 A"/>
    <property type="chains" value="A/B=1-1382"/>
</dbReference>
<dbReference type="PDB" id="8XJS">
    <property type="method" value="EM"/>
    <property type="resolution" value="3.24 A"/>
    <property type="chains" value="A/B=1-1382"/>
</dbReference>
<dbReference type="PDB" id="8XK1">
    <property type="method" value="EM"/>
    <property type="resolution" value="3.31 A"/>
    <property type="chains" value="A/B=1-1382"/>
</dbReference>
<dbReference type="PDB" id="8XKM">
    <property type="method" value="EM"/>
    <property type="resolution" value="5.00 A"/>
    <property type="chains" value="A/B=1-1382"/>
</dbReference>
<dbReference type="PDB" id="8XKR">
    <property type="method" value="EM"/>
    <property type="resolution" value="3.53 A"/>
    <property type="chains" value="A/B=1-1382"/>
</dbReference>
<dbReference type="PDBsum" id="1GAG"/>
<dbReference type="PDBsum" id="1I44"/>
<dbReference type="PDBsum" id="1IR3"/>
<dbReference type="PDBsum" id="1IRK"/>
<dbReference type="PDBsum" id="1P14"/>
<dbReference type="PDBsum" id="1RQQ"/>
<dbReference type="PDBsum" id="2AUH"/>
<dbReference type="PDBsum" id="2B4S"/>
<dbReference type="PDBsum" id="2HR7"/>
<dbReference type="PDBsum" id="2MFR"/>
<dbReference type="PDBsum" id="2Z8C"/>
<dbReference type="PDBsum" id="3BU3"/>
<dbReference type="PDBsum" id="3BU5"/>
<dbReference type="PDBsum" id="3BU6"/>
<dbReference type="PDBsum" id="3EKK"/>
<dbReference type="PDBsum" id="3EKN"/>
<dbReference type="PDBsum" id="3ETA"/>
<dbReference type="PDBsum" id="3W11"/>
<dbReference type="PDBsum" id="3W12"/>
<dbReference type="PDBsum" id="3W13"/>
<dbReference type="PDBsum" id="4IBM"/>
<dbReference type="PDBsum" id="4OGA"/>
<dbReference type="PDBsum" id="4XLV"/>
<dbReference type="PDBsum" id="4XSS"/>
<dbReference type="PDBsum" id="4XST"/>
<dbReference type="PDBsum" id="4ZXB"/>
<dbReference type="PDBsum" id="5E1S"/>
<dbReference type="PDBsum" id="5HHW"/>
<dbReference type="PDBsum" id="5J3H"/>
<dbReference type="PDBsum" id="5KQV"/>
<dbReference type="PDBsum" id="5U1M"/>
<dbReference type="PDBsum" id="6HN4"/>
<dbReference type="PDBsum" id="6HN5"/>
<dbReference type="PDBsum" id="6PXV"/>
<dbReference type="PDBsum" id="6PXW"/>
<dbReference type="PDBsum" id="6SOF"/>
<dbReference type="PDBsum" id="6VEP"/>
<dbReference type="PDBsum" id="6VEQ"/>
<dbReference type="PDBsum" id="7BW7"/>
<dbReference type="PDBsum" id="7BW8"/>
<dbReference type="PDBsum" id="7BWA"/>
<dbReference type="PDBsum" id="7KD6"/>
<dbReference type="PDBsum" id="7MQO"/>
<dbReference type="PDBsum" id="7MQR"/>
<dbReference type="PDBsum" id="7MQS"/>
<dbReference type="PDBsum" id="7PG0"/>
<dbReference type="PDBsum" id="7PG2"/>
<dbReference type="PDBsum" id="7PG3"/>
<dbReference type="PDBsum" id="7PG4"/>
<dbReference type="PDBsum" id="7PHT"/>
<dbReference type="PDBsum" id="7QID"/>
<dbReference type="PDBsum" id="7S0Q"/>
<dbReference type="PDBsum" id="7S8V"/>
<dbReference type="PDBsum" id="7U6D"/>
<dbReference type="PDBsum" id="7U6E"/>
<dbReference type="PDBsum" id="7YQ3"/>
<dbReference type="PDBsum" id="7YQ4"/>
<dbReference type="PDBsum" id="7YQ5"/>
<dbReference type="PDBsum" id="7YQ6"/>
<dbReference type="PDBsum" id="8DWN"/>
<dbReference type="PDBsum" id="8GUY"/>
<dbReference type="PDBsum" id="8U4B"/>
<dbReference type="PDBsum" id="8U4C"/>
<dbReference type="PDBsum" id="8U4E"/>
<dbReference type="PDBsum" id="8VJB"/>
<dbReference type="PDBsum" id="8VJC"/>
<dbReference type="PDBsum" id="8X06"/>
<dbReference type="PDBsum" id="8X2M"/>
<dbReference type="PDBsum" id="8XJS"/>
<dbReference type="PDBsum" id="8XK1"/>
<dbReference type="PDBsum" id="8XKM"/>
<dbReference type="PDBsum" id="8XKR"/>
<dbReference type="BMRB" id="P06213"/>
<dbReference type="EMDB" id="EMD-10273"/>
<dbReference type="EMDB" id="EMD-10311"/>
<dbReference type="EMDB" id="EMD-13385"/>
<dbReference type="EMDB" id="EMD-13386"/>
<dbReference type="EMDB" id="EMD-13387"/>
<dbReference type="EMDB" id="EMD-13388"/>
<dbReference type="EMDB" id="EMD-20522"/>
<dbReference type="EMDB" id="EMD-20523"/>
<dbReference type="EMDB" id="EMD-23766"/>
<dbReference type="EMDB" id="EMD-23767"/>
<dbReference type="EMDB" id="EMD-23949"/>
<dbReference type="EMDB" id="EMD-23950"/>
<dbReference type="EMDB" id="EMD-24791"/>
<dbReference type="EMDB" id="EMD-24927"/>
<dbReference type="EMDB" id="EMD-26363"/>
<dbReference type="EMDB" id="EMD-30225"/>
<dbReference type="EMDB" id="EMD-30227"/>
<dbReference type="EMDB" id="EMD-30229"/>
<dbReference type="EMDB" id="EMD-30230"/>
<dbReference type="EMDB" id="EMD-30231"/>
<dbReference type="EMDB" id="EMD-34018"/>
<dbReference type="EMDB" id="EMD-34019"/>
<dbReference type="EMDB" id="EMD-34021"/>
<dbReference type="EMDB" id="EMD-34281"/>
<dbReference type="EMDB" id="EMD-37970"/>
<dbReference type="EMDB" id="EMD-38017"/>
<dbReference type="EMDB" id="EMD-38404"/>
<dbReference type="EMDB" id="EMD-38413"/>
<dbReference type="EMDB" id="EMD-38420"/>
<dbReference type="EMDB" id="EMD-38423"/>
<dbReference type="EMDB" id="EMD-41877"/>
<dbReference type="EMDB" id="EMD-41878"/>
<dbReference type="EMDB" id="EMD-41880"/>
<dbReference type="EMDB" id="EMD-43279"/>
<dbReference type="EMDB" id="EMD-43280"/>
<dbReference type="EMDB" id="EMD-7461"/>
<dbReference type="EMDB" id="EMD-7462"/>
<dbReference type="EMDB" id="EMD-7463"/>
<dbReference type="SASBDB" id="P06213"/>
<dbReference type="SMR" id="P06213"/>
<dbReference type="BioGRID" id="109854">
    <property type="interactions" value="362"/>
</dbReference>
<dbReference type="DIP" id="DIP-480N"/>
<dbReference type="ELM" id="P06213"/>
<dbReference type="FunCoup" id="P06213">
    <property type="interactions" value="1946"/>
</dbReference>
<dbReference type="IntAct" id="P06213">
    <property type="interactions" value="278"/>
</dbReference>
<dbReference type="MINT" id="P06213"/>
<dbReference type="STRING" id="9606.ENSP00000303830"/>
<dbReference type="BindingDB" id="P06213"/>
<dbReference type="ChEMBL" id="CHEMBL1981"/>
<dbReference type="DrugBank" id="DB08513">
    <property type="generic name" value="[4-({5-(AMINOCARBONYL)-4-[(3-METHYLPHENYL)AMINO]PYRIMIDIN-2-YL}AMINO)PHENYL]ACETIC ACID"/>
</dbReference>
<dbReference type="DrugBank" id="DB03909">
    <property type="generic name" value="Adenosine-5'-[Beta, Gamma-Methylene]Triphosphate"/>
</dbReference>
<dbReference type="DrugBank" id="DB05120">
    <property type="generic name" value="AT1391"/>
</dbReference>
<dbReference type="DrugBank" id="DB16028">
    <property type="generic name" value="Azemiglitazone"/>
</dbReference>
<dbReference type="DrugBank" id="DB15399">
    <property type="generic name" value="BMS-754807"/>
</dbReference>
<dbReference type="DrugBank" id="DB12267">
    <property type="generic name" value="Brigatinib"/>
</dbReference>
<dbReference type="DrugBank" id="DB09129">
    <property type="generic name" value="Chromic chloride"/>
</dbReference>
<dbReference type="DrugBank" id="DB12010">
    <property type="generic name" value="Fostamatinib"/>
</dbReference>
<dbReference type="DrugBank" id="DB11564">
    <property type="generic name" value="Insulin argine"/>
</dbReference>
<dbReference type="DrugBank" id="DB01306">
    <property type="generic name" value="Insulin aspart"/>
</dbReference>
<dbReference type="DrugBank" id="DB09456">
    <property type="generic name" value="Insulin beef"/>
</dbReference>
<dbReference type="DrugBank" id="DB09564">
    <property type="generic name" value="Insulin degludec"/>
</dbReference>
<dbReference type="DrugBank" id="DB01307">
    <property type="generic name" value="Insulin detemir"/>
</dbReference>
<dbReference type="DrugBank" id="DB00047">
    <property type="generic name" value="Insulin glargine"/>
</dbReference>
<dbReference type="DrugBank" id="DB01309">
    <property type="generic name" value="Insulin glulisine"/>
</dbReference>
<dbReference type="DrugBank" id="DB00030">
    <property type="generic name" value="Insulin human"/>
</dbReference>
<dbReference type="DrugBank" id="DB16693">
    <property type="generic name" value="Insulin icodec"/>
</dbReference>
<dbReference type="DrugBank" id="DB00046">
    <property type="generic name" value="Insulin lispro"/>
</dbReference>
<dbReference type="DrugBank" id="DB11567">
    <property type="generic name" value="Insulin peglispro"/>
</dbReference>
<dbReference type="DrugBank" id="DB00071">
    <property type="generic name" value="Insulin pork"/>
</dbReference>
<dbReference type="DrugBank" id="DB11568">
    <property type="generic name" value="Insulin tregopil"/>
</dbReference>
<dbReference type="DrugBank" id="DB16637">
    <property type="generic name" value="KW-2450 free base"/>
</dbReference>
<dbReference type="DrugBank" id="DB06075">
    <property type="generic name" value="Linsitinib"/>
</dbReference>
<dbReference type="DrugBank" id="DB01277">
    <property type="generic name" value="Mecasermin"/>
</dbReference>
<dbReference type="DrugBank" id="DB14751">
    <property type="generic name" value="Mecasermin rinfabate"/>
</dbReference>
<dbReference type="DrugBank" id="DB11721">
    <property type="generic name" value="Mitoglitazone"/>
</dbReference>
<dbReference type="DrugBank" id="DB05115">
    <property type="generic name" value="NN344"/>
</dbReference>
<dbReference type="DrugBank" id="DB12518">
    <property type="generic name" value="Raclopride"/>
</dbReference>
<dbReference type="DrugBank" id="DB06156">
    <property type="generic name" value="Tesofensine"/>
</dbReference>
<dbReference type="DrugCentral" id="P06213"/>
<dbReference type="GuidetoPHARMACOLOGY" id="1800"/>
<dbReference type="GlyConnect" id="1402">
    <property type="glycosylation" value="8 N-Linked glycans (6 sites)"/>
</dbReference>
<dbReference type="GlyCosmos" id="P06213">
    <property type="glycosylation" value="21 sites, 11 glycans"/>
</dbReference>
<dbReference type="GlyGen" id="P06213">
    <property type="glycosylation" value="26 sites, 72 N-linked glycans (13 sites), 4 O-linked glycans (6 sites)"/>
</dbReference>
<dbReference type="iPTMnet" id="P06213"/>
<dbReference type="PhosphoSitePlus" id="P06213"/>
<dbReference type="SwissPalm" id="P06213"/>
<dbReference type="BioMuta" id="INSR"/>
<dbReference type="DMDM" id="308153655"/>
<dbReference type="CPTAC" id="CPTAC-1771"/>
<dbReference type="CPTAC" id="CPTAC-1772"/>
<dbReference type="CPTAC" id="CPTAC-2814"/>
<dbReference type="CPTAC" id="CPTAC-3053"/>
<dbReference type="jPOST" id="P06213"/>
<dbReference type="MassIVE" id="P06213"/>
<dbReference type="PaxDb" id="9606-ENSP00000303830"/>
<dbReference type="PeptideAtlas" id="P06213"/>
<dbReference type="ProteomicsDB" id="51872">
    <molecule id="P06213-1"/>
</dbReference>
<dbReference type="ProteomicsDB" id="51873">
    <molecule id="P06213-2"/>
</dbReference>
<dbReference type="Pumba" id="P06213"/>
<dbReference type="ABCD" id="P06213">
    <property type="antibodies" value="3 sequenced antibodies"/>
</dbReference>
<dbReference type="Antibodypedia" id="3403">
    <property type="antibodies" value="2178 antibodies from 52 providers"/>
</dbReference>
<dbReference type="DNASU" id="3643"/>
<dbReference type="Ensembl" id="ENST00000302850.10">
    <molecule id="P06213-1"/>
    <property type="protein sequence ID" value="ENSP00000303830.4"/>
    <property type="gene ID" value="ENSG00000171105.14"/>
</dbReference>
<dbReference type="Ensembl" id="ENST00000341500.9">
    <molecule id="P06213-2"/>
    <property type="protein sequence ID" value="ENSP00000342838.4"/>
    <property type="gene ID" value="ENSG00000171105.14"/>
</dbReference>
<dbReference type="GeneID" id="3643"/>
<dbReference type="KEGG" id="hsa:3643"/>
<dbReference type="MANE-Select" id="ENST00000302850.10">
    <property type="protein sequence ID" value="ENSP00000303830.4"/>
    <property type="RefSeq nucleotide sequence ID" value="NM_000208.4"/>
    <property type="RefSeq protein sequence ID" value="NP_000199.2"/>
</dbReference>
<dbReference type="UCSC" id="uc002mgd.2">
    <molecule id="P06213-1"/>
    <property type="organism name" value="human"/>
</dbReference>
<dbReference type="AGR" id="HGNC:6091"/>
<dbReference type="CTD" id="3643"/>
<dbReference type="DisGeNET" id="3643"/>
<dbReference type="GeneCards" id="INSR"/>
<dbReference type="GeneReviews" id="INSR"/>
<dbReference type="HGNC" id="HGNC:6091">
    <property type="gene designation" value="INSR"/>
</dbReference>
<dbReference type="HPA" id="ENSG00000171105">
    <property type="expression patterns" value="Low tissue specificity"/>
</dbReference>
<dbReference type="MalaCards" id="INSR"/>
<dbReference type="MIM" id="125853">
    <property type="type" value="phenotype"/>
</dbReference>
<dbReference type="MIM" id="147670">
    <property type="type" value="gene"/>
</dbReference>
<dbReference type="MIM" id="246200">
    <property type="type" value="phenotype"/>
</dbReference>
<dbReference type="MIM" id="262190">
    <property type="type" value="phenotype"/>
</dbReference>
<dbReference type="MIM" id="609968">
    <property type="type" value="phenotype"/>
</dbReference>
<dbReference type="MIM" id="610549">
    <property type="type" value="phenotype"/>
</dbReference>
<dbReference type="neXtProt" id="NX_P06213"/>
<dbReference type="OpenTargets" id="ENSG00000171105"/>
<dbReference type="Orphanet" id="508">
    <property type="disease" value="Donohue syndrome"/>
</dbReference>
<dbReference type="Orphanet" id="263458">
    <property type="disease" value="Hyperinsulinism due to INSR deficiency"/>
</dbReference>
<dbReference type="Orphanet" id="2297">
    <property type="disease" value="Insulin-resistance syndrome type A"/>
</dbReference>
<dbReference type="Orphanet" id="769">
    <property type="disease" value="Rabson-Mendenhall syndrome"/>
</dbReference>
<dbReference type="PharmGKB" id="PA202"/>
<dbReference type="VEuPathDB" id="HostDB:ENSG00000171105"/>
<dbReference type="eggNOG" id="KOG4258">
    <property type="taxonomic scope" value="Eukaryota"/>
</dbReference>
<dbReference type="GeneTree" id="ENSGT00940000155404"/>
<dbReference type="HOGENOM" id="CLU_000288_166_0_1"/>
<dbReference type="InParanoid" id="P06213"/>
<dbReference type="OMA" id="AVESNTW"/>
<dbReference type="OrthoDB" id="5809444at2759"/>
<dbReference type="PAN-GO" id="P06213">
    <property type="GO annotations" value="12 GO annotations based on evolutionary models"/>
</dbReference>
<dbReference type="PhylomeDB" id="P06213"/>
<dbReference type="TreeFam" id="TF351636"/>
<dbReference type="BRENDA" id="2.7.10.1">
    <property type="organism ID" value="2681"/>
</dbReference>
<dbReference type="PathwayCommons" id="P06213"/>
<dbReference type="Reactome" id="R-HSA-6811558">
    <property type="pathway name" value="PI5P, PP2A and IER3 Regulate PI3K/AKT Signaling"/>
</dbReference>
<dbReference type="Reactome" id="R-HSA-74713">
    <property type="pathway name" value="IRS activation"/>
</dbReference>
<dbReference type="Reactome" id="R-HSA-74749">
    <property type="pathway name" value="Signal attenuation"/>
</dbReference>
<dbReference type="Reactome" id="R-HSA-74751">
    <property type="pathway name" value="Insulin receptor signalling cascade"/>
</dbReference>
<dbReference type="Reactome" id="R-HSA-74752">
    <property type="pathway name" value="Signaling by Insulin receptor"/>
</dbReference>
<dbReference type="Reactome" id="R-HSA-77387">
    <property type="pathway name" value="Insulin receptor recycling"/>
</dbReference>
<dbReference type="SABIO-RK" id="P06213"/>
<dbReference type="SignaLink" id="P06213"/>
<dbReference type="SIGNOR" id="P06213"/>
<dbReference type="BioGRID-ORCS" id="3643">
    <property type="hits" value="15 hits in 1203 CRISPR screens"/>
</dbReference>
<dbReference type="ChiTaRS" id="INSR">
    <property type="organism name" value="human"/>
</dbReference>
<dbReference type="EvolutionaryTrace" id="P06213"/>
<dbReference type="GeneWiki" id="Insulin_receptor"/>
<dbReference type="GenomeRNAi" id="3643"/>
<dbReference type="Pharos" id="P06213">
    <property type="development level" value="Tclin"/>
</dbReference>
<dbReference type="PRO" id="PR:P06213"/>
<dbReference type="Proteomes" id="UP000005640">
    <property type="component" value="Chromosome 19"/>
</dbReference>
<dbReference type="RNAct" id="P06213">
    <property type="molecule type" value="protein"/>
</dbReference>
<dbReference type="Bgee" id="ENSG00000171105">
    <property type="expression patterns" value="Expressed in buccal mucosa cell and 209 other cell types or tissues"/>
</dbReference>
<dbReference type="ExpressionAtlas" id="P06213">
    <property type="expression patterns" value="baseline and differential"/>
</dbReference>
<dbReference type="GO" id="GO:0030424">
    <property type="term" value="C:axon"/>
    <property type="evidence" value="ECO:0000318"/>
    <property type="project" value="GO_Central"/>
</dbReference>
<dbReference type="GO" id="GO:0005901">
    <property type="term" value="C:caveola"/>
    <property type="evidence" value="ECO:0000314"/>
    <property type="project" value="BHF-UCL"/>
</dbReference>
<dbReference type="GO" id="GO:0032590">
    <property type="term" value="C:dendrite membrane"/>
    <property type="evidence" value="ECO:0000250"/>
    <property type="project" value="ARUK-UCL"/>
</dbReference>
<dbReference type="GO" id="GO:0010008">
    <property type="term" value="C:endosome membrane"/>
    <property type="evidence" value="ECO:0000304"/>
    <property type="project" value="Reactome"/>
</dbReference>
<dbReference type="GO" id="GO:0009897">
    <property type="term" value="C:external side of plasma membrane"/>
    <property type="evidence" value="ECO:0000250"/>
    <property type="project" value="ARUK-UCL"/>
</dbReference>
<dbReference type="GO" id="GO:0070062">
    <property type="term" value="C:extracellular exosome"/>
    <property type="evidence" value="ECO:0007005"/>
    <property type="project" value="UniProtKB"/>
</dbReference>
<dbReference type="GO" id="GO:0005899">
    <property type="term" value="C:insulin receptor complex"/>
    <property type="evidence" value="ECO:0000314"/>
    <property type="project" value="UniProtKB"/>
</dbReference>
<dbReference type="GO" id="GO:0005770">
    <property type="term" value="C:late endosome"/>
    <property type="evidence" value="ECO:0007669"/>
    <property type="project" value="UniProtKB-SubCell"/>
</dbReference>
<dbReference type="GO" id="GO:0005764">
    <property type="term" value="C:lysosome"/>
    <property type="evidence" value="ECO:0007669"/>
    <property type="project" value="UniProtKB-SubCell"/>
</dbReference>
<dbReference type="GO" id="GO:0016020">
    <property type="term" value="C:membrane"/>
    <property type="evidence" value="ECO:0000314"/>
    <property type="project" value="BHF-UCL"/>
</dbReference>
<dbReference type="GO" id="GO:0032809">
    <property type="term" value="C:neuronal cell body membrane"/>
    <property type="evidence" value="ECO:0000250"/>
    <property type="project" value="ARUK-UCL"/>
</dbReference>
<dbReference type="GO" id="GO:0005886">
    <property type="term" value="C:plasma membrane"/>
    <property type="evidence" value="ECO:0000314"/>
    <property type="project" value="ARUK-UCL"/>
</dbReference>
<dbReference type="GO" id="GO:0043235">
    <property type="term" value="C:receptor complex"/>
    <property type="evidence" value="ECO:0000314"/>
    <property type="project" value="MGI"/>
</dbReference>
<dbReference type="GO" id="GO:0001540">
    <property type="term" value="F:amyloid-beta binding"/>
    <property type="evidence" value="ECO:0000353"/>
    <property type="project" value="ARUK-UCL"/>
</dbReference>
<dbReference type="GO" id="GO:0005524">
    <property type="term" value="F:ATP binding"/>
    <property type="evidence" value="ECO:0000314"/>
    <property type="project" value="BHF-UCL"/>
</dbReference>
<dbReference type="GO" id="GO:0038024">
    <property type="term" value="F:cargo receptor activity"/>
    <property type="evidence" value="ECO:0000250"/>
    <property type="project" value="ARUK-UCL"/>
</dbReference>
<dbReference type="GO" id="GO:0005525">
    <property type="term" value="F:GTP binding"/>
    <property type="evidence" value="ECO:0000314"/>
    <property type="project" value="BHF-UCL"/>
</dbReference>
<dbReference type="GO" id="GO:0042802">
    <property type="term" value="F:identical protein binding"/>
    <property type="evidence" value="ECO:0000353"/>
    <property type="project" value="IntAct"/>
</dbReference>
<dbReference type="GO" id="GO:0043559">
    <property type="term" value="F:insulin binding"/>
    <property type="evidence" value="ECO:0000314"/>
    <property type="project" value="UniProtKB"/>
</dbReference>
<dbReference type="GO" id="GO:0005009">
    <property type="term" value="F:insulin receptor activity"/>
    <property type="evidence" value="ECO:0000314"/>
    <property type="project" value="UniProtKB"/>
</dbReference>
<dbReference type="GO" id="GO:0043560">
    <property type="term" value="F:insulin receptor substrate binding"/>
    <property type="evidence" value="ECO:0000353"/>
    <property type="project" value="UniProtKB"/>
</dbReference>
<dbReference type="GO" id="GO:0031994">
    <property type="term" value="F:insulin-like growth factor I binding"/>
    <property type="evidence" value="ECO:0000353"/>
    <property type="project" value="BHF-UCL"/>
</dbReference>
<dbReference type="GO" id="GO:0031995">
    <property type="term" value="F:insulin-like growth factor II binding"/>
    <property type="evidence" value="ECO:0000353"/>
    <property type="project" value="BHF-UCL"/>
</dbReference>
<dbReference type="GO" id="GO:0005159">
    <property type="term" value="F:insulin-like growth factor receptor binding"/>
    <property type="evidence" value="ECO:0000314"/>
    <property type="project" value="BHF-UCL"/>
</dbReference>
<dbReference type="GO" id="GO:0043548">
    <property type="term" value="F:phosphatidylinositol 3-kinase binding"/>
    <property type="evidence" value="ECO:0000353"/>
    <property type="project" value="UniProtKB"/>
</dbReference>
<dbReference type="GO" id="GO:0019904">
    <property type="term" value="F:protein domain specific binding"/>
    <property type="evidence" value="ECO:0000353"/>
    <property type="project" value="CAFA"/>
</dbReference>
<dbReference type="GO" id="GO:0030295">
    <property type="term" value="F:protein kinase activator activity"/>
    <property type="evidence" value="ECO:0000315"/>
    <property type="project" value="BHF-UCL"/>
</dbReference>
<dbReference type="GO" id="GO:0004713">
    <property type="term" value="F:protein tyrosine kinase activity"/>
    <property type="evidence" value="ECO:0000314"/>
    <property type="project" value="UniProtKB"/>
</dbReference>
<dbReference type="GO" id="GO:0044877">
    <property type="term" value="F:protein-containing complex binding"/>
    <property type="evidence" value="ECO:0000353"/>
    <property type="project" value="ARUK-UCL"/>
</dbReference>
<dbReference type="GO" id="GO:0051425">
    <property type="term" value="F:PTB domain binding"/>
    <property type="evidence" value="ECO:0000353"/>
    <property type="project" value="UniProtKB"/>
</dbReference>
<dbReference type="GO" id="GO:0030325">
    <property type="term" value="P:adrenal gland development"/>
    <property type="evidence" value="ECO:0007669"/>
    <property type="project" value="Ensembl"/>
</dbReference>
<dbReference type="GO" id="GO:0097242">
    <property type="term" value="P:amyloid-beta clearance"/>
    <property type="evidence" value="ECO:0000250"/>
    <property type="project" value="ARUK-UCL"/>
</dbReference>
<dbReference type="GO" id="GO:0071363">
    <property type="term" value="P:cellular response to growth factor stimulus"/>
    <property type="evidence" value="ECO:0007669"/>
    <property type="project" value="Ensembl"/>
</dbReference>
<dbReference type="GO" id="GO:0032869">
    <property type="term" value="P:cellular response to insulin stimulus"/>
    <property type="evidence" value="ECO:0000314"/>
    <property type="project" value="BHF-UCL"/>
</dbReference>
<dbReference type="GO" id="GO:0097062">
    <property type="term" value="P:dendritic spine maintenance"/>
    <property type="evidence" value="ECO:0000250"/>
    <property type="project" value="ARUK-UCL"/>
</dbReference>
<dbReference type="GO" id="GO:0008544">
    <property type="term" value="P:epidermis development"/>
    <property type="evidence" value="ECO:0007669"/>
    <property type="project" value="Ensembl"/>
</dbReference>
<dbReference type="GO" id="GO:0031017">
    <property type="term" value="P:exocrine pancreas development"/>
    <property type="evidence" value="ECO:0007669"/>
    <property type="project" value="Ensembl"/>
</dbReference>
<dbReference type="GO" id="GO:0007186">
    <property type="term" value="P:G protein-coupled receptor signaling pathway"/>
    <property type="evidence" value="ECO:0000314"/>
    <property type="project" value="BHF-UCL"/>
</dbReference>
<dbReference type="GO" id="GO:0042593">
    <property type="term" value="P:glucose homeostasis"/>
    <property type="evidence" value="ECO:0000315"/>
    <property type="project" value="BHF-UCL"/>
</dbReference>
<dbReference type="GO" id="GO:0003007">
    <property type="term" value="P:heart morphogenesis"/>
    <property type="evidence" value="ECO:0000315"/>
    <property type="project" value="BHF-UCL"/>
</dbReference>
<dbReference type="GO" id="GO:0008286">
    <property type="term" value="P:insulin receptor signaling pathway"/>
    <property type="evidence" value="ECO:0000314"/>
    <property type="project" value="UniProtKB"/>
</dbReference>
<dbReference type="GO" id="GO:0007612">
    <property type="term" value="P:learning"/>
    <property type="evidence" value="ECO:0000304"/>
    <property type="project" value="ARUK-UCL"/>
</dbReference>
<dbReference type="GO" id="GO:0008584">
    <property type="term" value="P:male gonad development"/>
    <property type="evidence" value="ECO:0007669"/>
    <property type="project" value="Ensembl"/>
</dbReference>
<dbReference type="GO" id="GO:0030238">
    <property type="term" value="P:male sex determination"/>
    <property type="evidence" value="ECO:0007669"/>
    <property type="project" value="Ensembl"/>
</dbReference>
<dbReference type="GO" id="GO:0007613">
    <property type="term" value="P:memory"/>
    <property type="evidence" value="ECO:0000304"/>
    <property type="project" value="ARUK-UCL"/>
</dbReference>
<dbReference type="GO" id="GO:1990535">
    <property type="term" value="P:neuron projection maintenance"/>
    <property type="evidence" value="ECO:0000250"/>
    <property type="project" value="ARUK-UCL"/>
</dbReference>
<dbReference type="GO" id="GO:0043123">
    <property type="term" value="P:positive regulation of canonical NF-kappaB signal transduction"/>
    <property type="evidence" value="ECO:0000316"/>
    <property type="project" value="BHF-UCL"/>
</dbReference>
<dbReference type="GO" id="GO:0030335">
    <property type="term" value="P:positive regulation of cell migration"/>
    <property type="evidence" value="ECO:0000315"/>
    <property type="project" value="BHF-UCL"/>
</dbReference>
<dbReference type="GO" id="GO:0008284">
    <property type="term" value="P:positive regulation of cell population proliferation"/>
    <property type="evidence" value="ECO:0000314"/>
    <property type="project" value="BHF-UCL"/>
</dbReference>
<dbReference type="GO" id="GO:0046326">
    <property type="term" value="P:positive regulation of D-glucose import"/>
    <property type="evidence" value="ECO:0000314"/>
    <property type="project" value="BHF-UCL"/>
</dbReference>
<dbReference type="GO" id="GO:0048639">
    <property type="term" value="P:positive regulation of developmental growth"/>
    <property type="evidence" value="ECO:0000315"/>
    <property type="project" value="BHF-UCL"/>
</dbReference>
<dbReference type="GO" id="GO:0045893">
    <property type="term" value="P:positive regulation of DNA-templated transcription"/>
    <property type="evidence" value="ECO:0007669"/>
    <property type="project" value="Ensembl"/>
</dbReference>
<dbReference type="GO" id="GO:0045725">
    <property type="term" value="P:positive regulation of glycogen biosynthetic process"/>
    <property type="evidence" value="ECO:0000314"/>
    <property type="project" value="BHF-UCL"/>
</dbReference>
<dbReference type="GO" id="GO:0045821">
    <property type="term" value="P:positive regulation of glycolytic process"/>
    <property type="evidence" value="ECO:0000315"/>
    <property type="project" value="BHF-UCL"/>
</dbReference>
<dbReference type="GO" id="GO:0043410">
    <property type="term" value="P:positive regulation of MAPK cascade"/>
    <property type="evidence" value="ECO:0000314"/>
    <property type="project" value="BHF-UCL"/>
</dbReference>
<dbReference type="GO" id="GO:0051446">
    <property type="term" value="P:positive regulation of meiotic cell cycle"/>
    <property type="evidence" value="ECO:0007669"/>
    <property type="project" value="Ensembl"/>
</dbReference>
<dbReference type="GO" id="GO:0045840">
    <property type="term" value="P:positive regulation of mitotic nuclear division"/>
    <property type="evidence" value="ECO:0000315"/>
    <property type="project" value="BHF-UCL"/>
</dbReference>
<dbReference type="GO" id="GO:0045429">
    <property type="term" value="P:positive regulation of nitric oxide biosynthetic process"/>
    <property type="evidence" value="ECO:0000315"/>
    <property type="project" value="BHF-UCL"/>
</dbReference>
<dbReference type="GO" id="GO:0051897">
    <property type="term" value="P:positive regulation of phosphatidylinositol 3-kinase/protein kinase B signal transduction"/>
    <property type="evidence" value="ECO:0000314"/>
    <property type="project" value="BHF-UCL"/>
</dbReference>
<dbReference type="GO" id="GO:0043243">
    <property type="term" value="P:positive regulation of protein-containing complex disassembly"/>
    <property type="evidence" value="ECO:0000250"/>
    <property type="project" value="ARUK-UCL"/>
</dbReference>
<dbReference type="GO" id="GO:0002092">
    <property type="term" value="P:positive regulation of receptor internalization"/>
    <property type="evidence" value="ECO:0000314"/>
    <property type="project" value="CACAO"/>
</dbReference>
<dbReference type="GO" id="GO:0060267">
    <property type="term" value="P:positive regulation of respiratory burst"/>
    <property type="evidence" value="ECO:0000314"/>
    <property type="project" value="BHF-UCL"/>
</dbReference>
<dbReference type="GO" id="GO:0046777">
    <property type="term" value="P:protein autophosphorylation"/>
    <property type="evidence" value="ECO:0000315"/>
    <property type="project" value="UniProtKB"/>
</dbReference>
<dbReference type="GO" id="GO:0031623">
    <property type="term" value="P:receptor internalization"/>
    <property type="evidence" value="ECO:0007669"/>
    <property type="project" value="Ensembl"/>
</dbReference>
<dbReference type="GO" id="GO:0006898">
    <property type="term" value="P:receptor-mediated endocytosis"/>
    <property type="evidence" value="ECO:0000250"/>
    <property type="project" value="ARUK-UCL"/>
</dbReference>
<dbReference type="GO" id="GO:0006355">
    <property type="term" value="P:regulation of DNA-templated transcription"/>
    <property type="evidence" value="ECO:0000315"/>
    <property type="project" value="BHF-UCL"/>
</dbReference>
<dbReference type="GO" id="GO:0045995">
    <property type="term" value="P:regulation of embryonic development"/>
    <property type="evidence" value="ECO:0000315"/>
    <property type="project" value="BHF-UCL"/>
</dbReference>
<dbReference type="GO" id="GO:2000194">
    <property type="term" value="P:regulation of female gonad development"/>
    <property type="evidence" value="ECO:0007669"/>
    <property type="project" value="Ensembl"/>
</dbReference>
<dbReference type="GO" id="GO:0046718">
    <property type="term" value="P:symbiont entry into host cell"/>
    <property type="evidence" value="ECO:0000315"/>
    <property type="project" value="BHF-UCL"/>
</dbReference>
<dbReference type="GO" id="GO:0150104">
    <property type="term" value="P:transport across blood-brain barrier"/>
    <property type="evidence" value="ECO:0000303"/>
    <property type="project" value="ARUK-UCL"/>
</dbReference>
<dbReference type="CDD" id="cd00063">
    <property type="entry name" value="FN3"/>
    <property type="match status" value="2"/>
</dbReference>
<dbReference type="CDD" id="cd00064">
    <property type="entry name" value="FU"/>
    <property type="match status" value="1"/>
</dbReference>
<dbReference type="CDD" id="cd05061">
    <property type="entry name" value="PTKc_InsR"/>
    <property type="match status" value="1"/>
</dbReference>
<dbReference type="FunFam" id="1.10.510.10:FF:000050">
    <property type="entry name" value="Tyrosine-protein kinase receptor"/>
    <property type="match status" value="1"/>
</dbReference>
<dbReference type="FunFam" id="2.10.220.10:FF:000005">
    <property type="entry name" value="Tyrosine-protein kinase receptor"/>
    <property type="match status" value="1"/>
</dbReference>
<dbReference type="FunFam" id="2.60.40.10:FF:000087">
    <property type="entry name" value="Tyrosine-protein kinase receptor"/>
    <property type="match status" value="1"/>
</dbReference>
<dbReference type="FunFam" id="2.60.40.10:FF:000108">
    <property type="entry name" value="Tyrosine-protein kinase receptor"/>
    <property type="match status" value="1"/>
</dbReference>
<dbReference type="FunFam" id="2.60.40.10:FF:001010">
    <property type="entry name" value="Tyrosine-protein kinase receptor"/>
    <property type="match status" value="1"/>
</dbReference>
<dbReference type="FunFam" id="3.30.200.20:FF:000026">
    <property type="entry name" value="Tyrosine-protein kinase receptor"/>
    <property type="match status" value="1"/>
</dbReference>
<dbReference type="FunFam" id="3.80.20.20:FF:000001">
    <property type="entry name" value="Tyrosine-protein kinase receptor"/>
    <property type="match status" value="1"/>
</dbReference>
<dbReference type="FunFam" id="3.80.20.20:FF:000002">
    <property type="entry name" value="Tyrosine-protein kinase receptor"/>
    <property type="match status" value="1"/>
</dbReference>
<dbReference type="Gene3D" id="2.10.220.10">
    <property type="entry name" value="Hormone Receptor, Insulin-like Growth Factor Receptor 1, Chain A, domain 2"/>
    <property type="match status" value="1"/>
</dbReference>
<dbReference type="Gene3D" id="2.60.40.10">
    <property type="entry name" value="Immunoglobulins"/>
    <property type="match status" value="4"/>
</dbReference>
<dbReference type="Gene3D" id="3.30.200.20">
    <property type="entry name" value="Phosphorylase Kinase, domain 1"/>
    <property type="match status" value="1"/>
</dbReference>
<dbReference type="Gene3D" id="3.80.20.20">
    <property type="entry name" value="Receptor L-domain"/>
    <property type="match status" value="2"/>
</dbReference>
<dbReference type="Gene3D" id="1.10.510.10">
    <property type="entry name" value="Transferase(Phosphotransferase) domain 1"/>
    <property type="match status" value="1"/>
</dbReference>
<dbReference type="InterPro" id="IPR003961">
    <property type="entry name" value="FN3_dom"/>
</dbReference>
<dbReference type="InterPro" id="IPR036116">
    <property type="entry name" value="FN3_sf"/>
</dbReference>
<dbReference type="InterPro" id="IPR006211">
    <property type="entry name" value="Furin-like_Cys-rich_dom"/>
</dbReference>
<dbReference type="InterPro" id="IPR006212">
    <property type="entry name" value="Furin_repeat"/>
</dbReference>
<dbReference type="InterPro" id="IPR009030">
    <property type="entry name" value="Growth_fac_rcpt_cys_sf"/>
</dbReference>
<dbReference type="InterPro" id="IPR013783">
    <property type="entry name" value="Ig-like_fold"/>
</dbReference>
<dbReference type="InterPro" id="IPR040969">
    <property type="entry name" value="Insulin_TMD"/>
</dbReference>
<dbReference type="InterPro" id="IPR011009">
    <property type="entry name" value="Kinase-like_dom_sf"/>
</dbReference>
<dbReference type="InterPro" id="IPR000719">
    <property type="entry name" value="Prot_kinase_dom"/>
</dbReference>
<dbReference type="InterPro" id="IPR017441">
    <property type="entry name" value="Protein_kinase_ATP_BS"/>
</dbReference>
<dbReference type="InterPro" id="IPR000494">
    <property type="entry name" value="Rcpt_L-dom"/>
</dbReference>
<dbReference type="InterPro" id="IPR036941">
    <property type="entry name" value="Rcpt_L-dom_sf"/>
</dbReference>
<dbReference type="InterPro" id="IPR050122">
    <property type="entry name" value="RTK"/>
</dbReference>
<dbReference type="InterPro" id="IPR001245">
    <property type="entry name" value="Ser-Thr/Tyr_kinase_cat_dom"/>
</dbReference>
<dbReference type="InterPro" id="IPR008266">
    <property type="entry name" value="Tyr_kinase_AS"/>
</dbReference>
<dbReference type="InterPro" id="IPR020635">
    <property type="entry name" value="Tyr_kinase_cat_dom"/>
</dbReference>
<dbReference type="InterPro" id="IPR016246">
    <property type="entry name" value="Tyr_kinase_insulin-like_rcpt"/>
</dbReference>
<dbReference type="InterPro" id="IPR002011">
    <property type="entry name" value="Tyr_kinase_rcpt_2_CS"/>
</dbReference>
<dbReference type="PANTHER" id="PTHR24416:SF535">
    <property type="entry name" value="INSULIN RECEPTOR"/>
    <property type="match status" value="1"/>
</dbReference>
<dbReference type="PANTHER" id="PTHR24416">
    <property type="entry name" value="TYROSINE-PROTEIN KINASE RECEPTOR"/>
    <property type="match status" value="1"/>
</dbReference>
<dbReference type="Pfam" id="PF00041">
    <property type="entry name" value="fn3"/>
    <property type="match status" value="1"/>
</dbReference>
<dbReference type="Pfam" id="PF00757">
    <property type="entry name" value="Furin-like"/>
    <property type="match status" value="1"/>
</dbReference>
<dbReference type="Pfam" id="PF17870">
    <property type="entry name" value="Insulin_TMD"/>
    <property type="match status" value="1"/>
</dbReference>
<dbReference type="Pfam" id="PF07714">
    <property type="entry name" value="PK_Tyr_Ser-Thr"/>
    <property type="match status" value="1"/>
</dbReference>
<dbReference type="Pfam" id="PF01030">
    <property type="entry name" value="Recep_L_domain"/>
    <property type="match status" value="2"/>
</dbReference>
<dbReference type="PIRSF" id="PIRSF000620">
    <property type="entry name" value="Insulin_receptor"/>
    <property type="match status" value="1"/>
</dbReference>
<dbReference type="PRINTS" id="PR00109">
    <property type="entry name" value="TYRKINASE"/>
</dbReference>
<dbReference type="SMART" id="SM00060">
    <property type="entry name" value="FN3"/>
    <property type="match status" value="3"/>
</dbReference>
<dbReference type="SMART" id="SM00261">
    <property type="entry name" value="FU"/>
    <property type="match status" value="2"/>
</dbReference>
<dbReference type="SMART" id="SM00219">
    <property type="entry name" value="TyrKc"/>
    <property type="match status" value="1"/>
</dbReference>
<dbReference type="SUPFAM" id="SSF49265">
    <property type="entry name" value="Fibronectin type III"/>
    <property type="match status" value="3"/>
</dbReference>
<dbReference type="SUPFAM" id="SSF57184">
    <property type="entry name" value="Growth factor receptor domain"/>
    <property type="match status" value="1"/>
</dbReference>
<dbReference type="SUPFAM" id="SSF52058">
    <property type="entry name" value="L domain-like"/>
    <property type="match status" value="2"/>
</dbReference>
<dbReference type="SUPFAM" id="SSF56112">
    <property type="entry name" value="Protein kinase-like (PK-like)"/>
    <property type="match status" value="1"/>
</dbReference>
<dbReference type="PROSITE" id="PS50853">
    <property type="entry name" value="FN3"/>
    <property type="match status" value="2"/>
</dbReference>
<dbReference type="PROSITE" id="PS00107">
    <property type="entry name" value="PROTEIN_KINASE_ATP"/>
    <property type="match status" value="1"/>
</dbReference>
<dbReference type="PROSITE" id="PS50011">
    <property type="entry name" value="PROTEIN_KINASE_DOM"/>
    <property type="match status" value="1"/>
</dbReference>
<dbReference type="PROSITE" id="PS00109">
    <property type="entry name" value="PROTEIN_KINASE_TYR"/>
    <property type="match status" value="1"/>
</dbReference>
<dbReference type="PROSITE" id="PS00239">
    <property type="entry name" value="RECEPTOR_TYR_KIN_II"/>
    <property type="match status" value="1"/>
</dbReference>
<organism>
    <name type="scientific">Homo sapiens</name>
    <name type="common">Human</name>
    <dbReference type="NCBI Taxonomy" id="9606"/>
    <lineage>
        <taxon>Eukaryota</taxon>
        <taxon>Metazoa</taxon>
        <taxon>Chordata</taxon>
        <taxon>Craniata</taxon>
        <taxon>Vertebrata</taxon>
        <taxon>Euteleostomi</taxon>
        <taxon>Mammalia</taxon>
        <taxon>Eutheria</taxon>
        <taxon>Euarchontoglires</taxon>
        <taxon>Primates</taxon>
        <taxon>Haplorrhini</taxon>
        <taxon>Catarrhini</taxon>
        <taxon>Hominidae</taxon>
        <taxon>Homo</taxon>
    </lineage>
</organism>
<protein>
    <recommendedName>
        <fullName>Insulin receptor</fullName>
        <shortName>IR</shortName>
        <ecNumber>2.7.10.1</ecNumber>
    </recommendedName>
    <cdAntigenName>CD220</cdAntigenName>
    <component>
        <recommendedName>
            <fullName>Insulin receptor subunit alpha</fullName>
        </recommendedName>
    </component>
    <component>
        <recommendedName>
            <fullName>Insulin receptor subunit beta</fullName>
        </recommendedName>
    </component>
</protein>
<feature type="signal peptide" evidence="61 81 98">
    <location>
        <begin position="1"/>
        <end position="27"/>
    </location>
</feature>
<feature type="chain" id="PRO_0000016687" description="Insulin receptor subunit alpha">
    <location>
        <begin position="28"/>
        <end position="758"/>
    </location>
</feature>
<feature type="chain" id="PRO_0000016689" description="Insulin receptor subunit beta">
    <location>
        <begin position="763"/>
        <end position="1382"/>
    </location>
</feature>
<feature type="topological domain" description="Extracellular" evidence="125">
    <location>
        <begin position="28"/>
        <end position="758"/>
    </location>
</feature>
<feature type="topological domain" description="Extracellular" evidence="125">
    <location>
        <begin position="763"/>
        <end position="956"/>
    </location>
</feature>
<feature type="transmembrane region" description="Helical" evidence="3">
    <location>
        <begin position="957"/>
        <end position="979"/>
    </location>
</feature>
<feature type="topological domain" description="Cytoplasmic" evidence="125">
    <location>
        <begin position="980"/>
        <end position="1382"/>
    </location>
</feature>
<feature type="domain" description="Fibronectin type-III 1" evidence="5">
    <location>
        <begin position="624"/>
        <end position="726"/>
    </location>
</feature>
<feature type="domain" description="Fibronectin type-III 2" evidence="5">
    <location>
        <begin position="757"/>
        <end position="842"/>
    </location>
</feature>
<feature type="domain" description="Fibronectin type-III 3" evidence="5">
    <location>
        <begin position="853"/>
        <end position="947"/>
    </location>
</feature>
<feature type="domain" description="Protein kinase" evidence="4">
    <location>
        <begin position="1023"/>
        <end position="1298"/>
    </location>
</feature>
<feature type="region of interest" description="Disordered" evidence="7">
    <location>
        <begin position="686"/>
        <end position="708"/>
    </location>
</feature>
<feature type="region of interest" description="Insulin-binding">
    <location>
        <begin position="733"/>
        <end position="741"/>
    </location>
</feature>
<feature type="region of interest" description="Disordered" evidence="7">
    <location>
        <begin position="746"/>
        <end position="766"/>
    </location>
</feature>
<feature type="region of interest" description="Important for interaction with IRS1, SHC1 and STAT5B" evidence="120">
    <location>
        <position position="999"/>
    </location>
</feature>
<feature type="region of interest" description="Disordered" evidence="7">
    <location>
        <begin position="1360"/>
        <end position="1382"/>
    </location>
</feature>
<feature type="region of interest" description="PIK3R1-binding">
    <location>
        <begin position="1361"/>
        <end position="1364"/>
    </location>
</feature>
<feature type="active site" description="Proton donor/acceptor" evidence="118">
    <location>
        <position position="1159"/>
    </location>
</feature>
<feature type="binding site" evidence="4 45">
    <location>
        <position position="1033"/>
    </location>
    <ligand>
        <name>ATP</name>
        <dbReference type="ChEBI" id="CHEBI:30616"/>
    </ligand>
</feature>
<feature type="binding site" evidence="4 45">
    <location>
        <position position="1057"/>
    </location>
    <ligand>
        <name>ATP</name>
        <dbReference type="ChEBI" id="CHEBI:30616"/>
    </ligand>
</feature>
<feature type="binding site" evidence="4 45">
    <location>
        <begin position="1104"/>
        <end position="1110"/>
    </location>
    <ligand>
        <name>ATP</name>
        <dbReference type="ChEBI" id="CHEBI:30616"/>
    </ligand>
</feature>
<feature type="binding site" evidence="4 45">
    <location>
        <begin position="1163"/>
        <end position="1164"/>
    </location>
    <ligand>
        <name>ATP</name>
        <dbReference type="ChEBI" id="CHEBI:30616"/>
    </ligand>
</feature>
<feature type="binding site" evidence="4 45">
    <location>
        <position position="1177"/>
    </location>
    <ligand>
        <name>ATP</name>
        <dbReference type="ChEBI" id="CHEBI:30616"/>
    </ligand>
</feature>
<feature type="site" description="Insulin-binding" evidence="125">
    <location>
        <position position="66"/>
    </location>
</feature>
<feature type="modified residue" description="Phosphoserine" evidence="127">
    <location>
        <position position="400"/>
    </location>
</feature>
<feature type="modified residue" description="Phosphotyrosine" evidence="127">
    <location>
        <position position="401"/>
    </location>
</feature>
<feature type="modified residue" description="Phosphoserine" evidence="127">
    <location>
        <position position="407"/>
    </location>
</feature>
<feature type="modified residue" description="Phosphotyrosine; by autocatalysis" evidence="125">
    <location>
        <position position="992"/>
    </location>
</feature>
<feature type="modified residue" description="Phosphotyrosine; by autocatalysis" evidence="126">
    <location>
        <position position="999"/>
    </location>
</feature>
<feature type="modified residue" description="Phosphotyrosine; by autocatalysis" evidence="125">
    <location>
        <position position="1011"/>
    </location>
</feature>
<feature type="modified residue" description="S-nitrosocysteine" evidence="86">
    <location>
        <position position="1083"/>
    </location>
</feature>
<feature type="modified residue" description="Phosphotyrosine; by autocatalysis" evidence="27 36 37 45 46 71 83 118">
    <location>
        <position position="1185"/>
    </location>
</feature>
<feature type="modified residue" description="Phosphotyrosine; by autocatalysis" evidence="27 36 37 45 46 83 118">
    <location>
        <position position="1189"/>
    </location>
</feature>
<feature type="modified residue" description="Phosphotyrosine; by autocatalysis" evidence="27 36 37 45 46 71 83 118">
    <location>
        <position position="1190"/>
    </location>
</feature>
<feature type="modified residue" description="Phosphotyrosine; by autocatalysis" evidence="126">
    <location>
        <position position="1355"/>
    </location>
</feature>
<feature type="modified residue" description="Phosphotyrosine; by autocatalysis" evidence="126">
    <location>
        <position position="1361"/>
    </location>
</feature>
<feature type="glycosylation site" description="N-linked (GlcNAc...) asparagine" evidence="40 64 81">
    <location>
        <position position="43"/>
    </location>
</feature>
<feature type="glycosylation site" description="N-linked (GlcNAc...) asparagine" evidence="40 64">
    <location>
        <position position="52"/>
    </location>
</feature>
<feature type="glycosylation site" description="N-linked (GlcNAc...) asparagine" evidence="3">
    <location>
        <position position="105"/>
    </location>
</feature>
<feature type="glycosylation site" description="N-linked (GlcNAc...) asparagine" evidence="40 64">
    <location>
        <position position="138"/>
    </location>
</feature>
<feature type="glycosylation site" description="N-linked (GlcNAc...) asparagine" evidence="40 50 64">
    <location>
        <position position="242"/>
    </location>
</feature>
<feature type="glycosylation site" description="N-linked (GlcNAc...) asparagine" evidence="40 64">
    <location>
        <position position="282"/>
    </location>
</feature>
<feature type="glycosylation site" description="N-linked (GlcNAc...) asparagine" evidence="3">
    <location>
        <position position="322"/>
    </location>
</feature>
<feature type="glycosylation site" description="N-linked (GlcNAc...) asparagine" evidence="40">
    <location>
        <position position="364"/>
    </location>
</feature>
<feature type="glycosylation site" description="N-linked (GlcNAc...) asparagine" evidence="40">
    <location>
        <position position="424"/>
    </location>
</feature>
<feature type="glycosylation site" description="N-linked (GlcNAc...) asparagine" evidence="40 51">
    <location>
        <position position="445"/>
    </location>
</feature>
<feature type="glycosylation site" description="N-linked (GlcNAc...) asparagine" evidence="29 50">
    <location>
        <position position="541"/>
    </location>
</feature>
<feature type="glycosylation site" description="N-linked (GlcNAc...) asparagine" evidence="3">
    <location>
        <position position="633"/>
    </location>
</feature>
<feature type="glycosylation site" description="N-linked (GlcNAc...) asparagine" evidence="3">
    <location>
        <position position="651"/>
    </location>
</feature>
<feature type="glycosylation site" description="N-linked (GlcNAc...) asparagine" evidence="3">
    <location>
        <position position="698"/>
    </location>
</feature>
<feature type="glycosylation site" description="N-linked (GlcNAc...) asparagine" evidence="81">
    <location>
        <position position="769"/>
    </location>
</feature>
<feature type="glycosylation site" description="N-linked (GlcNAc...) asparagine" evidence="3">
    <location>
        <position position="782"/>
    </location>
</feature>
<feature type="glycosylation site" description="N-linked (GlcNAc...) asparagine" evidence="51">
    <location>
        <position position="920"/>
    </location>
</feature>
<feature type="glycosylation site" description="N-linked (GlcNAc...) asparagine" evidence="3">
    <location>
        <position position="933"/>
    </location>
</feature>
<feature type="disulfide bond">
    <location>
        <begin position="35"/>
        <end position="53"/>
    </location>
</feature>
<feature type="disulfide bond">
    <location>
        <begin position="153"/>
        <end position="182"/>
    </location>
</feature>
<feature type="disulfide bond">
    <location>
        <begin position="186"/>
        <end position="209"/>
    </location>
</feature>
<feature type="disulfide bond">
    <location>
        <begin position="196"/>
        <end position="215"/>
    </location>
</feature>
<feature type="disulfide bond">
    <location>
        <begin position="219"/>
        <end position="228"/>
    </location>
</feature>
<feature type="disulfide bond">
    <location>
        <begin position="223"/>
        <end position="234"/>
    </location>
</feature>
<feature type="disulfide bond">
    <location>
        <begin position="235"/>
        <end position="243"/>
    </location>
</feature>
<feature type="disulfide bond">
    <location>
        <begin position="239"/>
        <end position="252"/>
    </location>
</feature>
<feature type="disulfide bond">
    <location>
        <begin position="255"/>
        <end position="264"/>
    </location>
</feature>
<feature type="disulfide bond">
    <location>
        <begin position="268"/>
        <end position="280"/>
    </location>
</feature>
<feature type="disulfide bond">
    <location>
        <begin position="286"/>
        <end position="311"/>
    </location>
</feature>
<feature type="disulfide bond">
    <location>
        <begin position="293"/>
        <end position="301"/>
    </location>
</feature>
<feature type="disulfide bond">
    <location>
        <begin position="315"/>
        <end position="328"/>
    </location>
</feature>
<feature type="disulfide bond">
    <location>
        <begin position="331"/>
        <end position="335"/>
    </location>
</feature>
<feature type="disulfide bond">
    <location>
        <begin position="339"/>
        <end position="360"/>
    </location>
</feature>
<feature type="disulfide bond" evidence="29">
    <location>
        <begin position="462"/>
        <end position="495"/>
    </location>
</feature>
<feature type="disulfide bond" description="Interchain" evidence="29">
    <location>
        <position position="551"/>
    </location>
</feature>
<feature type="disulfide bond">
    <location>
        <begin position="674"/>
        <end position="899"/>
    </location>
</feature>
<feature type="disulfide bond">
    <location>
        <begin position="825"/>
        <end position="834"/>
    </location>
</feature>
<feature type="cross-link" description="Glycyl lysine isopeptide (Lys-Gly) (interchain with G-Cter in ubiquitin)" evidence="73">
    <location>
        <position position="1079"/>
    </location>
</feature>
<feature type="splice variant" id="VSP_002898" description="In isoform Short." evidence="122 123 124">
    <location>
        <begin position="745"/>
        <end position="756"/>
    </location>
</feature>
<feature type="sequence variant" id="VAR_058395" description="In dbSNP:rs7508518." evidence="31 60 63 75 76 79 81 85">
    <original>A</original>
    <variation>G</variation>
    <location>
        <position position="2"/>
    </location>
</feature>
<feature type="sequence variant" id="VAR_004079" description="In RMS; impairs transport to the plasma membrane and reduces the affinity to bind insulin; dbSNP:rs121913143." evidence="57 65">
    <original>N</original>
    <variation>K</variation>
    <location>
        <position position="42"/>
    </location>
</feature>
<feature type="sequence variant" id="VAR_004080" description="In LEPRCH; Verona-1; dbSNP:rs121913152." evidence="33">
    <original>V</original>
    <variation>A</variation>
    <location>
        <position position="55"/>
    </location>
</feature>
<feature type="sequence variant" id="VAR_079535" description="In LEPRCH; abolishes post-translational processing; dbSNP:rs1555689937." evidence="67">
    <original>I</original>
    <variation>T</variation>
    <location>
        <position position="56"/>
    </location>
</feature>
<feature type="sequence variant" id="VAR_004081" description="In LEPRCH; Helmond; inhibits processing and transport; dbSNP:rs52836744." evidence="43">
    <original>G</original>
    <variation>R</variation>
    <location>
        <position position="58"/>
    </location>
</feature>
<feature type="sequence variant" id="VAR_015907" description="In IRAN type A." evidence="113">
    <original>D</original>
    <variation>G</variation>
    <location>
        <position position="86"/>
    </location>
</feature>
<feature type="sequence variant" id="VAR_015908" description="In IRAN type A." evidence="113">
    <original>L</original>
    <variation>P</variation>
    <location>
        <position position="89"/>
    </location>
</feature>
<feature type="sequence variant" id="VAR_004082" description="In LEPRCH; Atlanta-1; abolishes insulin binding; dbSNP:rs121913153." evidence="19 105">
    <original>R</original>
    <variation>P</variation>
    <location>
        <position position="113"/>
    </location>
</feature>
<feature type="sequence variant" id="VAR_015909" description="In LEPRCH; markedly impairs insulin binding; dbSNP:rs1347473020." evidence="19">
    <original>A</original>
    <variation>V</variation>
    <location>
        <position position="119"/>
    </location>
</feature>
<feature type="sequence variant" id="VAR_031518" description="In LEPRCH; inhibits receptor processing." evidence="26">
    <original>L</original>
    <variation>Q</variation>
    <location>
        <position position="120"/>
    </location>
</feature>
<feature type="sequence variant" id="VAR_015539" description="In LEPRCH; mild; dbSNP:rs121913159." evidence="91 102">
    <original>I</original>
    <variation>M</variation>
    <location>
        <position position="146"/>
    </location>
</feature>
<feature type="sequence variant" id="VAR_015910" description="In IRAN type A; dbSNP:rs938519025." evidence="11">
    <original>V</original>
    <variation>L</variation>
    <location>
        <position position="167"/>
    </location>
</feature>
<feature type="sequence variant" id="VAR_058396" description="In dbSNP:rs1051692." evidence="79">
    <original>Y</original>
    <variation>H</variation>
    <location>
        <position position="171"/>
    </location>
</feature>
<feature type="sequence variant" id="VAR_004083" description="In Ins resistance; severe; dbSNP:rs749094324." evidence="96">
    <original>P</original>
    <variation>L</variation>
    <location>
        <position position="220"/>
    </location>
</feature>
<feature type="sequence variant" id="VAR_041429" description="In a gastric adenocarcinoma sample; somatic mutation." evidence="44">
    <original>C</original>
    <variation>R</variation>
    <location>
        <position position="228"/>
    </location>
</feature>
<feature type="sequence variant" id="VAR_004084" description="In RMS and LEPRCH; Winnipeg; may impair receptor processing; dbSNP:rs121913145." evidence="42 65">
    <original>H</original>
    <variation>R</variation>
    <location>
        <position position="236"/>
    </location>
</feature>
<feature type="sequence variant" id="VAR_079536" description="In RMS; dbSNP:rs781007453." evidence="80">
    <original>R</original>
    <variation>C</variation>
    <location>
        <position position="256"/>
    </location>
</feature>
<feature type="sequence variant" id="VAR_004085" description="In LEPRCH; Geldeimalsen; dbSNP:rs121913141." evidence="68">
    <original>L</original>
    <variation>P</variation>
    <location>
        <position position="260"/>
    </location>
</feature>
<feature type="sequence variant" id="VAR_015540" description="In IRAN type A; inhibits receptor internalization; dbSNP:rs1568470274." evidence="20">
    <original>R</original>
    <variation>C</variation>
    <location>
        <position position="279"/>
    </location>
</feature>
<feature type="sequence variant" id="VAR_031519" description="In IRAN type A; interferes with receptor processing; dbSNP:rs1329693158." evidence="26">
    <original>R</original>
    <variation>H</variation>
    <location>
        <position position="279"/>
    </location>
</feature>
<feature type="sequence variant" id="VAR_015911" description="In IRAN type A." evidence="15">
    <original>C</original>
    <variation>Y</variation>
    <location>
        <position position="280"/>
    </location>
</feature>
<feature type="sequence variant" id="VAR_079537" description="In LEPRCH; abolishes post-translational processing." evidence="67">
    <original>C</original>
    <variation>Y</variation>
    <location>
        <position position="286"/>
    </location>
</feature>
<feature type="sequence variant" id="VAR_015912" description="In LEPRCH." evidence="121">
    <original>C</original>
    <variation>Y</variation>
    <location>
        <position position="301"/>
    </location>
</feature>
<feature type="sequence variant" id="VAR_015913" description="In LEPRCH; abolishes insulin binding." evidence="19 88 109">
    <location>
        <position position="308"/>
    </location>
</feature>
<feature type="sequence variant" id="VAR_015914" description="In RMS and LEPRCH; dbSNP:rs1974095413." evidence="26 101">
    <original>S</original>
    <variation>L</variation>
    <location>
        <position position="350"/>
    </location>
</feature>
<feature type="sequence variant" id="VAR_015541" description="In LEPRCH." evidence="23">
    <location>
        <position position="362"/>
    </location>
</feature>
<feature type="sequence variant" id="VAR_031520" description="In RMS; may impair receptor processing; dbSNP:rs764221583." evidence="42">
    <original>G</original>
    <variation>S</variation>
    <location>
        <position position="386"/>
    </location>
</feature>
<feature type="sequence variant" id="VAR_004086" description="In LEPRCH; Verona-1; dbSNP:rs267607184." evidence="33">
    <original>G</original>
    <variation>R</variation>
    <location>
        <position position="393"/>
    </location>
</feature>
<feature type="sequence variant" id="VAR_004087" description="In IRAN type A; dbSNP:rs121913142." evidence="103">
    <original>F</original>
    <variation>V</variation>
    <location>
        <position position="409"/>
    </location>
</feature>
<feature type="sequence variant" id="VAR_015542" description="In LEPRCH; impairs transport of the receptor to the cell surface; dbSNP:rs121913158." evidence="95">
    <original>W</original>
    <variation>S</variation>
    <location>
        <position position="439"/>
    </location>
</feature>
<feature type="sequence variant" id="VAR_015915" description="In dbSNP:rs1051691." evidence="79">
    <original>I</original>
    <variation>T</variation>
    <location>
        <position position="448"/>
    </location>
</feature>
<feature type="sequence variant" id="VAR_031521" description="In LEPRCH; partially inhibits receptor processing and autophosphorylation; strongly impairs ERK phosphorylation; induces wild-type levels of IRS-1 phosphorylation; dbSNP:rs121913160." evidence="26">
    <original>N</original>
    <variation>D</variation>
    <location>
        <position position="458"/>
    </location>
</feature>
<feature type="sequence variant" id="VAR_004088" description="In LEPRCH; ARK-1; dbSNP:rs121913136." evidence="77">
    <original>K</original>
    <variation>E</variation>
    <location>
        <position position="487"/>
    </location>
</feature>
<feature type="sequence variant" id="VAR_079538" description="In IRAN type A; uncertain significance; dbSNP:rs1135401742." evidence="80">
    <original>N</original>
    <variation>D</variation>
    <location>
        <position position="489"/>
    </location>
</feature>
<feature type="sequence variant" id="VAR_004089" description="In IRAN type A; dbSNP:rs121913147." evidence="65">
    <original>N</original>
    <variation>S</variation>
    <location>
        <position position="489"/>
    </location>
</feature>
<feature type="sequence variant" id="VAR_015916" evidence="79">
    <original>Q</original>
    <variation>K</variation>
    <location>
        <position position="492"/>
    </location>
</feature>
<feature type="sequence variant" id="VAR_079539" description="In RMS; decreases post-translational processing." evidence="80">
    <original>S</original>
    <variation>L</variation>
    <location>
        <position position="635"/>
    </location>
</feature>
<feature type="sequence variant" id="VAR_079540" description="In LEPRCH; impairs post-translational processing; dbSNP:rs1135401737." evidence="80">
    <original>V</original>
    <variation>F</variation>
    <location>
        <position position="657"/>
    </location>
</feature>
<feature type="sequence variant" id="VAR_079541" description="In LEPRCH; impairs post-translational processing." evidence="80">
    <original>W</original>
    <variation>R</variation>
    <location>
        <position position="659"/>
    </location>
</feature>
<feature type="sequence variant" id="VAR_041430" description="In dbSNP:rs55906835." evidence="44">
    <original>Q</original>
    <variation>R</variation>
    <location>
        <position position="695"/>
    </location>
</feature>
<feature type="sequence variant" id="VAR_004090" description="In IRAN type A; dbSNP:rs121913138." evidence="84">
    <original>R</original>
    <variation>S</variation>
    <location>
        <position position="762"/>
    </location>
</feature>
<feature type="sequence variant" id="VAR_041431" description="In dbSNP:rs35045353." evidence="44">
    <original>G</original>
    <variation>S</variation>
    <location>
        <position position="811"/>
    </location>
</feature>
<feature type="sequence variant" id="VAR_079542" description="In LEPRCH; abolishes post-translational processing." evidence="62 80">
    <original>Y</original>
    <variation>C</variation>
    <location>
        <position position="818"/>
    </location>
</feature>
<feature type="sequence variant" id="VAR_055986" description="In dbSNP:rs2162771.">
    <original>P</original>
    <variation>L</variation>
    <location>
        <position position="830"/>
    </location>
</feature>
<feature type="sequence variant" id="VAR_079543" description="In RMS; impairs post-translational processing; dbSNP:rs1135401739." evidence="80">
    <original>S</original>
    <variation>I</variation>
    <location>
        <position position="835"/>
    </location>
</feature>
<feature type="sequence variant" id="VAR_079544" description="In RMS; decreases post-translational processing; dbSNP:rs1135401738." evidence="80">
    <original>A</original>
    <variation>V</variation>
    <location>
        <position position="842"/>
    </location>
</feature>
<feature type="sequence variant" id="VAR_015917" description="In T2D; dbSNP:rs182552223." evidence="90">
    <original>T</original>
    <variation>A</variation>
    <location>
        <position position="858"/>
    </location>
</feature>
<feature type="sequence variant" id="VAR_079545" description="In RMS; impairs post-translational processing." evidence="80">
    <original>P</original>
    <variation>L</variation>
    <location>
        <position position="874"/>
    </location>
</feature>
<feature type="sequence variant" id="VAR_079546" description="In RMS; impairs post-translational processing; dbSNP:rs887190835." evidence="80">
    <original>N</original>
    <variation>S</variation>
    <location>
        <position position="878"/>
    </location>
</feature>
<feature type="sequence variant" id="VAR_079547" description="In LEPRCH." evidence="62">
    <location>
        <begin position="890"/>
        <end position="1382"/>
    </location>
</feature>
<feature type="sequence variant" id="VAR_015918" description="In LEPRCH; abolishes post-translational processing; abolishes insulin binding; dbSNP:rs1599881881." evidence="19 80">
    <original>I</original>
    <variation>T</variation>
    <location>
        <position position="925"/>
    </location>
</feature>
<feature type="sequence variant" id="VAR_015919" description="In LEPRCH; markedly impairs insulin binding;impairs post-translational processing; dbSNP:rs911929963." evidence="19 80">
    <original>R</original>
    <variation>W</variation>
    <location>
        <position position="926"/>
    </location>
</feature>
<feature type="sequence variant" id="VAR_015920" description="In LEPRCH; impaired receptor processing; impairs post-translational processing; dbSNP:rs1972802448." evidence="80 117">
    <original>T</original>
    <variation>M</variation>
    <location>
        <position position="937"/>
    </location>
</feature>
<feature type="sequence variant" id="VAR_015921" description="In RMS; reduces insulin binding." evidence="19">
    <original>P</original>
    <variation>T</variation>
    <location>
        <position position="997"/>
    </location>
</feature>
<feature type="sequence variant" id="VAR_079548" description="In RMS." evidence="80">
    <location>
        <begin position="999"/>
        <end position="1382"/>
    </location>
</feature>
<feature type="sequence variant" id="VAR_004091" description="In dbSNP:rs1799816." evidence="44 101 106 108 114">
    <original>V</original>
    <variation>M</variation>
    <location>
        <position position="1012"/>
    </location>
</feature>
<feature type="sequence variant" id="VAR_004092" description="In IRAN type A; dbSNP:rs121913148." evidence="55">
    <original>R</original>
    <variation>Q</variation>
    <location>
        <position position="1020"/>
    </location>
</feature>
<feature type="sequence variant" id="VAR_015922" evidence="110">
    <original>I</original>
    <variation>F</variation>
    <location>
        <position position="1023"/>
    </location>
</feature>
<feature type="sequence variant" id="VAR_004093" description="In IRAN type A; dbSNP:rs121913135." evidence="70">
    <original>G</original>
    <variation>V</variation>
    <location>
        <position position="1035"/>
    </location>
</feature>
<feature type="sequence variant" id="VAR_079549" description="In IRAN type A; uncertain significance; dbSNP:rs1135401741." evidence="80">
    <original>V</original>
    <variation>M</variation>
    <location>
        <position position="1054"/>
    </location>
</feature>
<feature type="sequence variant" id="VAR_015923" description="In IRAN type A; dbSNP:rs1599874183." evidence="11">
    <original>A</original>
    <variation>V</variation>
    <location>
        <position position="1055"/>
    </location>
</feature>
<feature type="sequence variant" id="VAR_041432" description="In dbSNP:rs56395521." evidence="44">
    <original>L</original>
    <variation>V</variation>
    <location>
        <position position="1065"/>
    </location>
</feature>
<feature type="sequence variant" id="VAR_004094" description="In IRAN type A." evidence="97">
    <original>A</original>
    <variation>D</variation>
    <location>
        <position position="1075"/>
    </location>
</feature>
<feature type="sequence variant" id="VAR_015924" description="In a subject with non-insulin dependent diabetes mellitus; dbSNP:rs909008899." evidence="56">
    <original>K</original>
    <variation>E</variation>
    <location>
        <position position="1095"/>
    </location>
</feature>
<feature type="sequence variant" id="VAR_015925" description="In LEPRCH; dbSNP:rs1229730671." evidence="26 116">
    <original>R</original>
    <variation>W</variation>
    <location>
        <position position="1119"/>
    </location>
</feature>
<feature type="sequence variant" id="VAR_015926" description="In RMS; reduces insulin binding." evidence="9 19">
    <original>I</original>
    <variation>T</variation>
    <location>
        <position position="1143"/>
    </location>
</feature>
<feature type="sequence variant" id="VAR_015927" description="In T2D." evidence="28">
    <original>R</original>
    <variation>Q</variation>
    <location>
        <position position="1158"/>
    </location>
</feature>
<feature type="sequence variant" id="VAR_015928" description="In RMS; abolishes insulin binding; dbSNP:rs111993466." evidence="9 19">
    <original>R</original>
    <variation>W</variation>
    <location>
        <position position="1158"/>
    </location>
</feature>
<feature type="sequence variant" id="VAR_004095" description="In IRAN type A; dbSNP:rs121913139." evidence="58">
    <original>A</original>
    <variation>T</variation>
    <location>
        <position position="1161"/>
    </location>
</feature>
<feature type="sequence variant" id="VAR_004096" description="In IRAN type A; impairs proteolytic processing; dbSNP:rs121913154." evidence="94">
    <original>A</original>
    <variation>E</variation>
    <location>
        <position position="1162"/>
    </location>
</feature>
<feature type="sequence variant" id="VAR_004097" description="In a patient with insulin resistance; dbSNP:rs121913157." evidence="47">
    <original>M</original>
    <variation>I</variation>
    <location>
        <position position="1180"/>
    </location>
</feature>
<feature type="sequence variant" id="VAR_004098" description="In T2D; dbSNP:rs121913150." evidence="34">
    <original>R</original>
    <variation>Q</variation>
    <location>
        <position position="1191"/>
    </location>
</feature>
<feature type="sequence variant" id="VAR_015929" description="In HHF5 and IRAN type A; interferes with kinase activation by insulin; dbSNP:rs121913156." evidence="30 93 100">
    <original>R</original>
    <variation>Q</variation>
    <location>
        <position position="1201"/>
    </location>
</feature>
<feature type="sequence variant" id="VAR_015930" description="In LEPRCH and RMS; reduces insulin binding possibly due to reduced receptor levels on the cell surface; dbSNP:rs1568426700." evidence="19 121">
    <original>R</original>
    <variation>W</variation>
    <location>
        <position position="1201"/>
    </location>
</feature>
<feature type="sequence variant" id="VAR_004099" description="In IRAN type A; moderate; dbSNP:rs1295645322." evidence="32 101">
    <original>P</original>
    <variation>L</variation>
    <location>
        <position position="1205"/>
    </location>
</feature>
<feature type="sequence variant" id="VAR_015931" description="In IRAN type A; accelerates degradation of the protein and impairs kinase activity." evidence="92">
    <original>E</original>
    <variation>D</variation>
    <location>
        <position position="1206"/>
    </location>
</feature>
<feature type="sequence variant" id="VAR_015932" description="In LEPRCH." evidence="116">
    <original>E</original>
    <variation>K</variation>
    <location>
        <position position="1206"/>
    </location>
</feature>
<feature type="sequence variant" id="VAR_004100" description="In IRAN type A; accelerates degradation of the protein and impairs kinase activity; dbSNP:rs52800171." evidence="92 104">
    <original>W</original>
    <variation>L</variation>
    <location>
        <position position="1220"/>
    </location>
</feature>
<feature type="sequence variant" id="VAR_004101" description="In IRAN type A; dbSNP:rs121913140." evidence="54">
    <original>W</original>
    <variation>S</variation>
    <location>
        <position position="1227"/>
    </location>
</feature>
<feature type="sequence variant" id="VAR_041433" description="In dbSNP:rs55875349." evidence="44">
    <original>T</original>
    <variation>A</variation>
    <location>
        <position position="1282"/>
    </location>
</feature>
<feature type="sequence variant" id="VAR_015933" description="In dbSNP:rs13306449." evidence="90">
    <original>Y</original>
    <variation>C</variation>
    <location>
        <position position="1361"/>
    </location>
</feature>
<feature type="sequence variant" id="VAR_015934" description="In IRAN type A; dbSNP:rs52826008." evidence="101">
    <original>R</original>
    <variation>Q</variation>
    <location>
        <position position="1378"/>
    </location>
</feature>
<feature type="mutagenesis site" description="Does not affect S-nitrosylation." evidence="86">
    <original>C</original>
    <variation>A</variation>
    <location>
        <position position="462"/>
    </location>
</feature>
<feature type="mutagenesis site" description="Does not affect S-nitrosylation." evidence="86">
    <original>C</original>
    <variation>A</variation>
    <location>
        <position position="825"/>
    </location>
</feature>
<feature type="mutagenesis site" description="Does not affect S-nitrosylation." evidence="86">
    <original>C</original>
    <variation>A</variation>
    <location>
        <position position="834"/>
    </location>
</feature>
<feature type="mutagenesis site" description="Reduces interaction with IRS1 but has no effect on interaction with SHC1." evidence="89">
    <original>L</original>
    <variation>A</variation>
    <location>
        <position position="991"/>
    </location>
</feature>
<feature type="mutagenesis site" description="Reduces interaction with IRS1 but has no effect on interaction with SHC1." evidence="89">
    <original>Y</original>
    <variation>A</variation>
    <location>
        <position position="992"/>
    </location>
</feature>
<feature type="mutagenesis site" description="Abolishes interaction with IRS1. Severely disrupts, but does not abolish interaction with SHC1." evidence="89">
    <original>NP</original>
    <variation>AA</variation>
    <location>
        <begin position="996"/>
        <end position="997"/>
    </location>
</feature>
<feature type="mutagenesis site" description="Abolishes interaction with IRS1 and significantly reduces interaction with SHC1. Has no effect on interaction with PIK3R1." evidence="87 89">
    <original>N</original>
    <variation>A</variation>
    <location>
        <position position="996"/>
    </location>
</feature>
<feature type="mutagenesis site" description="Abolishes interaction with IRS1 and significantly reduces interaction with SHC1. Has no effect on interaction with PIK3R1." evidence="87 89">
    <original>P</original>
    <variation>A</variation>
    <location>
        <position position="997"/>
    </location>
</feature>
<feature type="mutagenesis site" description="Does not affect interaction with IRS1, SHC1 or PIK3R1." evidence="87">
    <original>E</original>
    <variation>A</variation>
    <location>
        <position position="998"/>
    </location>
</feature>
<feature type="mutagenesis site" description="Abolishes interaction with IRS1 and SHC1." evidence="78 87 89 120">
    <original>Y</original>
    <variation>E</variation>
    <location>
        <position position="999"/>
    </location>
</feature>
<feature type="mutagenesis site" description="Has no effect on insulin-stimulated autophosphorylation, but inhibits the biological activity of the receptor. Abolishes interaction with IRS1 and almost completely prevents interaction with SHC1. Has no effect on interaction with PIK3R1. Abolishes interaction with STAT5B." evidence="78 87 89 120">
    <original>Y</original>
    <variation>F</variation>
    <location>
        <position position="999"/>
    </location>
</feature>
<feature type="mutagenesis site" description="Severely reduces interaction with SHC1. Has no effect on interaction with IRS1." evidence="89">
    <original>L</original>
    <variation>A</variation>
    <variation>R</variation>
    <location>
        <position position="1000"/>
    </location>
</feature>
<feature type="mutagenesis site" description="Reduces interaction with IRS1 but has no effect on interaction with SHC1." evidence="89">
    <original>A</original>
    <variation>D</variation>
    <location>
        <position position="1002"/>
    </location>
</feature>
<feature type="mutagenesis site" description="Increases kinase activity." evidence="25">
    <original>Y</original>
    <variation>A</variation>
    <location>
        <position position="1011"/>
    </location>
</feature>
<feature type="mutagenesis site" description="Abolishes the kinase activity and abolishes interaction with IRS1, SHC1, GRB7 and PIK3R1." evidence="13 82 87">
    <original>K</original>
    <variation>A</variation>
    <location>
        <position position="1057"/>
    </location>
</feature>
<feature type="mutagenesis site" description="Abolishes the kinase activity." evidence="13 82 87">
    <original>K</original>
    <variation>M</variation>
    <variation>R</variation>
    <location>
        <position position="1057"/>
    </location>
</feature>
<feature type="mutagenesis site" description="Increased cell surface stability." evidence="73">
    <original>K</original>
    <variation>R</variation>
    <location>
        <position position="1079"/>
    </location>
</feature>
<feature type="mutagenesis site" description="Reduced S-nitrosylation by BLVRB, leading to increased receptor tyrosine kinase activity." evidence="86">
    <original>C</original>
    <variation>A</variation>
    <location>
        <position position="1083"/>
    </location>
</feature>
<feature type="mutagenesis site" description="Loss of kinase activity." evidence="17">
    <original>D</original>
    <variation>N</variation>
    <location>
        <position position="1159"/>
    </location>
</feature>
<feature type="mutagenesis site" description="Loss of kinase activity." evidence="17">
    <original>R</original>
    <variation>Q</variation>
    <location>
        <position position="1163"/>
    </location>
</feature>
<feature type="mutagenesis site" description="Reduced interaction with GRB7." evidence="13">
    <original>Y</original>
    <variation>F</variation>
    <location>
        <position position="1189"/>
    </location>
</feature>
<feature type="mutagenesis site" description="Strongly reduced interaction with GRB7." evidence="13">
    <original>Y</original>
    <variation>F</variation>
    <location>
        <position position="1190"/>
    </location>
</feature>
<feature type="sequence conflict" description="In Ref. 19; AA sequence." evidence="125" ref="19">
    <original>D</original>
    <variation>N</variation>
    <location>
        <position position="601"/>
    </location>
</feature>
<feature type="sequence conflict" description="In Ref. 19; AA sequence." evidence="125" ref="19">
    <original>P</original>
    <variation>E</variation>
    <location>
        <position position="830"/>
    </location>
</feature>
<feature type="sequence conflict" description="In Ref. 2; CAA26096." evidence="125" ref="2">
    <original>K</original>
    <variation>N</variation>
    <location>
        <position position="1278"/>
    </location>
</feature>
<feature type="strand" evidence="131">
    <location>
        <begin position="33"/>
        <end position="42"/>
    </location>
</feature>
<feature type="helix" evidence="131">
    <location>
        <begin position="45"/>
        <end position="50"/>
    </location>
</feature>
<feature type="strand" evidence="131">
    <location>
        <begin position="53"/>
        <end position="65"/>
    </location>
</feature>
<feature type="helix" evidence="131">
    <location>
        <begin position="70"/>
        <end position="72"/>
    </location>
</feature>
<feature type="turn" evidence="131">
    <location>
        <begin position="73"/>
        <end position="75"/>
    </location>
</feature>
<feature type="strand" evidence="131">
    <location>
        <begin position="83"/>
        <end position="86"/>
    </location>
</feature>
<feature type="strand" evidence="131">
    <location>
        <begin position="88"/>
        <end position="93"/>
    </location>
</feature>
<feature type="turn" evidence="131">
    <location>
        <begin position="100"/>
        <end position="102"/>
    </location>
</feature>
<feature type="strand" evidence="148">
    <location>
        <begin position="103"/>
        <end position="105"/>
    </location>
</feature>
<feature type="strand" evidence="142">
    <location>
        <begin position="115"/>
        <end position="117"/>
    </location>
</feature>
<feature type="strand" evidence="131">
    <location>
        <begin position="118"/>
        <end position="124"/>
    </location>
</feature>
<feature type="strand" evidence="131">
    <location>
        <begin position="141"/>
        <end position="149"/>
    </location>
</feature>
<feature type="strand" evidence="145">
    <location>
        <begin position="155"/>
        <end position="158"/>
    </location>
</feature>
<feature type="helix" evidence="131">
    <location>
        <begin position="160"/>
        <end position="162"/>
    </location>
</feature>
<feature type="helix" evidence="143">
    <location>
        <begin position="167"/>
        <end position="169"/>
    </location>
</feature>
<feature type="strand" evidence="131">
    <location>
        <begin position="171"/>
        <end position="175"/>
    </location>
</feature>
<feature type="helix" evidence="131">
    <location>
        <begin position="176"/>
        <end position="178"/>
    </location>
</feature>
<feature type="turn" evidence="131">
    <location>
        <begin position="187"/>
        <end position="192"/>
    </location>
</feature>
<feature type="strand" evidence="131">
    <location>
        <begin position="199"/>
        <end position="201"/>
    </location>
</feature>
<feature type="strand" evidence="131">
    <location>
        <begin position="204"/>
        <end position="206"/>
    </location>
</feature>
<feature type="strand" evidence="131">
    <location>
        <begin position="209"/>
        <end position="211"/>
    </location>
</feature>
<feature type="helix" evidence="131">
    <location>
        <begin position="221"/>
        <end position="223"/>
    </location>
</feature>
<feature type="strand" evidence="147">
    <location>
        <begin position="224"/>
        <end position="226"/>
    </location>
</feature>
<feature type="strand" evidence="144">
    <location>
        <begin position="230"/>
        <end position="232"/>
    </location>
</feature>
<feature type="strand" evidence="131">
    <location>
        <begin position="243"/>
        <end position="247"/>
    </location>
</feature>
<feature type="strand" evidence="131">
    <location>
        <begin position="251"/>
        <end position="260"/>
    </location>
</feature>
<feature type="strand" evidence="131">
    <location>
        <begin position="263"/>
        <end position="267"/>
    </location>
</feature>
<feature type="strand" evidence="131">
    <location>
        <begin position="273"/>
        <end position="275"/>
    </location>
</feature>
<feature type="turn" evidence="131">
    <location>
        <begin position="276"/>
        <end position="278"/>
    </location>
</feature>
<feature type="strand" evidence="131">
    <location>
        <begin position="279"/>
        <end position="281"/>
    </location>
</feature>
<feature type="helix" evidence="131">
    <location>
        <begin position="283"/>
        <end position="295"/>
    </location>
</feature>
<feature type="strand" evidence="131">
    <location>
        <begin position="298"/>
        <end position="300"/>
    </location>
</feature>
<feature type="strand" evidence="131">
    <location>
        <begin position="305"/>
        <end position="307"/>
    </location>
</feature>
<feature type="strand" evidence="131">
    <location>
        <begin position="310"/>
        <end position="314"/>
    </location>
</feature>
<feature type="strand" evidence="131">
    <location>
        <begin position="319"/>
        <end position="321"/>
    </location>
</feature>
<feature type="turn" evidence="143">
    <location>
        <begin position="323"/>
        <end position="325"/>
    </location>
</feature>
<feature type="strand" evidence="131">
    <location>
        <begin position="327"/>
        <end position="330"/>
    </location>
</feature>
<feature type="strand" evidence="131">
    <location>
        <begin position="332"/>
        <end position="334"/>
    </location>
</feature>
<feature type="strand" evidence="131">
    <location>
        <begin position="338"/>
        <end position="348"/>
    </location>
</feature>
<feature type="helix" evidence="131">
    <location>
        <begin position="351"/>
        <end position="355"/>
    </location>
</feature>
<feature type="turn" evidence="131">
    <location>
        <begin position="356"/>
        <end position="359"/>
    </location>
</feature>
<feature type="strand" evidence="131">
    <location>
        <begin position="361"/>
        <end position="369"/>
    </location>
</feature>
<feature type="strand" evidence="145">
    <location>
        <begin position="373"/>
        <end position="375"/>
    </location>
</feature>
<feature type="helix" evidence="131">
    <location>
        <begin position="377"/>
        <end position="385"/>
    </location>
</feature>
<feature type="strand" evidence="131">
    <location>
        <begin position="390"/>
        <end position="393"/>
    </location>
</feature>
<feature type="strand" evidence="131">
    <location>
        <begin position="395"/>
        <end position="399"/>
    </location>
</feature>
<feature type="strand" evidence="131">
    <location>
        <begin position="404"/>
        <end position="406"/>
    </location>
</feature>
<feature type="strand" evidence="147">
    <location>
        <begin position="414"/>
        <end position="416"/>
    </location>
</feature>
<feature type="turn" evidence="131">
    <location>
        <begin position="422"/>
        <end position="424"/>
    </location>
</feature>
<feature type="strand" evidence="131">
    <location>
        <begin position="425"/>
        <end position="430"/>
    </location>
</feature>
<feature type="strand" evidence="145">
    <location>
        <begin position="437"/>
        <end position="439"/>
    </location>
</feature>
<feature type="turn" evidence="131">
    <location>
        <begin position="441"/>
        <end position="443"/>
    </location>
</feature>
<feature type="strand" evidence="145">
    <location>
        <begin position="447"/>
        <end position="450"/>
    </location>
</feature>
<feature type="strand" evidence="131">
    <location>
        <begin position="452"/>
        <end position="458"/>
    </location>
</feature>
<feature type="helix" evidence="131">
    <location>
        <begin position="463"/>
        <end position="472"/>
    </location>
</feature>
<feature type="turn" evidence="131">
    <location>
        <begin position="476"/>
        <end position="478"/>
    </location>
</feature>
<feature type="turn" evidence="131">
    <location>
        <begin position="481"/>
        <end position="483"/>
    </location>
</feature>
<feature type="strand" evidence="131">
    <location>
        <begin position="486"/>
        <end position="490"/>
    </location>
</feature>
<feature type="strand" evidence="142">
    <location>
        <begin position="498"/>
        <end position="500"/>
    </location>
</feature>
<feature type="strand" evidence="145">
    <location>
        <begin position="504"/>
        <end position="507"/>
    </location>
</feature>
<feature type="strand" evidence="145">
    <location>
        <begin position="512"/>
        <end position="515"/>
    </location>
</feature>
<feature type="helix" evidence="145">
    <location>
        <begin position="524"/>
        <end position="526"/>
    </location>
</feature>
<feature type="strand" evidence="145">
    <location>
        <begin position="527"/>
        <end position="536"/>
    </location>
</feature>
<feature type="strand" evidence="145">
    <location>
        <begin position="538"/>
        <end position="540"/>
    </location>
</feature>
<feature type="strand" evidence="140">
    <location>
        <begin position="552"/>
        <end position="554"/>
    </location>
</feature>
<feature type="strand" evidence="145">
    <location>
        <begin position="557"/>
        <end position="561"/>
    </location>
</feature>
<feature type="strand" evidence="140">
    <location>
        <begin position="570"/>
        <end position="573"/>
    </location>
</feature>
<feature type="strand" evidence="145">
    <location>
        <begin position="577"/>
        <end position="580"/>
    </location>
</feature>
<feature type="strand" evidence="145">
    <location>
        <begin position="588"/>
        <end position="597"/>
    </location>
</feature>
<feature type="strand" evidence="142">
    <location>
        <begin position="601"/>
        <end position="603"/>
    </location>
</feature>
<feature type="strand" evidence="137">
    <location>
        <begin position="608"/>
        <end position="610"/>
    </location>
</feature>
<feature type="strand" evidence="145">
    <location>
        <begin position="613"/>
        <end position="616"/>
    </location>
</feature>
<feature type="strand" evidence="141">
    <location>
        <begin position="626"/>
        <end position="631"/>
    </location>
</feature>
<feature type="strand" evidence="141">
    <location>
        <begin position="633"/>
        <end position="636"/>
    </location>
</feature>
<feature type="strand" evidence="141">
    <location>
        <begin position="638"/>
        <end position="643"/>
    </location>
</feature>
<feature type="strand" evidence="141">
    <location>
        <begin position="654"/>
        <end position="658"/>
    </location>
</feature>
<feature type="helix" evidence="141">
    <location>
        <begin position="666"/>
        <end position="669"/>
    </location>
</feature>
<feature type="helix" evidence="143">
    <location>
        <begin position="732"/>
        <end position="740"/>
    </location>
</feature>
<feature type="strand" evidence="141">
    <location>
        <begin position="798"/>
        <end position="803"/>
    </location>
</feature>
<feature type="strand" evidence="141">
    <location>
        <begin position="805"/>
        <end position="809"/>
    </location>
</feature>
<feature type="strand" evidence="141">
    <location>
        <begin position="817"/>
        <end position="827"/>
    </location>
</feature>
<feature type="strand" evidence="141">
    <location>
        <begin position="838"/>
        <end position="843"/>
    </location>
</feature>
<feature type="strand" evidence="141">
    <location>
        <begin position="858"/>
        <end position="861"/>
    </location>
</feature>
<feature type="strand" evidence="141">
    <location>
        <begin position="867"/>
        <end position="870"/>
    </location>
</feature>
<feature type="strand" evidence="141">
    <location>
        <begin position="881"/>
        <end position="890"/>
    </location>
</feature>
<feature type="strand" evidence="141">
    <location>
        <begin position="896"/>
        <end position="901"/>
    </location>
</feature>
<feature type="helix" evidence="141">
    <location>
        <begin position="902"/>
        <end position="908"/>
    </location>
</feature>
<feature type="strand" evidence="141">
    <location>
        <begin position="910"/>
        <end position="913"/>
    </location>
</feature>
<feature type="strand" evidence="141">
    <location>
        <begin position="918"/>
        <end position="931"/>
    </location>
</feature>
<feature type="strand" evidence="141">
    <location>
        <begin position="940"/>
        <end position="944"/>
    </location>
</feature>
<feature type="helix" evidence="132">
    <location>
        <begin position="953"/>
        <end position="979"/>
    </location>
</feature>
<feature type="strand" evidence="139">
    <location>
        <begin position="992"/>
        <end position="995"/>
    </location>
</feature>
<feature type="turn" evidence="136">
    <location>
        <begin position="1003"/>
        <end position="1005"/>
    </location>
</feature>
<feature type="helix" evidence="128">
    <location>
        <begin position="1009"/>
        <end position="1011"/>
    </location>
</feature>
<feature type="helix" evidence="129">
    <location>
        <begin position="1014"/>
        <end position="1016"/>
    </location>
</feature>
<feature type="helix" evidence="134">
    <location>
        <begin position="1020"/>
        <end position="1022"/>
    </location>
</feature>
<feature type="strand" evidence="134">
    <location>
        <begin position="1023"/>
        <end position="1031"/>
    </location>
</feature>
<feature type="strand" evidence="134">
    <location>
        <begin position="1033"/>
        <end position="1043"/>
    </location>
</feature>
<feature type="strand" evidence="133">
    <location>
        <begin position="1046"/>
        <end position="1048"/>
    </location>
</feature>
<feature type="strand" evidence="134">
    <location>
        <begin position="1050"/>
        <end position="1057"/>
    </location>
</feature>
<feature type="helix" evidence="134">
    <location>
        <begin position="1065"/>
        <end position="1078"/>
    </location>
</feature>
<feature type="strand" evidence="134">
    <location>
        <begin position="1089"/>
        <end position="1093"/>
    </location>
</feature>
<feature type="strand" evidence="134">
    <location>
        <begin position="1095"/>
        <end position="1098"/>
    </location>
</feature>
<feature type="strand" evidence="134">
    <location>
        <begin position="1100"/>
        <end position="1104"/>
    </location>
</feature>
<feature type="helix" evidence="134">
    <location>
        <begin position="1111"/>
        <end position="1117"/>
    </location>
</feature>
<feature type="strand" evidence="135">
    <location>
        <begin position="1119"/>
        <end position="1121"/>
    </location>
</feature>
<feature type="helix" evidence="134">
    <location>
        <begin position="1133"/>
        <end position="1152"/>
    </location>
</feature>
<feature type="strand" evidence="130">
    <location>
        <begin position="1154"/>
        <end position="1156"/>
    </location>
</feature>
<feature type="helix" evidence="134">
    <location>
        <begin position="1162"/>
        <end position="1164"/>
    </location>
</feature>
<feature type="strand" evidence="134">
    <location>
        <begin position="1165"/>
        <end position="1167"/>
    </location>
</feature>
<feature type="strand" evidence="134">
    <location>
        <begin position="1173"/>
        <end position="1175"/>
    </location>
</feature>
<feature type="strand" evidence="129">
    <location>
        <begin position="1181"/>
        <end position="1183"/>
    </location>
</feature>
<feature type="turn" evidence="134">
    <location>
        <begin position="1185"/>
        <end position="1187"/>
    </location>
</feature>
<feature type="strand" evidence="138">
    <location>
        <begin position="1190"/>
        <end position="1192"/>
    </location>
</feature>
<feature type="strand" evidence="134">
    <location>
        <begin position="1194"/>
        <end position="1198"/>
    </location>
</feature>
<feature type="helix" evidence="134">
    <location>
        <begin position="1200"/>
        <end position="1202"/>
    </location>
</feature>
<feature type="helix" evidence="134">
    <location>
        <begin position="1205"/>
        <end position="1210"/>
    </location>
</feature>
<feature type="helix" evidence="134">
    <location>
        <begin position="1215"/>
        <end position="1230"/>
    </location>
</feature>
<feature type="turn" evidence="134">
    <location>
        <begin position="1236"/>
        <end position="1239"/>
    </location>
</feature>
<feature type="helix" evidence="134">
    <location>
        <begin position="1242"/>
        <end position="1250"/>
    </location>
</feature>
<feature type="helix" evidence="134">
    <location>
        <begin position="1263"/>
        <end position="1272"/>
    </location>
</feature>
<feature type="helix" evidence="134">
    <location>
        <begin position="1277"/>
        <end position="1279"/>
    </location>
</feature>
<feature type="helix" evidence="134">
    <location>
        <begin position="1283"/>
        <end position="1290"/>
    </location>
</feature>
<feature type="helix" evidence="138">
    <location>
        <begin position="1291"/>
        <end position="1293"/>
    </location>
</feature>
<feature type="helix" evidence="134">
    <location>
        <begin position="1298"/>
        <end position="1301"/>
    </location>
</feature>
<feature type="turn" evidence="136">
    <location>
        <begin position="1303"/>
        <end position="1305"/>
    </location>
</feature>
<feature type="helix" evidence="146">
    <location>
        <begin position="1307"/>
        <end position="1309"/>
    </location>
</feature>
<accession>P06213</accession>
<accession>Q17RW0</accession>
<accession>Q59H98</accession>
<accession>Q9UCB7</accession>
<accession>Q9UCB8</accession>
<accession>Q9UCB9</accession>